<keyword id="KW-0002">3D-structure</keyword>
<keyword id="KW-0157">Chromophore</keyword>
<keyword id="KW-0903">Direct protein sequencing</keyword>
<keyword id="KW-0455">Luminescence</keyword>
<keyword id="KW-0599">Photoprotein</keyword>
<comment type="function">
    <text>Energy-transfer acceptor. Its role is to transduce the blue chemiluminescence of the protein aequorin into green fluorescent light by energy transfer. Fluoresces in vivo upon receiving energy from the Ca(2+)-activated photoprotein aequorin.</text>
</comment>
<comment type="biophysicochemical properties">
    <absorption>
        <max>395 nm</max>
        <text evidence="1 14 19 26 27 33">Exhibits a smaller absorbance peak at 470 nm. The fluorescence emission spectrum peaks at 507-510 nm with a shoulder at 545 nm (PubMed:8137953, PubMed:9154981). The exact value of the emission maximum depends on the environment of the chromophore (PubMed:10220315). As a consequence, mutant versions have been designed that have substantially shifted emission spectra, including yellow-emission variants (YFP), blue and cerulean fluorescing proteins (PubMed:17685554, PubMed:9145105, PubMed:9782051).</text>
    </absorption>
</comment>
<comment type="subunit">
    <text evidence="33">Monomer.</text>
</comment>
<comment type="tissue specificity">
    <text>Photocytes.</text>
</comment>
<comment type="PTM">
    <text evidence="20">Contains a chromophore consisting of modified amino acid residues. The chromophore is formed by autocatalytic backbone condensation between Ser-65 and Gly-67, and oxidation of Tyr-66 to didehydrotyrosine. Maturation of the chromophore requires nothing other than molecular oxygen.</text>
</comment>
<comment type="biotechnology">
    <text evidence="13 14 21 23 26 27 32 33">Green fluorescent protein has been engineered to produce a vast number of variously colored mutants, fusion proteins, and biosensors. Green fluorescent protein can be mutated to emit at different wavelengths such as blue for BFP (when Tyr-66 is replaced by His), cyan for CFP (when Tyr-66 is replaced by Trp), and yellow for YFP (when Thr-203 is replaced by Tyr). Further generation of mutants led to more stable proteins (at 37 degrees Celsius for example) with brighter fluorescence and longer fluorescence lifetimes. Fluorescent proteins and their mutated allelic forms have become a useful and ubiquitous tool for making chimeric proteins, where they function as a fluorescent protein tag. Typically they tolerate N- and C-terminal fusion to a broad variety of proteins. They have been expressed in most known cell types and are used as a noninvasive fluorescent marker in living cells and organisms. They enable a wide range of applications where they have functioned as a cell lineage tracer, reporter of gene expression, or as a measure of protein-protein interactions (PubMed:17685514, PubMed:17685554, PubMed:8578587, PubMed:8707053, PubMed:9145105, PubMed:9154981, PubMed:9759496, PubMed:9782051). Can also be used as a molecular thermometer, allowing accurate temperature measurements in fluids. The measurement process relies on the detection of the blinking of GFP using fluorescence correlation spectroscopy (PubMed:17685514).</text>
</comment>
<comment type="similarity">
    <text evidence="34">Belongs to the GFP family.</text>
</comment>
<comment type="online information" name="Protein Spotlight">
    <link uri="https://www.proteinspotlight.org/back_issues/011"/>
    <text>The greenest of us all - Issue 11 of June 2001</text>
</comment>
<comment type="online information" name="Protein Spotlight">
    <link uri="https://www.proteinspotlight.org/back_issues/108"/>
    <text>Paint my thoughts - Issue 108 of August 2009</text>
</comment>
<comment type="online information" name="Wikipedia">
    <link uri="https://en.wikipedia.org/wiki/Green_fluorescent_protein"/>
    <text>Green fluorescent protein entry</text>
</comment>
<name>GFP_AEQVI</name>
<accession>P42212</accession>
<accession>Q17104</accession>
<accession>Q27903</accession>
<accession>Q93125</accession>
<evidence type="ECO:0000269" key="1">
    <source>
    </source>
</evidence>
<evidence type="ECO:0000269" key="2">
    <source>
    </source>
</evidence>
<evidence type="ECO:0000269" key="3">
    <source>
    </source>
</evidence>
<evidence type="ECO:0000269" key="4">
    <source>
    </source>
</evidence>
<evidence type="ECO:0000269" key="5">
    <source>
    </source>
</evidence>
<evidence type="ECO:0000269" key="6">
    <source>
    </source>
</evidence>
<evidence type="ECO:0000269" key="7">
    <source>
    </source>
</evidence>
<evidence type="ECO:0000269" key="8">
    <source>
    </source>
</evidence>
<evidence type="ECO:0000269" key="9">
    <source>
    </source>
</evidence>
<evidence type="ECO:0000269" key="10">
    <source>
    </source>
</evidence>
<evidence type="ECO:0000269" key="11">
    <source>
    </source>
</evidence>
<evidence type="ECO:0000269" key="12">
    <source>
    </source>
</evidence>
<evidence type="ECO:0000269" key="13">
    <source>
    </source>
</evidence>
<evidence type="ECO:0000269" key="14">
    <source>
    </source>
</evidence>
<evidence type="ECO:0000269" key="15">
    <source>
    </source>
</evidence>
<evidence type="ECO:0000269" key="16">
    <source>
    </source>
</evidence>
<evidence type="ECO:0000269" key="17">
    <source>
    </source>
</evidence>
<evidence type="ECO:0000269" key="18">
    <source>
    </source>
</evidence>
<evidence type="ECO:0000269" key="19">
    <source>
    </source>
</evidence>
<evidence type="ECO:0000269" key="20">
    <source>
    </source>
</evidence>
<evidence type="ECO:0000269" key="21">
    <source>
    </source>
</evidence>
<evidence type="ECO:0000269" key="22">
    <source>
    </source>
</evidence>
<evidence type="ECO:0000269" key="23">
    <source>
    </source>
</evidence>
<evidence type="ECO:0000269" key="24">
    <source>
    </source>
</evidence>
<evidence type="ECO:0000269" key="25">
    <source>
    </source>
</evidence>
<evidence type="ECO:0000269" key="26">
    <source>
    </source>
</evidence>
<evidence type="ECO:0000269" key="27">
    <source>
    </source>
</evidence>
<evidence type="ECO:0000269" key="28">
    <source>
    </source>
</evidence>
<evidence type="ECO:0000269" key="29">
    <source>
    </source>
</evidence>
<evidence type="ECO:0000269" key="30">
    <source>
    </source>
</evidence>
<evidence type="ECO:0000269" key="31">
    <source>
    </source>
</evidence>
<evidence type="ECO:0000269" key="32">
    <source>
    </source>
</evidence>
<evidence type="ECO:0000269" key="33">
    <source>
    </source>
</evidence>
<evidence type="ECO:0000305" key="34"/>
<evidence type="ECO:0007744" key="35">
    <source>
        <dbReference type="PDB" id="1EMA"/>
    </source>
</evidence>
<evidence type="ECO:0007744" key="36">
    <source>
        <dbReference type="PDB" id="1EMC"/>
    </source>
</evidence>
<evidence type="ECO:0007744" key="37">
    <source>
        <dbReference type="PDB" id="1EME"/>
    </source>
</evidence>
<evidence type="ECO:0007744" key="38">
    <source>
        <dbReference type="PDB" id="1EMF"/>
    </source>
</evidence>
<evidence type="ECO:0007744" key="39">
    <source>
        <dbReference type="PDB" id="1EMK"/>
    </source>
</evidence>
<evidence type="ECO:0007744" key="40">
    <source>
        <dbReference type="PDB" id="1EML"/>
    </source>
</evidence>
<evidence type="ECO:0007744" key="41">
    <source>
        <dbReference type="PDB" id="1EMM"/>
    </source>
</evidence>
<evidence type="ECO:0007744" key="42">
    <source>
        <dbReference type="PDB" id="1HUY"/>
    </source>
</evidence>
<evidence type="ECO:0007744" key="43">
    <source>
        <dbReference type="PDB" id="1MYW"/>
    </source>
</evidence>
<evidence type="ECO:0007744" key="44">
    <source>
        <dbReference type="PDB" id="1YFP"/>
    </source>
</evidence>
<evidence type="ECO:0007744" key="45">
    <source>
        <dbReference type="PDB" id="2EMD"/>
    </source>
</evidence>
<evidence type="ECO:0007744" key="46">
    <source>
        <dbReference type="PDB" id="2EMN"/>
    </source>
</evidence>
<evidence type="ECO:0007744" key="47">
    <source>
        <dbReference type="PDB" id="2EMO"/>
    </source>
</evidence>
<evidence type="ECO:0007744" key="48">
    <source>
        <dbReference type="PDB" id="2Q57"/>
    </source>
</evidence>
<evidence type="ECO:0007744" key="49">
    <source>
        <dbReference type="PDB" id="2YFP"/>
    </source>
</evidence>
<evidence type="ECO:0007829" key="50">
    <source>
        <dbReference type="PDB" id="1EMK"/>
    </source>
</evidence>
<evidence type="ECO:0007829" key="51">
    <source>
        <dbReference type="PDB" id="1QYO"/>
    </source>
</evidence>
<evidence type="ECO:0007829" key="52">
    <source>
        <dbReference type="PDB" id="4GF6"/>
    </source>
</evidence>
<evidence type="ECO:0007829" key="53">
    <source>
        <dbReference type="PDB" id="4IK8"/>
    </source>
</evidence>
<evidence type="ECO:0007829" key="54">
    <source>
        <dbReference type="PDB" id="4OGS"/>
    </source>
</evidence>
<evidence type="ECO:0007829" key="55">
    <source>
        <dbReference type="PDB" id="4ZF5"/>
    </source>
</evidence>
<evidence type="ECO:0007829" key="56">
    <source>
        <dbReference type="PDB" id="5LEM"/>
    </source>
</evidence>
<evidence type="ECO:0007829" key="57">
    <source>
        <dbReference type="PDB" id="6L27"/>
    </source>
</evidence>
<evidence type="ECO:0007829" key="58">
    <source>
        <dbReference type="PDB" id="6MWQ"/>
    </source>
</evidence>
<evidence type="ECO:0007829" key="59">
    <source>
        <dbReference type="PDB" id="6OA8"/>
    </source>
</evidence>
<evidence type="ECO:0007829" key="60">
    <source>
        <dbReference type="PDB" id="6UHQ"/>
    </source>
</evidence>
<sequence>MSKGEELFTGVVPILVELDGDVNGHKFSVSGEGEGDATYGKLTLKFICTTGKLPVPWPTLVTTFSYGVQCFSRYPDHMKQHDFFKSAMPEGYVQERTIFFKDDGNYKTRAEVKFEGDTLVNRIELKGIDFKEDGNILGHKLEYNYNSHNVYIMADKQKNGIKVNFKIRHNIEDGSVQLADHYQQNTPIGDGPVLLPDNHYLSTQSALSKDPNEKRDHMVLLEFVTAAGITHGMDELYK</sequence>
<protein>
    <recommendedName>
        <fullName>Green fluorescent protein</fullName>
    </recommendedName>
</protein>
<dbReference type="EMBL" id="M62654">
    <property type="protein sequence ID" value="AAA27722.1"/>
    <property type="molecule type" value="mRNA"/>
</dbReference>
<dbReference type="EMBL" id="M62653">
    <property type="protein sequence ID" value="AAA27721.1"/>
    <property type="molecule type" value="mRNA"/>
</dbReference>
<dbReference type="EMBL" id="L29345">
    <property type="protein sequence ID" value="AAA58246.1"/>
    <property type="molecule type" value="mRNA"/>
</dbReference>
<dbReference type="EMBL" id="X96418">
    <property type="protein sequence ID" value="CAA65278.1"/>
    <property type="molecule type" value="mRNA"/>
</dbReference>
<dbReference type="EMBL" id="U73901">
    <property type="protein sequence ID" value="AAB18957.1"/>
    <property type="molecule type" value="Genomic_DNA"/>
</dbReference>
<dbReference type="PIR" id="JS0692">
    <property type="entry name" value="JQ1514"/>
</dbReference>
<dbReference type="PDB" id="1B9C">
    <property type="method" value="X-ray"/>
    <property type="resolution" value="2.40 A"/>
    <property type="chains" value="A/B/C/D=1-238"/>
</dbReference>
<dbReference type="PDB" id="1BFP">
    <property type="method" value="X-ray"/>
    <property type="resolution" value="2.10 A"/>
    <property type="chains" value="A=1-238"/>
</dbReference>
<dbReference type="PDB" id="1C4F">
    <property type="method" value="X-ray"/>
    <property type="resolution" value="2.25 A"/>
    <property type="chains" value="A=1-238"/>
</dbReference>
<dbReference type="PDB" id="1CV7">
    <property type="method" value="X-ray"/>
    <property type="resolution" value="2.50 A"/>
    <property type="chains" value="A=1-228"/>
</dbReference>
<dbReference type="PDB" id="1EMA">
    <property type="method" value="X-ray"/>
    <property type="resolution" value="1.90 A"/>
    <property type="chains" value="A=1-238"/>
</dbReference>
<dbReference type="PDB" id="1EMB">
    <property type="method" value="X-ray"/>
    <property type="resolution" value="2.13 A"/>
    <property type="chains" value="A=1-238"/>
</dbReference>
<dbReference type="PDB" id="1EMC">
    <property type="method" value="X-ray"/>
    <property type="resolution" value="2.30 A"/>
    <property type="chains" value="A/B/C/D=2-237"/>
</dbReference>
<dbReference type="PDB" id="1EME">
    <property type="method" value="X-ray"/>
    <property type="resolution" value="2.50 A"/>
    <property type="chains" value="A=2-237"/>
</dbReference>
<dbReference type="PDB" id="1EMF">
    <property type="method" value="X-ray"/>
    <property type="resolution" value="2.40 A"/>
    <property type="chains" value="A=2-238"/>
</dbReference>
<dbReference type="PDB" id="1EMG">
    <property type="method" value="X-ray"/>
    <property type="resolution" value="2.00 A"/>
    <property type="chains" value="A=1-229"/>
</dbReference>
<dbReference type="PDB" id="1EMK">
    <property type="method" value="X-ray"/>
    <property type="resolution" value="2.10 A"/>
    <property type="chains" value="A=2-237"/>
</dbReference>
<dbReference type="PDB" id="1EML">
    <property type="method" value="X-ray"/>
    <property type="resolution" value="2.30 A"/>
    <property type="chains" value="A=2-237"/>
</dbReference>
<dbReference type="PDB" id="1EMM">
    <property type="method" value="X-ray"/>
    <property type="resolution" value="2.30 A"/>
    <property type="chains" value="A=2-238"/>
</dbReference>
<dbReference type="PDB" id="1F09">
    <property type="method" value="X-ray"/>
    <property type="resolution" value="2.14 A"/>
    <property type="chains" value="A=1-238"/>
</dbReference>
<dbReference type="PDB" id="1F0B">
    <property type="method" value="X-ray"/>
    <property type="resolution" value="2.10 A"/>
    <property type="chains" value="A=1-238"/>
</dbReference>
<dbReference type="PDB" id="1GFL">
    <property type="method" value="X-ray"/>
    <property type="resolution" value="1.90 A"/>
    <property type="chains" value="A/B=2-238"/>
</dbReference>
<dbReference type="PDB" id="1H6R">
    <property type="method" value="X-ray"/>
    <property type="resolution" value="1.50 A"/>
    <property type="chains" value="A/B/C=1-238"/>
</dbReference>
<dbReference type="PDB" id="1HCJ">
    <property type="method" value="X-ray"/>
    <property type="resolution" value="1.80 A"/>
    <property type="chains" value="A/B/C/D=1-238"/>
</dbReference>
<dbReference type="PDB" id="1HUY">
    <property type="method" value="X-ray"/>
    <property type="resolution" value="2.20 A"/>
    <property type="chains" value="A=2-238"/>
</dbReference>
<dbReference type="PDB" id="1JBY">
    <property type="method" value="X-ray"/>
    <property type="resolution" value="1.80 A"/>
    <property type="chains" value="A=1-238"/>
</dbReference>
<dbReference type="PDB" id="1JBZ">
    <property type="method" value="X-ray"/>
    <property type="resolution" value="1.50 A"/>
    <property type="chains" value="A=1-238"/>
</dbReference>
<dbReference type="PDB" id="1JC0">
    <property type="method" value="X-ray"/>
    <property type="resolution" value="2.00 A"/>
    <property type="chains" value="A/B/C=1-238"/>
</dbReference>
<dbReference type="PDB" id="1JC1">
    <property type="method" value="X-ray"/>
    <property type="resolution" value="1.90 A"/>
    <property type="chains" value="A/B/C=1-238"/>
</dbReference>
<dbReference type="PDB" id="1KP5">
    <property type="method" value="X-ray"/>
    <property type="resolution" value="2.60 A"/>
    <property type="chains" value="A/B=1-238"/>
</dbReference>
<dbReference type="PDB" id="1KYP">
    <property type="method" value="X-ray"/>
    <property type="resolution" value="1.35 A"/>
    <property type="chains" value="A=2-238"/>
</dbReference>
<dbReference type="PDB" id="1KYR">
    <property type="method" value="X-ray"/>
    <property type="resolution" value="1.50 A"/>
    <property type="chains" value="A=2-238"/>
</dbReference>
<dbReference type="PDB" id="1KYS">
    <property type="method" value="X-ray"/>
    <property type="resolution" value="1.44 A"/>
    <property type="chains" value="A=2-238"/>
</dbReference>
<dbReference type="PDB" id="1MYW">
    <property type="method" value="X-ray"/>
    <property type="resolution" value="2.20 A"/>
    <property type="chains" value="A=2-238"/>
</dbReference>
<dbReference type="PDB" id="1Q4A">
    <property type="method" value="X-ray"/>
    <property type="resolution" value="1.45 A"/>
    <property type="chains" value="A=1-238"/>
</dbReference>
<dbReference type="PDB" id="1Q4B">
    <property type="method" value="X-ray"/>
    <property type="resolution" value="1.48 A"/>
    <property type="chains" value="A=1-238"/>
</dbReference>
<dbReference type="PDB" id="1Q4C">
    <property type="method" value="X-ray"/>
    <property type="resolution" value="1.55 A"/>
    <property type="chains" value="A=1-238"/>
</dbReference>
<dbReference type="PDB" id="1Q4D">
    <property type="method" value="X-ray"/>
    <property type="resolution" value="1.58 A"/>
    <property type="chains" value="A=1-238"/>
</dbReference>
<dbReference type="PDB" id="1Q4E">
    <property type="method" value="X-ray"/>
    <property type="resolution" value="1.38 A"/>
    <property type="chains" value="A=1-238"/>
</dbReference>
<dbReference type="PDB" id="1Q73">
    <property type="method" value="X-ray"/>
    <property type="resolution" value="1.60 A"/>
    <property type="chains" value="A=1-238"/>
</dbReference>
<dbReference type="PDB" id="1QXT">
    <property type="method" value="X-ray"/>
    <property type="resolution" value="2.00 A"/>
    <property type="chains" value="A=2-229"/>
</dbReference>
<dbReference type="PDB" id="1QY3">
    <property type="method" value="X-ray"/>
    <property type="resolution" value="2.00 A"/>
    <property type="chains" value="A=1-229"/>
</dbReference>
<dbReference type="PDB" id="1QYF">
    <property type="method" value="X-ray"/>
    <property type="resolution" value="1.50 A"/>
    <property type="chains" value="A=1-227"/>
</dbReference>
<dbReference type="PDB" id="1QYO">
    <property type="method" value="X-ray"/>
    <property type="resolution" value="1.80 A"/>
    <property type="chains" value="A=1-238"/>
</dbReference>
<dbReference type="PDB" id="1QYQ">
    <property type="method" value="X-ray"/>
    <property type="resolution" value="1.80 A"/>
    <property type="chains" value="A=2-238"/>
</dbReference>
<dbReference type="PDB" id="1RM9">
    <property type="method" value="X-ray"/>
    <property type="resolution" value="2.90 A"/>
    <property type="chains" value="A=2-236"/>
</dbReference>
<dbReference type="PDB" id="1RMM">
    <property type="method" value="X-ray"/>
    <property type="resolution" value="1.90 A"/>
    <property type="chains" value="A=2-227"/>
</dbReference>
<dbReference type="PDB" id="1RMO">
    <property type="method" value="X-ray"/>
    <property type="resolution" value="1.80 A"/>
    <property type="chains" value="A=2-236"/>
</dbReference>
<dbReference type="PDB" id="1RMP">
    <property type="method" value="X-ray"/>
    <property type="resolution" value="3.00 A"/>
    <property type="chains" value="A=2-229"/>
</dbReference>
<dbReference type="PDB" id="1RRX">
    <property type="method" value="X-ray"/>
    <property type="resolution" value="2.10 A"/>
    <property type="chains" value="A=2-227"/>
</dbReference>
<dbReference type="PDB" id="1S6Z">
    <property type="method" value="X-ray"/>
    <property type="resolution" value="1.50 A"/>
    <property type="chains" value="A=1-238"/>
</dbReference>
<dbReference type="PDB" id="1W7S">
    <property type="method" value="X-ray"/>
    <property type="resolution" value="1.85 A"/>
    <property type="chains" value="A/B/C/D=1-238"/>
</dbReference>
<dbReference type="PDB" id="1W7T">
    <property type="method" value="X-ray"/>
    <property type="resolution" value="1.85 A"/>
    <property type="chains" value="A/B/C/D=1-238"/>
</dbReference>
<dbReference type="PDB" id="1W7U">
    <property type="method" value="X-ray"/>
    <property type="resolution" value="1.85 A"/>
    <property type="chains" value="A/B/C/D=1-238"/>
</dbReference>
<dbReference type="PDB" id="1YFP">
    <property type="method" value="X-ray"/>
    <property type="resolution" value="2.50 A"/>
    <property type="chains" value="A/B=3-229"/>
</dbReference>
<dbReference type="PDB" id="1YHG">
    <property type="method" value="X-ray"/>
    <property type="resolution" value="2.50 A"/>
    <property type="chains" value="A/B=2-238"/>
</dbReference>
<dbReference type="PDB" id="1YHH">
    <property type="method" value="X-ray"/>
    <property type="resolution" value="1.50 A"/>
    <property type="chains" value="A=2-238"/>
</dbReference>
<dbReference type="PDB" id="1YHI">
    <property type="method" value="X-ray"/>
    <property type="resolution" value="1.90 A"/>
    <property type="chains" value="A=2-238"/>
</dbReference>
<dbReference type="PDB" id="1YJ2">
    <property type="method" value="X-ray"/>
    <property type="resolution" value="1.50 A"/>
    <property type="chains" value="A=2-238"/>
</dbReference>
<dbReference type="PDB" id="1YJF">
    <property type="method" value="X-ray"/>
    <property type="resolution" value="1.35 A"/>
    <property type="chains" value="A=2-238"/>
</dbReference>
<dbReference type="PDB" id="1Z1P">
    <property type="method" value="X-ray"/>
    <property type="resolution" value="2.00 A"/>
    <property type="chains" value="A=1-238"/>
</dbReference>
<dbReference type="PDB" id="1Z1Q">
    <property type="method" value="X-ray"/>
    <property type="resolution" value="1.50 A"/>
    <property type="chains" value="A=1-238"/>
</dbReference>
<dbReference type="PDB" id="2AH8">
    <property type="method" value="X-ray"/>
    <property type="resolution" value="2.24 A"/>
    <property type="chains" value="A/B=1-238"/>
</dbReference>
<dbReference type="PDB" id="2AHA">
    <property type="method" value="X-ray"/>
    <property type="resolution" value="1.98 A"/>
    <property type="chains" value="A/B=1-238"/>
</dbReference>
<dbReference type="PDB" id="2AWJ">
    <property type="method" value="X-ray"/>
    <property type="resolution" value="1.60 A"/>
    <property type="chains" value="A=2-229"/>
</dbReference>
<dbReference type="PDB" id="2AWK">
    <property type="method" value="X-ray"/>
    <property type="resolution" value="1.15 A"/>
    <property type="chains" value="A=1-229"/>
</dbReference>
<dbReference type="PDB" id="2AWL">
    <property type="method" value="X-ray"/>
    <property type="resolution" value="1.85 A"/>
    <property type="chains" value="A=1-229"/>
</dbReference>
<dbReference type="PDB" id="2AWM">
    <property type="method" value="X-ray"/>
    <property type="resolution" value="1.70 A"/>
    <property type="chains" value="A=1-229"/>
</dbReference>
<dbReference type="PDB" id="2B3P">
    <property type="method" value="X-ray"/>
    <property type="resolution" value="1.40 A"/>
    <property type="chains" value="A=1-238"/>
</dbReference>
<dbReference type="PDB" id="2B3Q">
    <property type="method" value="X-ray"/>
    <property type="resolution" value="2.30 A"/>
    <property type="chains" value="A/B/C/D=1-238"/>
</dbReference>
<dbReference type="PDB" id="2DUE">
    <property type="method" value="X-ray"/>
    <property type="resolution" value="1.24 A"/>
    <property type="chains" value="A=1-238"/>
</dbReference>
<dbReference type="PDB" id="2DUF">
    <property type="method" value="X-ray"/>
    <property type="resolution" value="1.50 A"/>
    <property type="chains" value="A=1-238"/>
</dbReference>
<dbReference type="PDB" id="2DUG">
    <property type="method" value="X-ray"/>
    <property type="resolution" value="1.40 A"/>
    <property type="chains" value="A=1-238"/>
</dbReference>
<dbReference type="PDB" id="2DUH">
    <property type="method" value="X-ray"/>
    <property type="resolution" value="1.20 A"/>
    <property type="chains" value="A=1-238"/>
</dbReference>
<dbReference type="PDB" id="2DUI">
    <property type="method" value="X-ray"/>
    <property type="resolution" value="1.36 A"/>
    <property type="chains" value="A=1-238"/>
</dbReference>
<dbReference type="PDB" id="2EMD">
    <property type="method" value="X-ray"/>
    <property type="resolution" value="2.00 A"/>
    <property type="chains" value="A=1-238"/>
</dbReference>
<dbReference type="PDB" id="2EMN">
    <property type="method" value="X-ray"/>
    <property type="resolution" value="2.30 A"/>
    <property type="chains" value="A=1-238"/>
</dbReference>
<dbReference type="PDB" id="2EMO">
    <property type="method" value="X-ray"/>
    <property type="resolution" value="2.60 A"/>
    <property type="chains" value="A=1-238"/>
</dbReference>
<dbReference type="PDB" id="2FWQ">
    <property type="method" value="X-ray"/>
    <property type="resolution" value="1.40 A"/>
    <property type="chains" value="A=2-238"/>
</dbReference>
<dbReference type="PDB" id="2FZU">
    <property type="method" value="X-ray"/>
    <property type="resolution" value="1.25 A"/>
    <property type="chains" value="A=2-238"/>
</dbReference>
<dbReference type="PDB" id="2G16">
    <property type="method" value="X-ray"/>
    <property type="resolution" value="2.00 A"/>
    <property type="chains" value="A=2-64, B=67-238"/>
</dbReference>
<dbReference type="PDB" id="2G2S">
    <property type="method" value="X-ray"/>
    <property type="resolution" value="1.20 A"/>
    <property type="chains" value="A=2-63, B=66-238"/>
</dbReference>
<dbReference type="PDB" id="2G3D">
    <property type="method" value="X-ray"/>
    <property type="resolution" value="1.35 A"/>
    <property type="chains" value="A=2-63, B=66-238"/>
</dbReference>
<dbReference type="PDB" id="2G5Z">
    <property type="method" value="X-ray"/>
    <property type="resolution" value="1.80 A"/>
    <property type="chains" value="A=2-65, B=66-238"/>
</dbReference>
<dbReference type="PDB" id="2G6E">
    <property type="method" value="X-ray"/>
    <property type="resolution" value="1.30 A"/>
    <property type="chains" value="A=2-238"/>
</dbReference>
<dbReference type="PDB" id="2H6V">
    <property type="method" value="X-ray"/>
    <property type="resolution" value="1.47 A"/>
    <property type="chains" value="A=2-238"/>
</dbReference>
<dbReference type="PDB" id="2H9W">
    <property type="method" value="X-ray"/>
    <property type="resolution" value="1.82 A"/>
    <property type="chains" value="A=2-237"/>
</dbReference>
<dbReference type="PDB" id="2HCG">
    <property type="method" value="X-ray"/>
    <property type="resolution" value="1.35 A"/>
    <property type="chains" value="A=2-238"/>
</dbReference>
<dbReference type="PDB" id="2HFC">
    <property type="method" value="X-ray"/>
    <property type="resolution" value="1.20 A"/>
    <property type="chains" value="A=2-238"/>
</dbReference>
<dbReference type="PDB" id="2HGD">
    <property type="method" value="X-ray"/>
    <property type="resolution" value="1.60 A"/>
    <property type="chains" value="A=2-238"/>
</dbReference>
<dbReference type="PDB" id="2HGY">
    <property type="method" value="X-ray"/>
    <property type="resolution" value="2.05 A"/>
    <property type="chains" value="A=2-238"/>
</dbReference>
<dbReference type="PDB" id="2HJO">
    <property type="method" value="X-ray"/>
    <property type="resolution" value="1.25 A"/>
    <property type="chains" value="A=1-238"/>
</dbReference>
<dbReference type="PDB" id="2HQZ">
    <property type="method" value="X-ray"/>
    <property type="resolution" value="1.20 A"/>
    <property type="chains" value="A=1-238"/>
</dbReference>
<dbReference type="PDB" id="2HRS">
    <property type="method" value="X-ray"/>
    <property type="resolution" value="1.40 A"/>
    <property type="chains" value="A=1-238"/>
</dbReference>
<dbReference type="PDB" id="2JAD">
    <property type="method" value="X-ray"/>
    <property type="resolution" value="2.70 A"/>
    <property type="chains" value="A=1-238"/>
</dbReference>
<dbReference type="PDB" id="2O24">
    <property type="method" value="X-ray"/>
    <property type="resolution" value="1.45 A"/>
    <property type="chains" value="A=2-238"/>
</dbReference>
<dbReference type="PDB" id="2O29">
    <property type="method" value="X-ray"/>
    <property type="resolution" value="1.80 A"/>
    <property type="chains" value="A=2-238"/>
</dbReference>
<dbReference type="PDB" id="2O2B">
    <property type="method" value="X-ray"/>
    <property type="resolution" value="1.94 A"/>
    <property type="chains" value="A=2-238"/>
</dbReference>
<dbReference type="PDB" id="2OKW">
    <property type="method" value="X-ray"/>
    <property type="resolution" value="1.90 A"/>
    <property type="chains" value="A/B/C/D/E/F=1-238"/>
</dbReference>
<dbReference type="PDB" id="2OKY">
    <property type="method" value="X-ray"/>
    <property type="resolution" value="2.40 A"/>
    <property type="chains" value="A/B=1-238"/>
</dbReference>
<dbReference type="PDB" id="2Q57">
    <property type="method" value="X-ray"/>
    <property type="resolution" value="2.00 A"/>
    <property type="chains" value="A=1-238"/>
</dbReference>
<dbReference type="PDB" id="2Q6P">
    <property type="method" value="X-ray"/>
    <property type="resolution" value="2.10 A"/>
    <property type="chains" value="A=1-238"/>
</dbReference>
<dbReference type="PDB" id="2QRF">
    <property type="method" value="X-ray"/>
    <property type="resolution" value="1.50 A"/>
    <property type="chains" value="A=1-230"/>
</dbReference>
<dbReference type="PDB" id="2QT2">
    <property type="method" value="X-ray"/>
    <property type="resolution" value="1.31 A"/>
    <property type="chains" value="A=1-238"/>
</dbReference>
<dbReference type="PDB" id="2QU1">
    <property type="method" value="X-ray"/>
    <property type="resolution" value="1.70 A"/>
    <property type="chains" value="A=1-238"/>
</dbReference>
<dbReference type="PDB" id="2QZ0">
    <property type="method" value="X-ray"/>
    <property type="resolution" value="1.20 A"/>
    <property type="chains" value="A=2-229"/>
</dbReference>
<dbReference type="PDB" id="2WSN">
    <property type="method" value="X-ray"/>
    <property type="resolution" value="1.37 A"/>
    <property type="chains" value="A=2-238"/>
</dbReference>
<dbReference type="PDB" id="2WSO">
    <property type="method" value="X-ray"/>
    <property type="resolution" value="1.15 A"/>
    <property type="chains" value="A=2-238"/>
</dbReference>
<dbReference type="PDB" id="2WUR">
    <property type="method" value="X-ray"/>
    <property type="resolution" value="0.90 A"/>
    <property type="chains" value="A=1-237"/>
</dbReference>
<dbReference type="PDB" id="2Y0G">
    <property type="method" value="X-ray"/>
    <property type="resolution" value="1.50 A"/>
    <property type="chains" value="A=2-238"/>
</dbReference>
<dbReference type="PDB" id="2YDZ">
    <property type="method" value="X-ray"/>
    <property type="resolution" value="1.59 A"/>
    <property type="chains" value="A=2-238"/>
</dbReference>
<dbReference type="PDB" id="2YE0">
    <property type="method" value="X-ray"/>
    <property type="resolution" value="1.47 A"/>
    <property type="chains" value="A=2-238"/>
</dbReference>
<dbReference type="PDB" id="2YE1">
    <property type="method" value="X-ray"/>
    <property type="resolution" value="1.63 A"/>
    <property type="chains" value="A=2-238"/>
</dbReference>
<dbReference type="PDB" id="2YFP">
    <property type="method" value="X-ray"/>
    <property type="resolution" value="2.60 A"/>
    <property type="chains" value="A=1-238"/>
</dbReference>
<dbReference type="PDB" id="3AI4">
    <property type="method" value="X-ray"/>
    <property type="resolution" value="1.60 A"/>
    <property type="chains" value="A=1-230"/>
</dbReference>
<dbReference type="PDB" id="3AI5">
    <property type="method" value="X-ray"/>
    <property type="resolution" value="1.40 A"/>
    <property type="chains" value="A=1-230"/>
</dbReference>
<dbReference type="PDB" id="3CB9">
    <property type="method" value="X-ray"/>
    <property type="resolution" value="1.31 A"/>
    <property type="chains" value="A=2-238"/>
</dbReference>
<dbReference type="PDB" id="3CBE">
    <property type="method" value="X-ray"/>
    <property type="resolution" value="1.49 A"/>
    <property type="chains" value="A=2-238"/>
</dbReference>
<dbReference type="PDB" id="3CD1">
    <property type="method" value="X-ray"/>
    <property type="resolution" value="1.31 A"/>
    <property type="chains" value="A=2-238"/>
</dbReference>
<dbReference type="PDB" id="3CD9">
    <property type="method" value="X-ray"/>
    <property type="resolution" value="1.50 A"/>
    <property type="chains" value="A=2-238"/>
</dbReference>
<dbReference type="PDB" id="3DPW">
    <property type="method" value="X-ray"/>
    <property type="resolution" value="1.59 A"/>
    <property type="chains" value="A=2-238"/>
</dbReference>
<dbReference type="PDB" id="3DPX">
    <property type="method" value="X-ray"/>
    <property type="resolution" value="1.50 A"/>
    <property type="chains" value="A=2-238"/>
</dbReference>
<dbReference type="PDB" id="3DPZ">
    <property type="method" value="X-ray"/>
    <property type="resolution" value="1.70 A"/>
    <property type="chains" value="A=2-238"/>
</dbReference>
<dbReference type="PDB" id="3DQ1">
    <property type="method" value="X-ray"/>
    <property type="resolution" value="1.70 A"/>
    <property type="chains" value="A=2-238"/>
</dbReference>
<dbReference type="PDB" id="3DQ2">
    <property type="method" value="X-ray"/>
    <property type="resolution" value="1.60 A"/>
    <property type="chains" value="A=2-238"/>
</dbReference>
<dbReference type="PDB" id="3DQ3">
    <property type="method" value="X-ray"/>
    <property type="resolution" value="1.70 A"/>
    <property type="chains" value="A=2-238"/>
</dbReference>
<dbReference type="PDB" id="3DQ4">
    <property type="method" value="X-ray"/>
    <property type="resolution" value="1.47 A"/>
    <property type="chains" value="A=2-238"/>
</dbReference>
<dbReference type="PDB" id="3DQ5">
    <property type="method" value="X-ray"/>
    <property type="resolution" value="1.50 A"/>
    <property type="chains" value="A=2-238"/>
</dbReference>
<dbReference type="PDB" id="3DQ6">
    <property type="method" value="X-ray"/>
    <property type="resolution" value="1.60 A"/>
    <property type="chains" value="A=2-238"/>
</dbReference>
<dbReference type="PDB" id="3DQ7">
    <property type="method" value="X-ray"/>
    <property type="resolution" value="1.23 A"/>
    <property type="chains" value="A=2-238"/>
</dbReference>
<dbReference type="PDB" id="3DQ8">
    <property type="method" value="X-ray"/>
    <property type="resolution" value="1.51 A"/>
    <property type="chains" value="A=2-238"/>
</dbReference>
<dbReference type="PDB" id="3DQ9">
    <property type="method" value="X-ray"/>
    <property type="resolution" value="1.40 A"/>
    <property type="chains" value="A=2-238"/>
</dbReference>
<dbReference type="PDB" id="3DQA">
    <property type="method" value="X-ray"/>
    <property type="resolution" value="1.44 A"/>
    <property type="chains" value="A=2-238"/>
</dbReference>
<dbReference type="PDB" id="3DQC">
    <property type="method" value="X-ray"/>
    <property type="resolution" value="1.49 A"/>
    <property type="chains" value="A=2-238"/>
</dbReference>
<dbReference type="PDB" id="3DQD">
    <property type="method" value="X-ray"/>
    <property type="resolution" value="1.40 A"/>
    <property type="chains" value="A=2-238"/>
</dbReference>
<dbReference type="PDB" id="3DQE">
    <property type="method" value="X-ray"/>
    <property type="resolution" value="1.43 A"/>
    <property type="chains" value="A=2-238"/>
</dbReference>
<dbReference type="PDB" id="3DQF">
    <property type="method" value="X-ray"/>
    <property type="resolution" value="1.46 A"/>
    <property type="chains" value="A=2-238"/>
</dbReference>
<dbReference type="PDB" id="3DQH">
    <property type="method" value="X-ray"/>
    <property type="resolution" value="1.45 A"/>
    <property type="chains" value="A=2-238"/>
</dbReference>
<dbReference type="PDB" id="3DQI">
    <property type="method" value="X-ray"/>
    <property type="resolution" value="1.42 A"/>
    <property type="chains" value="A=2-238"/>
</dbReference>
<dbReference type="PDB" id="3DQJ">
    <property type="method" value="X-ray"/>
    <property type="resolution" value="1.51 A"/>
    <property type="chains" value="A=2-238"/>
</dbReference>
<dbReference type="PDB" id="3DQK">
    <property type="method" value="X-ray"/>
    <property type="resolution" value="1.40 A"/>
    <property type="chains" value="A=2-238"/>
</dbReference>
<dbReference type="PDB" id="3DQL">
    <property type="method" value="X-ray"/>
    <property type="resolution" value="1.47 A"/>
    <property type="chains" value="A=2-238"/>
</dbReference>
<dbReference type="PDB" id="3DQM">
    <property type="method" value="X-ray"/>
    <property type="resolution" value="1.44 A"/>
    <property type="chains" value="A=2-238"/>
</dbReference>
<dbReference type="PDB" id="3DQN">
    <property type="method" value="X-ray"/>
    <property type="resolution" value="1.44 A"/>
    <property type="chains" value="A=2-238"/>
</dbReference>
<dbReference type="PDB" id="3DQO">
    <property type="method" value="X-ray"/>
    <property type="resolution" value="1.50 A"/>
    <property type="chains" value="A=2-238"/>
</dbReference>
<dbReference type="PDB" id="3DQU">
    <property type="method" value="X-ray"/>
    <property type="resolution" value="1.42 A"/>
    <property type="chains" value="A=2-238"/>
</dbReference>
<dbReference type="PDB" id="3ED8">
    <property type="method" value="X-ray"/>
    <property type="resolution" value="2.70 A"/>
    <property type="chains" value="A/B/C/D/E=2-238"/>
</dbReference>
<dbReference type="PDB" id="3EK4">
    <property type="method" value="X-ray"/>
    <property type="resolution" value="2.65 A"/>
    <property type="chains" value="A=2-238"/>
</dbReference>
<dbReference type="PDB" id="3EK7">
    <property type="method" value="X-ray"/>
    <property type="resolution" value="1.85 A"/>
    <property type="chains" value="A=2-238"/>
</dbReference>
<dbReference type="PDB" id="3EK8">
    <property type="method" value="X-ray"/>
    <property type="resolution" value="2.80 A"/>
    <property type="chains" value="A=2-238"/>
</dbReference>
<dbReference type="PDB" id="3EKH">
    <property type="method" value="X-ray"/>
    <property type="resolution" value="2.00 A"/>
    <property type="chains" value="A=2-238"/>
</dbReference>
<dbReference type="PDB" id="3EKJ">
    <property type="method" value="X-ray"/>
    <property type="resolution" value="2.80 A"/>
    <property type="chains" value="A=2-238"/>
</dbReference>
<dbReference type="PDB" id="3EVP">
    <property type="method" value="X-ray"/>
    <property type="resolution" value="1.45 A"/>
    <property type="chains" value="A=2-144"/>
</dbReference>
<dbReference type="PDB" id="3EVR">
    <property type="method" value="X-ray"/>
    <property type="resolution" value="2.00 A"/>
    <property type="chains" value="A=2-144"/>
</dbReference>
<dbReference type="PDB" id="3EVU">
    <property type="method" value="X-ray"/>
    <property type="resolution" value="1.75 A"/>
    <property type="chains" value="A=2-144"/>
</dbReference>
<dbReference type="PDB" id="3EVV">
    <property type="method" value="X-ray"/>
    <property type="resolution" value="2.60 A"/>
    <property type="chains" value="A=2-238"/>
</dbReference>
<dbReference type="PDB" id="3G9A">
    <property type="method" value="X-ray"/>
    <property type="resolution" value="1.61 A"/>
    <property type="chains" value="A=1-238"/>
</dbReference>
<dbReference type="PDB" id="3GEX">
    <property type="method" value="X-ray"/>
    <property type="resolution" value="1.60 A"/>
    <property type="chains" value="A=1-238"/>
</dbReference>
<dbReference type="PDB" id="3GJ1">
    <property type="method" value="X-ray"/>
    <property type="resolution" value="1.80 A"/>
    <property type="chains" value="A/B/C/D=1-230"/>
</dbReference>
<dbReference type="PDB" id="3GJ2">
    <property type="method" value="X-ray"/>
    <property type="resolution" value="1.90 A"/>
    <property type="chains" value="A/B/C/D=1-230"/>
</dbReference>
<dbReference type="PDB" id="3I19">
    <property type="method" value="X-ray"/>
    <property type="resolution" value="1.36 A"/>
    <property type="chains" value="A=1-238"/>
</dbReference>
<dbReference type="PDB" id="3K1K">
    <property type="method" value="X-ray"/>
    <property type="resolution" value="2.15 A"/>
    <property type="chains" value="A/B=1-238"/>
</dbReference>
<dbReference type="PDB" id="3LA1">
    <property type="method" value="X-ray"/>
    <property type="resolution" value="1.29 A"/>
    <property type="chains" value="A=1-238"/>
</dbReference>
<dbReference type="PDB" id="3O77">
    <property type="method" value="X-ray"/>
    <property type="resolution" value="2.35 A"/>
    <property type="chains" value="A=2-238"/>
</dbReference>
<dbReference type="PDB" id="3O78">
    <property type="method" value="X-ray"/>
    <property type="resolution" value="2.60 A"/>
    <property type="chains" value="A/B=2-237"/>
</dbReference>
<dbReference type="PDB" id="3OGO">
    <property type="method" value="X-ray"/>
    <property type="resolution" value="2.80 A"/>
    <property type="chains" value="A/B/C/D=1-238"/>
</dbReference>
<dbReference type="PDB" id="3OSQ">
    <property type="method" value="X-ray"/>
    <property type="resolution" value="1.90 A"/>
    <property type="chains" value="A=2-238"/>
</dbReference>
<dbReference type="PDB" id="3OSR">
    <property type="method" value="X-ray"/>
    <property type="resolution" value="2.00 A"/>
    <property type="chains" value="A/B=2-238"/>
</dbReference>
<dbReference type="PDB" id="3P28">
    <property type="method" value="X-ray"/>
    <property type="resolution" value="1.80 A"/>
    <property type="chains" value="A=3-229"/>
</dbReference>
<dbReference type="PDB" id="3SG2">
    <property type="method" value="X-ray"/>
    <property type="resolution" value="2.00 A"/>
    <property type="chains" value="A=2-238"/>
</dbReference>
<dbReference type="PDB" id="3SG3">
    <property type="method" value="X-ray"/>
    <property type="resolution" value="2.10 A"/>
    <property type="chains" value="A=2-238"/>
</dbReference>
<dbReference type="PDB" id="3SG4">
    <property type="method" value="X-ray"/>
    <property type="resolution" value="2.40 A"/>
    <property type="chains" value="A=2-238"/>
</dbReference>
<dbReference type="PDB" id="3SG5">
    <property type="method" value="X-ray"/>
    <property type="resolution" value="1.90 A"/>
    <property type="chains" value="A=2-238"/>
</dbReference>
<dbReference type="PDB" id="3SG6">
    <property type="method" value="X-ray"/>
    <property type="resolution" value="1.70 A"/>
    <property type="chains" value="A=2-238"/>
</dbReference>
<dbReference type="PDB" id="3SG7">
    <property type="method" value="X-ray"/>
    <property type="resolution" value="1.90 A"/>
    <property type="chains" value="A=2-238"/>
</dbReference>
<dbReference type="PDB" id="3SRY">
    <property type="method" value="X-ray"/>
    <property type="resolution" value="1.16 A"/>
    <property type="chains" value="A=2-238"/>
</dbReference>
<dbReference type="PDB" id="3SS0">
    <property type="method" value="X-ray"/>
    <property type="resolution" value="1.49 A"/>
    <property type="chains" value="A=2-238"/>
</dbReference>
<dbReference type="PDB" id="3SSH">
    <property type="method" value="X-ray"/>
    <property type="resolution" value="1.28 A"/>
    <property type="chains" value="A=2-238"/>
</dbReference>
<dbReference type="PDB" id="3SSK">
    <property type="method" value="X-ray"/>
    <property type="resolution" value="1.36 A"/>
    <property type="chains" value="A=2-238"/>
</dbReference>
<dbReference type="PDB" id="3SSL">
    <property type="method" value="X-ray"/>
    <property type="resolution" value="1.45 A"/>
    <property type="chains" value="A=2-238"/>
</dbReference>
<dbReference type="PDB" id="3SSP">
    <property type="method" value="X-ray"/>
    <property type="resolution" value="1.63 A"/>
    <property type="chains" value="A=2-238"/>
</dbReference>
<dbReference type="PDB" id="3SST">
    <property type="method" value="X-ray"/>
    <property type="resolution" value="1.40 A"/>
    <property type="chains" value="A=2-238"/>
</dbReference>
<dbReference type="PDB" id="3SSV">
    <property type="method" value="X-ray"/>
    <property type="resolution" value="1.86 A"/>
    <property type="chains" value="A=2-238"/>
</dbReference>
<dbReference type="PDB" id="3SSY">
    <property type="method" value="X-ray"/>
    <property type="resolution" value="1.77 A"/>
    <property type="chains" value="A=2-238"/>
</dbReference>
<dbReference type="PDB" id="3ST0">
    <property type="method" value="X-ray"/>
    <property type="resolution" value="1.19 A"/>
    <property type="chains" value="A=2-238"/>
</dbReference>
<dbReference type="PDB" id="3SV5">
    <property type="method" value="X-ray"/>
    <property type="resolution" value="1.53 A"/>
    <property type="chains" value="A=2-238"/>
</dbReference>
<dbReference type="PDB" id="3SVB">
    <property type="method" value="X-ray"/>
    <property type="resolution" value="1.30 A"/>
    <property type="chains" value="A=2-238"/>
</dbReference>
<dbReference type="PDB" id="3SVC">
    <property type="method" value="X-ray"/>
    <property type="resolution" value="1.31 A"/>
    <property type="chains" value="A=2-238"/>
</dbReference>
<dbReference type="PDB" id="3SVD">
    <property type="method" value="X-ray"/>
    <property type="resolution" value="1.78 A"/>
    <property type="chains" value="A=2-238"/>
</dbReference>
<dbReference type="PDB" id="3SVE">
    <property type="method" value="X-ray"/>
    <property type="resolution" value="1.49 A"/>
    <property type="chains" value="A=2-238"/>
</dbReference>
<dbReference type="PDB" id="3U8P">
    <property type="method" value="X-ray"/>
    <property type="resolution" value="2.75 A"/>
    <property type="chains" value="A/B/C=2-238"/>
</dbReference>
<dbReference type="PDB" id="3UFZ">
    <property type="method" value="X-ray"/>
    <property type="resolution" value="1.85 A"/>
    <property type="chains" value="A=2-229"/>
</dbReference>
<dbReference type="PDB" id="3UG0">
    <property type="method" value="X-ray"/>
    <property type="resolution" value="2.09 A"/>
    <property type="chains" value="A=2-229"/>
</dbReference>
<dbReference type="PDB" id="3V3D">
    <property type="method" value="X-ray"/>
    <property type="resolution" value="1.95 A"/>
    <property type="chains" value="A=2-238"/>
</dbReference>
<dbReference type="PDB" id="3VHT">
    <property type="method" value="X-ray"/>
    <property type="resolution" value="2.40 A"/>
    <property type="chains" value="A=1-230"/>
</dbReference>
<dbReference type="PDB" id="3W1C">
    <property type="method" value="X-ray"/>
    <property type="resolution" value="1.30 A"/>
    <property type="chains" value="A=2-238"/>
</dbReference>
<dbReference type="PDB" id="3W1D">
    <property type="method" value="X-ray"/>
    <property type="resolution" value="1.50 A"/>
    <property type="chains" value="A=2-238"/>
</dbReference>
<dbReference type="PDB" id="3WLC">
    <property type="method" value="X-ray"/>
    <property type="resolution" value="2.49 A"/>
    <property type="chains" value="A=2-238"/>
</dbReference>
<dbReference type="PDB" id="3WLD">
    <property type="method" value="X-ray"/>
    <property type="resolution" value="2.70 A"/>
    <property type="chains" value="A=2-144"/>
</dbReference>
<dbReference type="PDB" id="3ZTF">
    <property type="method" value="X-ray"/>
    <property type="resolution" value="1.31 A"/>
    <property type="chains" value="A=2-238"/>
</dbReference>
<dbReference type="PDB" id="4ANJ">
    <property type="method" value="X-ray"/>
    <property type="resolution" value="2.60 A"/>
    <property type="chains" value="A=1-238"/>
</dbReference>
<dbReference type="PDB" id="4AR7">
    <property type="method" value="X-ray"/>
    <property type="resolution" value="1.23 A"/>
    <property type="chains" value="A=2-238"/>
</dbReference>
<dbReference type="PDB" id="4AS8">
    <property type="method" value="X-ray"/>
    <property type="resolution" value="1.02 A"/>
    <property type="chains" value="A=2-238"/>
</dbReference>
<dbReference type="PDB" id="4B5Y">
    <property type="method" value="X-ray"/>
    <property type="resolution" value="1.45 A"/>
    <property type="chains" value="A=2-238"/>
</dbReference>
<dbReference type="PDB" id="4BDU">
    <property type="method" value="X-ray"/>
    <property type="resolution" value="3.00 A"/>
    <property type="chains" value="A/B/C/D=1-230"/>
</dbReference>
<dbReference type="PDB" id="4EN1">
    <property type="method" value="X-ray"/>
    <property type="resolution" value="1.62 A"/>
    <property type="chains" value="A/B=2-238"/>
</dbReference>
<dbReference type="PDB" id="4EUL">
    <property type="method" value="X-ray"/>
    <property type="resolution" value="1.35 A"/>
    <property type="chains" value="A=2-238"/>
</dbReference>
<dbReference type="PDB" id="4GES">
    <property type="method" value="X-ray"/>
    <property type="resolution" value="1.23 A"/>
    <property type="chains" value="B=1-238"/>
</dbReference>
<dbReference type="PDB" id="4GF6">
    <property type="method" value="X-ray"/>
    <property type="resolution" value="1.10 A"/>
    <property type="chains" value="B=1-237"/>
</dbReference>
<dbReference type="PDB" id="4H47">
    <property type="method" value="X-ray"/>
    <property type="resolution" value="1.90 A"/>
    <property type="chains" value="A=1-238"/>
</dbReference>
<dbReference type="PDB" id="4H48">
    <property type="method" value="X-ray"/>
    <property type="resolution" value="1.45 A"/>
    <property type="chains" value="A=1-238"/>
</dbReference>
<dbReference type="PDB" id="4IK1">
    <property type="method" value="X-ray"/>
    <property type="resolution" value="2.00 A"/>
    <property type="chains" value="A=2-144"/>
</dbReference>
<dbReference type="PDB" id="4IK3">
    <property type="method" value="X-ray"/>
    <property type="resolution" value="2.01 A"/>
    <property type="chains" value="A=149-238, A=2-142"/>
</dbReference>
<dbReference type="PDB" id="4IK4">
    <property type="method" value="X-ray"/>
    <property type="resolution" value="2.01 A"/>
    <property type="chains" value="A=2-142, A=149-238"/>
</dbReference>
<dbReference type="PDB" id="4IK5">
    <property type="method" value="X-ray"/>
    <property type="resolution" value="2.50 A"/>
    <property type="chains" value="A=2-142, A=149-238"/>
</dbReference>
<dbReference type="PDB" id="4IK8">
    <property type="method" value="X-ray"/>
    <property type="resolution" value="1.55 A"/>
    <property type="chains" value="A=2-144, A=149-238"/>
</dbReference>
<dbReference type="PDB" id="4IK9">
    <property type="method" value="X-ray"/>
    <property type="resolution" value="1.80 A"/>
    <property type="chains" value="A=2-144"/>
</dbReference>
<dbReference type="PDB" id="4J88">
    <property type="method" value="X-ray"/>
    <property type="resolution" value="2.08 A"/>
    <property type="chains" value="A/B=2-238"/>
</dbReference>
<dbReference type="PDB" id="4J89">
    <property type="method" value="X-ray"/>
    <property type="resolution" value="2.10 A"/>
    <property type="chains" value="A/B=2-238"/>
</dbReference>
<dbReference type="PDB" id="4J8A">
    <property type="method" value="X-ray"/>
    <property type="resolution" value="1.26 A"/>
    <property type="chains" value="A=2-238"/>
</dbReference>
<dbReference type="PDB" id="4JFG">
    <property type="method" value="X-ray"/>
    <property type="resolution" value="3.00 A"/>
    <property type="chains" value="A/B/C/D/E/F/G/H=1-238"/>
</dbReference>
<dbReference type="PDB" id="4JRB">
    <property type="method" value="X-ray"/>
    <property type="resolution" value="2.41 A"/>
    <property type="chains" value="A=1-229"/>
</dbReference>
<dbReference type="PDB" id="4KA9">
    <property type="method" value="X-ray"/>
    <property type="resolution" value="1.58 A"/>
    <property type="chains" value="A=5-238"/>
</dbReference>
<dbReference type="PDB" id="4KAG">
    <property type="method" value="X-ray"/>
    <property type="resolution" value="1.12 A"/>
    <property type="chains" value="A=1-238"/>
</dbReference>
<dbReference type="PDB" id="4KEX">
    <property type="method" value="X-ray"/>
    <property type="resolution" value="1.60 A"/>
    <property type="chains" value="A=1-238"/>
</dbReference>
<dbReference type="PDB" id="4KF5">
    <property type="method" value="X-ray"/>
    <property type="resolution" value="2.60 A"/>
    <property type="chains" value="A/B=1-196"/>
</dbReference>
<dbReference type="PDB" id="4KW4">
    <property type="method" value="X-ray"/>
    <property type="resolution" value="1.75 A"/>
    <property type="chains" value="A=2-238"/>
</dbReference>
<dbReference type="PDB" id="4KW8">
    <property type="method" value="X-ray"/>
    <property type="resolution" value="2.46 A"/>
    <property type="chains" value="A=2-238"/>
</dbReference>
<dbReference type="PDB" id="4KW9">
    <property type="method" value="X-ray"/>
    <property type="resolution" value="1.80 A"/>
    <property type="chains" value="A=2-238"/>
</dbReference>
<dbReference type="PDB" id="4L12">
    <property type="method" value="X-ray"/>
    <property type="resolution" value="1.78 A"/>
    <property type="chains" value="A=2-230"/>
</dbReference>
<dbReference type="PDB" id="4L13">
    <property type="method" value="X-ray"/>
    <property type="resolution" value="1.66 A"/>
    <property type="chains" value="A=2-230"/>
</dbReference>
<dbReference type="PDB" id="4L1I">
    <property type="method" value="X-ray"/>
    <property type="resolution" value="1.20 A"/>
    <property type="chains" value="A=2-230"/>
</dbReference>
<dbReference type="PDB" id="4LQT">
    <property type="method" value="X-ray"/>
    <property type="resolution" value="1.10 A"/>
    <property type="chains" value="A=2-238"/>
</dbReference>
<dbReference type="PDB" id="4LQU">
    <property type="method" value="X-ray"/>
    <property type="resolution" value="1.60 A"/>
    <property type="chains" value="A/B/C/D=2-238"/>
</dbReference>
<dbReference type="PDB" id="4LW5">
    <property type="method" value="X-ray"/>
    <property type="resolution" value="2.55 A"/>
    <property type="chains" value="A/B/C/D/E=2-238"/>
</dbReference>
<dbReference type="PDB" id="4N3D">
    <property type="method" value="X-ray"/>
    <property type="resolution" value="1.34 A"/>
    <property type="chains" value="A/B=1-230"/>
</dbReference>
<dbReference type="PDB" id="4NDJ">
    <property type="method" value="X-ray"/>
    <property type="resolution" value="1.85 A"/>
    <property type="chains" value="A=2-238"/>
</dbReference>
<dbReference type="PDB" id="4NDK">
    <property type="method" value="X-ray"/>
    <property type="resolution" value="2.30 A"/>
    <property type="chains" value="A/B=2-238"/>
</dbReference>
<dbReference type="PDB" id="4OGS">
    <property type="method" value="X-ray"/>
    <property type="resolution" value="2.21 A"/>
    <property type="chains" value="A/B=1-238"/>
</dbReference>
<dbReference type="PDB" id="4ORN">
    <property type="method" value="X-ray"/>
    <property type="resolution" value="1.71 A"/>
    <property type="chains" value="A/B=2-238"/>
</dbReference>
<dbReference type="PDB" id="4P1Q">
    <property type="method" value="X-ray"/>
    <property type="resolution" value="1.50 A"/>
    <property type="chains" value="A=3-231"/>
</dbReference>
<dbReference type="PDB" id="4P7H">
    <property type="method" value="X-ray"/>
    <property type="resolution" value="3.20 A"/>
    <property type="chains" value="A/B=5-238"/>
</dbReference>
<dbReference type="PDB" id="4PA0">
    <property type="method" value="X-ray"/>
    <property type="resolution" value="2.25 A"/>
    <property type="chains" value="A/B=5-234"/>
</dbReference>
<dbReference type="PDB" id="4PFE">
    <property type="method" value="X-ray"/>
    <property type="resolution" value="2.60 A"/>
    <property type="chains" value="A/B=2-229"/>
</dbReference>
<dbReference type="PDB" id="4U2V">
    <property type="method" value="X-ray"/>
    <property type="resolution" value="2.30 A"/>
    <property type="chains" value="A/B/C/D=1-230"/>
</dbReference>
<dbReference type="PDB" id="4XBI">
    <property type="method" value="X-ray"/>
    <property type="resolution" value="2.01 A"/>
    <property type="chains" value="A/B=2-230"/>
</dbReference>
<dbReference type="PDB" id="4XGY">
    <property type="method" value="X-ray"/>
    <property type="resolution" value="1.49 A"/>
    <property type="chains" value="A=2-238"/>
</dbReference>
<dbReference type="PDB" id="4XL5">
    <property type="method" value="X-ray"/>
    <property type="resolution" value="2.00 A"/>
    <property type="chains" value="A=2-238"/>
</dbReference>
<dbReference type="PDB" id="4XOV">
    <property type="method" value="X-ray"/>
    <property type="resolution" value="1.20 A"/>
    <property type="chains" value="A=2-238"/>
</dbReference>
<dbReference type="PDB" id="4XOW">
    <property type="method" value="X-ray"/>
    <property type="resolution" value="1.25 A"/>
    <property type="chains" value="A=2-238"/>
</dbReference>
<dbReference type="PDB" id="4XVP">
    <property type="method" value="X-ray"/>
    <property type="resolution" value="3.40 A"/>
    <property type="chains" value="A/B/C=2-238"/>
</dbReference>
<dbReference type="PDB" id="4Z4K">
    <property type="method" value="X-ray"/>
    <property type="resolution" value="2.80 A"/>
    <property type="chains" value="A/B=1-230"/>
</dbReference>
<dbReference type="PDB" id="4Z4M">
    <property type="method" value="X-ray"/>
    <property type="resolution" value="2.15 A"/>
    <property type="chains" value="A/B=1-230"/>
</dbReference>
<dbReference type="PDB" id="4ZF3">
    <property type="method" value="X-ray"/>
    <property type="resolution" value="1.90 A"/>
    <property type="chains" value="A/B=51-236"/>
</dbReference>
<dbReference type="PDB" id="4ZF4">
    <property type="method" value="X-ray"/>
    <property type="resolution" value="1.82 A"/>
    <property type="chains" value="A/B=4-237"/>
</dbReference>
<dbReference type="PDB" id="4ZF5">
    <property type="method" value="X-ray"/>
    <property type="resolution" value="1.70 A"/>
    <property type="chains" value="A/B=4-237"/>
</dbReference>
<dbReference type="PDB" id="5AQB">
    <property type="method" value="X-ray"/>
    <property type="resolution" value="1.37 A"/>
    <property type="chains" value="B=2-231"/>
</dbReference>
<dbReference type="PDB" id="5B61">
    <property type="method" value="X-ray"/>
    <property type="resolution" value="3.12 A"/>
    <property type="chains" value="A/B/C/D/E/F=1-238"/>
</dbReference>
<dbReference type="PDB" id="5BKF">
    <property type="method" value="EM"/>
    <property type="resolution" value="3.60 A"/>
    <property type="chains" value="E=2-238"/>
</dbReference>
<dbReference type="PDB" id="5BKG">
    <property type="method" value="EM"/>
    <property type="resolution" value="3.80 A"/>
    <property type="chains" value="E=2-238"/>
</dbReference>
<dbReference type="PDB" id="5DPG">
    <property type="method" value="X-ray"/>
    <property type="resolution" value="1.85 A"/>
    <property type="chains" value="A=2-238"/>
</dbReference>
<dbReference type="PDB" id="5DPH">
    <property type="method" value="X-ray"/>
    <property type="resolution" value="1.42 A"/>
    <property type="chains" value="A/B=2-238"/>
</dbReference>
<dbReference type="PDB" id="5DPI">
    <property type="method" value="X-ray"/>
    <property type="resolution" value="2.54 A"/>
    <property type="chains" value="A/B/C/D/E/F=2-238"/>
</dbReference>
<dbReference type="PDB" id="5DPJ">
    <property type="method" value="X-ray"/>
    <property type="resolution" value="2.50 A"/>
    <property type="chains" value="A/B/C/D=2-238"/>
</dbReference>
<dbReference type="PDB" id="5DQB">
    <property type="method" value="X-ray"/>
    <property type="resolution" value="1.25 A"/>
    <property type="chains" value="A=2-238"/>
</dbReference>
<dbReference type="PDB" id="5DQM">
    <property type="method" value="X-ray"/>
    <property type="resolution" value="1.30 A"/>
    <property type="chains" value="A=2-238"/>
</dbReference>
<dbReference type="PDB" id="5DRF">
    <property type="method" value="X-ray"/>
    <property type="resolution" value="1.14 A"/>
    <property type="chains" value="A=2-238"/>
</dbReference>
<dbReference type="PDB" id="5DRG">
    <property type="method" value="X-ray"/>
    <property type="resolution" value="1.14 A"/>
    <property type="chains" value="A=2-238"/>
</dbReference>
<dbReference type="PDB" id="5DTX">
    <property type="method" value="X-ray"/>
    <property type="resolution" value="1.45 A"/>
    <property type="chains" value="A=1-63, A=65-238"/>
</dbReference>
<dbReference type="PDB" id="5DTY">
    <property type="method" value="X-ray"/>
    <property type="resolution" value="1.50 A"/>
    <property type="chains" value="A=1-63, A=65-238"/>
</dbReference>
<dbReference type="PDB" id="5DTZ">
    <property type="method" value="X-ray"/>
    <property type="resolution" value="1.50 A"/>
    <property type="chains" value="A/B/C/D=2-238"/>
</dbReference>
<dbReference type="PDB" id="5DU0">
    <property type="method" value="X-ray"/>
    <property type="resolution" value="2.35 A"/>
    <property type="chains" value="A/B/C/D=2-238"/>
</dbReference>
<dbReference type="PDB" id="5EHU">
    <property type="method" value="X-ray"/>
    <property type="resolution" value="1.45 A"/>
    <property type="chains" value="A/B=2-238"/>
</dbReference>
<dbReference type="PDB" id="5F9G">
    <property type="method" value="X-ray"/>
    <property type="resolution" value="2.77 A"/>
    <property type="chains" value="A=2-144"/>
</dbReference>
<dbReference type="PDB" id="5FGU">
    <property type="method" value="X-ray"/>
    <property type="resolution" value="1.90 A"/>
    <property type="chains" value="A=1-229"/>
</dbReference>
<dbReference type="PDB" id="5HBD">
    <property type="method" value="X-ray"/>
    <property type="resolution" value="1.65 A"/>
    <property type="chains" value="A=1-238"/>
</dbReference>
<dbReference type="PDB" id="5HGE">
    <property type="method" value="X-ray"/>
    <property type="resolution" value="1.86 A"/>
    <property type="chains" value="A=1-238"/>
</dbReference>
<dbReference type="PDB" id="5HW9">
    <property type="method" value="X-ray"/>
    <property type="resolution" value="3.00 A"/>
    <property type="chains" value="A=1-238"/>
</dbReference>
<dbReference type="PDB" id="5HZO">
    <property type="method" value="X-ray"/>
    <property type="resolution" value="2.49 A"/>
    <property type="chains" value="A/B=1-235"/>
</dbReference>
<dbReference type="PDB" id="5J2O">
    <property type="method" value="X-ray"/>
    <property type="resolution" value="1.50 A"/>
    <property type="chains" value="A=2-238"/>
</dbReference>
<dbReference type="PDB" id="5J3N">
    <property type="method" value="X-ray"/>
    <property type="resolution" value="2.45 A"/>
    <property type="chains" value="A/B=2-238"/>
</dbReference>
<dbReference type="PDB" id="5JZK">
    <property type="method" value="X-ray"/>
    <property type="resolution" value="1.90 A"/>
    <property type="chains" value="A/B=3-238"/>
</dbReference>
<dbReference type="PDB" id="5JZL">
    <property type="method" value="X-ray"/>
    <property type="resolution" value="1.80 A"/>
    <property type="chains" value="A/B=3-238"/>
</dbReference>
<dbReference type="PDB" id="5KTG">
    <property type="method" value="X-ray"/>
    <property type="resolution" value="2.80 A"/>
    <property type="chains" value="A/B=1-230"/>
</dbReference>
<dbReference type="PDB" id="5LEL">
    <property type="method" value="X-ray"/>
    <property type="resolution" value="3.10 A"/>
    <property type="chains" value="C/F/I=2-238"/>
</dbReference>
<dbReference type="PDB" id="5LEM">
    <property type="method" value="X-ray"/>
    <property type="resolution" value="2.98 A"/>
    <property type="chains" value="C=2-238"/>
</dbReference>
<dbReference type="PDB" id="5MA3">
    <property type="method" value="X-ray"/>
    <property type="resolution" value="1.70 A"/>
    <property type="chains" value="B=2-238"/>
</dbReference>
<dbReference type="PDB" id="5MA4">
    <property type="method" value="X-ray"/>
    <property type="resolution" value="1.40 A"/>
    <property type="chains" value="B=2-238"/>
</dbReference>
<dbReference type="PDB" id="5MA5">
    <property type="method" value="X-ray"/>
    <property type="resolution" value="1.85 A"/>
    <property type="chains" value="B/D=2-238"/>
</dbReference>
<dbReference type="PDB" id="5MA6">
    <property type="method" value="X-ray"/>
    <property type="resolution" value="2.30 A"/>
    <property type="chains" value="A=2-238"/>
</dbReference>
<dbReference type="PDB" id="5MA8">
    <property type="method" value="X-ray"/>
    <property type="resolution" value="2.35 A"/>
    <property type="chains" value="B/D=2-238"/>
</dbReference>
<dbReference type="PDB" id="5MA9">
    <property type="method" value="X-ray"/>
    <property type="resolution" value="1.57 A"/>
    <property type="chains" value="B/D/F/H=2-238"/>
</dbReference>
<dbReference type="PDB" id="5MAD">
    <property type="method" value="X-ray"/>
    <property type="resolution" value="1.53 A"/>
    <property type="chains" value="B/D/F/H=2-238"/>
</dbReference>
<dbReference type="PDB" id="5MAK">
    <property type="method" value="X-ray"/>
    <property type="resolution" value="2.50 A"/>
    <property type="chains" value="B/D=2-238"/>
</dbReference>
<dbReference type="PDB" id="5MSE">
    <property type="method" value="X-ray"/>
    <property type="resolution" value="1.66 A"/>
    <property type="chains" value="A/B/C/D=2-238"/>
</dbReference>
<dbReference type="PDB" id="5N9O">
    <property type="method" value="X-ray"/>
    <property type="resolution" value="1.53 A"/>
    <property type="chains" value="A=2-238"/>
</dbReference>
<dbReference type="PDB" id="5NHN">
    <property type="method" value="X-ray"/>
    <property type="resolution" value="1.96 A"/>
    <property type="chains" value="A/B=3-231"/>
</dbReference>
<dbReference type="PDB" id="5NI3">
    <property type="method" value="X-ray"/>
    <property type="resolution" value="1.28 A"/>
    <property type="chains" value="A=3-229, B/C/D=3-233"/>
</dbReference>
<dbReference type="PDB" id="5O89">
    <property type="method" value="X-ray"/>
    <property type="resolution" value="1.70 A"/>
    <property type="chains" value="A=2-238"/>
</dbReference>
<dbReference type="PDB" id="5O8B">
    <property type="method" value="X-ray"/>
    <property type="resolution" value="1.70 A"/>
    <property type="chains" value="A=2-238"/>
</dbReference>
<dbReference type="PDB" id="5O8C">
    <property type="method" value="X-ray"/>
    <property type="resolution" value="1.70 A"/>
    <property type="chains" value="A=2-238"/>
</dbReference>
<dbReference type="PDB" id="5OX8">
    <property type="method" value="X-ray"/>
    <property type="resolution" value="1.29 A"/>
    <property type="chains" value="A=2-238"/>
</dbReference>
<dbReference type="PDB" id="5OX9">
    <property type="method" value="X-ray"/>
    <property type="resolution" value="1.56 A"/>
    <property type="chains" value="A=2-238"/>
</dbReference>
<dbReference type="PDB" id="5OXA">
    <property type="method" value="X-ray"/>
    <property type="resolution" value="1.16 A"/>
    <property type="chains" value="A=2-238"/>
</dbReference>
<dbReference type="PDB" id="5OXB">
    <property type="method" value="X-ray"/>
    <property type="resolution" value="1.38 A"/>
    <property type="chains" value="A=2-238"/>
</dbReference>
<dbReference type="PDB" id="5OXC">
    <property type="method" value="X-ray"/>
    <property type="resolution" value="1.02 A"/>
    <property type="chains" value="A=1-238"/>
</dbReference>
<dbReference type="PDB" id="5T3I">
    <property type="method" value="X-ray"/>
    <property type="resolution" value="1.60 A"/>
    <property type="chains" value="A=2-238"/>
</dbReference>
<dbReference type="PDB" id="5WJ2">
    <property type="method" value="X-ray"/>
    <property type="resolution" value="2.41 A"/>
    <property type="chains" value="A/B=2-238"/>
</dbReference>
<dbReference type="PDB" id="5WJ3">
    <property type="method" value="X-ray"/>
    <property type="resolution" value="1.35 A"/>
    <property type="chains" value="A/B=3-238"/>
</dbReference>
<dbReference type="PDB" id="5WJ4">
    <property type="method" value="X-ray"/>
    <property type="resolution" value="1.63 A"/>
    <property type="chains" value="A/B=3-238"/>
</dbReference>
<dbReference type="PDB" id="5Z6Y">
    <property type="method" value="X-ray"/>
    <property type="resolution" value="1.87 A"/>
    <property type="chains" value="A=3-230"/>
</dbReference>
<dbReference type="PDB" id="6AA2">
    <property type="method" value="X-ray"/>
    <property type="resolution" value="2.30 A"/>
    <property type="chains" value="A/B/C=2-238"/>
</dbReference>
<dbReference type="PDB" id="6AA6">
    <property type="method" value="X-ray"/>
    <property type="resolution" value="2.39 A"/>
    <property type="chains" value="A/B=2-238"/>
</dbReference>
<dbReference type="PDB" id="6AS9">
    <property type="method" value="X-ray"/>
    <property type="resolution" value="1.75 A"/>
    <property type="chains" value="A=1-238"/>
</dbReference>
<dbReference type="PDB" id="6B7R">
    <property type="method" value="X-ray"/>
    <property type="resolution" value="1.73 A"/>
    <property type="chains" value="A/B=2-214"/>
</dbReference>
<dbReference type="PDB" id="6B7T">
    <property type="method" value="X-ray"/>
    <property type="resolution" value="1.91 A"/>
    <property type="chains" value="A/B=3-194, A/B=214-237"/>
</dbReference>
<dbReference type="PDB" id="6B9C">
    <property type="method" value="X-ray"/>
    <property type="resolution" value="1.70 A"/>
    <property type="chains" value="A=3-238"/>
</dbReference>
<dbReference type="PDB" id="6DQ0">
    <property type="method" value="X-ray"/>
    <property type="resolution" value="2.05 A"/>
    <property type="chains" value="A/B=1-238"/>
</dbReference>
<dbReference type="PDB" id="6DQ1">
    <property type="method" value="X-ray"/>
    <property type="resolution" value="1.60 A"/>
    <property type="chains" value="A=1-238"/>
</dbReference>
<dbReference type="PDB" id="6EFR">
    <property type="method" value="X-ray"/>
    <property type="resolution" value="2.40 A"/>
    <property type="chains" value="A=1-145"/>
</dbReference>
<dbReference type="PDB" id="6FLL">
    <property type="method" value="X-ray"/>
    <property type="resolution" value="1.79 A"/>
    <property type="chains" value="A=2-238"/>
</dbReference>
<dbReference type="PDB" id="6FWW">
    <property type="method" value="X-ray"/>
    <property type="resolution" value="1.13 A"/>
    <property type="chains" value="A=2-238"/>
</dbReference>
<dbReference type="PDB" id="6GEL">
    <property type="method" value="X-ray"/>
    <property type="resolution" value="2.51 A"/>
    <property type="chains" value="A/B=2-227"/>
</dbReference>
<dbReference type="PDB" id="6GEZ">
    <property type="method" value="X-ray"/>
    <property type="resolution" value="2.47 A"/>
    <property type="chains" value="A/B=2-227"/>
</dbReference>
<dbReference type="PDB" id="6GO8">
    <property type="method" value="X-ray"/>
    <property type="resolution" value="1.65 A"/>
    <property type="chains" value="A=1-238"/>
</dbReference>
<dbReference type="PDB" id="6GO9">
    <property type="method" value="X-ray"/>
    <property type="resolution" value="1.67 A"/>
    <property type="chains" value="A=1-238"/>
</dbReference>
<dbReference type="PDB" id="6GQG">
    <property type="method" value="X-ray"/>
    <property type="resolution" value="1.79 A"/>
    <property type="chains" value="A=1-238"/>
</dbReference>
<dbReference type="PDB" id="6GQH">
    <property type="method" value="X-ray"/>
    <property type="resolution" value="2.40 A"/>
    <property type="chains" value="A=1-238"/>
</dbReference>
<dbReference type="PDB" id="6GRM">
    <property type="method" value="X-ray"/>
    <property type="resolution" value="2.30 A"/>
    <property type="chains" value="A=1-238"/>
</dbReference>
<dbReference type="PDB" id="6HR1">
    <property type="method" value="X-ray"/>
    <property type="resolution" value="1.90 A"/>
    <property type="chains" value="A/B=2-238"/>
</dbReference>
<dbReference type="PDB" id="6HUT">
    <property type="method" value="X-ray"/>
    <property type="resolution" value="1.29 A"/>
    <property type="chains" value="A=1-238"/>
</dbReference>
<dbReference type="PDB" id="6IR6">
    <property type="method" value="X-ray"/>
    <property type="resolution" value="1.64 A"/>
    <property type="chains" value="A=2-238"/>
</dbReference>
<dbReference type="PDB" id="6IR7">
    <property type="method" value="X-ray"/>
    <property type="resolution" value="1.28 A"/>
    <property type="chains" value="A=2-237"/>
</dbReference>
<dbReference type="PDB" id="6ITC">
    <property type="method" value="EM"/>
    <property type="resolution" value="3.45 A"/>
    <property type="chains" value="G=1-238"/>
</dbReference>
<dbReference type="PDB" id="6JGH">
    <property type="method" value="X-ray"/>
    <property type="resolution" value="0.94 A"/>
    <property type="chains" value="A=2-231"/>
</dbReference>
<dbReference type="PDB" id="6JGI">
    <property type="method" value="X-ray"/>
    <property type="resolution" value="0.85 A"/>
    <property type="chains" value="A=2-231"/>
</dbReference>
<dbReference type="PDB" id="6JGJ">
    <property type="method" value="X-ray"/>
    <property type="resolution" value="0.78 A"/>
    <property type="chains" value="A=2-231"/>
</dbReference>
<dbReference type="PDB" id="6KKZ">
    <property type="method" value="X-ray"/>
    <property type="resolution" value="0.90 A"/>
    <property type="chains" value="A=2-231"/>
</dbReference>
<dbReference type="PDB" id="6KL0">
    <property type="method" value="X-ray"/>
    <property type="resolution" value="0.80 A"/>
    <property type="chains" value="A=2-231"/>
</dbReference>
<dbReference type="PDB" id="6KL1">
    <property type="method" value="X-ray"/>
    <property type="resolution" value="0.85 A"/>
    <property type="chains" value="A=2-232"/>
</dbReference>
<dbReference type="PDB" id="6KRG">
    <property type="method" value="X-ray"/>
    <property type="resolution" value="1.40 A"/>
    <property type="chains" value="A=1-236"/>
</dbReference>
<dbReference type="PDB" id="6L27">
    <property type="method" value="X-ray"/>
    <property type="resolution" value="0.77 A"/>
    <property type="chains" value="A=4-231"/>
</dbReference>
<dbReference type="PDB" id="6LNP">
    <property type="method" value="X-ray"/>
    <property type="resolution" value="2.99 A"/>
    <property type="chains" value="B/D=1-111, B/D=150-238"/>
</dbReference>
<dbReference type="PDB" id="6LR7">
    <property type="method" value="X-ray"/>
    <property type="resolution" value="1.67 A"/>
    <property type="chains" value="A=1-238"/>
</dbReference>
<dbReference type="PDB" id="6M63">
    <property type="method" value="X-ray"/>
    <property type="resolution" value="2.25 A"/>
    <property type="chains" value="A/B=3-144"/>
</dbReference>
<dbReference type="PDB" id="6MB2">
    <property type="method" value="EM"/>
    <property type="resolution" value="5.00 A"/>
    <property type="chains" value="a/b/c/d/e/f/g/h/i/j/k/l/m/n/o=2-229"/>
</dbReference>
<dbReference type="PDB" id="6MDR">
    <property type="method" value="EM"/>
    <property type="resolution" value="3.47 A"/>
    <property type="chains" value="b/d/f/h/j/l/n/p=1-232"/>
</dbReference>
<dbReference type="PDB" id="6MKS">
    <property type="method" value="EM"/>
    <property type="resolution" value="3.40 A"/>
    <property type="chains" value="A/B/C/D/E/F/G/H/I/J/K/L/M/N/O/P/Q/R/S/T/U/V/W/X/Y/Z/a/b/c/d=1-230"/>
</dbReference>
<dbReference type="PDB" id="6MWQ">
    <property type="method" value="EM"/>
    <property type="resolution" value="3.00 A"/>
    <property type="chains" value="G/H/I/J=2-230"/>
</dbReference>
<dbReference type="PDB" id="6OA8">
    <property type="method" value="X-ray"/>
    <property type="resolution" value="1.37 A"/>
    <property type="chains" value="A=3-238"/>
</dbReference>
<dbReference type="PDB" id="6OFK">
    <property type="method" value="X-ray"/>
    <property type="resolution" value="1.15 A"/>
    <property type="chains" value="A/B=49-237"/>
</dbReference>
<dbReference type="PDB" id="6OFL">
    <property type="method" value="X-ray"/>
    <property type="resolution" value="1.25 A"/>
    <property type="chains" value="A/B=49-237"/>
</dbReference>
<dbReference type="PDB" id="6OFM">
    <property type="method" value="X-ray"/>
    <property type="resolution" value="1.48 A"/>
    <property type="chains" value="A/B=49-237"/>
</dbReference>
<dbReference type="PDB" id="6OFN">
    <property type="method" value="X-ray"/>
    <property type="resolution" value="1.65 A"/>
    <property type="chains" value="A/B=49-237"/>
</dbReference>
<dbReference type="PDB" id="6OFO">
    <property type="method" value="X-ray"/>
    <property type="resolution" value="2.60 A"/>
    <property type="chains" value="A/B=2-194"/>
</dbReference>
<dbReference type="PDB" id="6OG8">
    <property type="method" value="X-ray"/>
    <property type="resolution" value="1.60 A"/>
    <property type="chains" value="A/B=49-237"/>
</dbReference>
<dbReference type="PDB" id="6OG9">
    <property type="method" value="X-ray"/>
    <property type="resolution" value="1.80 A"/>
    <property type="chains" value="A/B=49-237"/>
</dbReference>
<dbReference type="PDB" id="6OGA">
    <property type="method" value="X-ray"/>
    <property type="resolution" value="1.60 A"/>
    <property type="chains" value="A/B=49-237"/>
</dbReference>
<dbReference type="PDB" id="6OGB">
    <property type="method" value="X-ray"/>
    <property type="resolution" value="1.65 A"/>
    <property type="chains" value="A/B=49-237"/>
</dbReference>
<dbReference type="PDB" id="6OGC">
    <property type="method" value="X-ray"/>
    <property type="resolution" value="1.18 A"/>
    <property type="chains" value="A/B=49-237"/>
</dbReference>
<dbReference type="PDB" id="6PFR">
    <property type="method" value="X-ray"/>
    <property type="resolution" value="1.51 A"/>
    <property type="chains" value="A=1-238"/>
</dbReference>
<dbReference type="PDB" id="6PFS">
    <property type="method" value="X-ray"/>
    <property type="resolution" value="1.76 A"/>
    <property type="chains" value="A=1-238"/>
</dbReference>
<dbReference type="PDB" id="6PFT">
    <property type="method" value="X-ray"/>
    <property type="resolution" value="1.45 A"/>
    <property type="chains" value="A=1-238"/>
</dbReference>
<dbReference type="PDB" id="6PFU">
    <property type="method" value="X-ray"/>
    <property type="resolution" value="1.62 A"/>
    <property type="chains" value="A=1-238"/>
</dbReference>
<dbReference type="PDB" id="6QQ8">
    <property type="method" value="X-ray"/>
    <property type="resolution" value="1.46 A"/>
    <property type="chains" value="A=2-238"/>
</dbReference>
<dbReference type="PDB" id="6QQ9">
    <property type="method" value="X-ray"/>
    <property type="resolution" value="1.82 A"/>
    <property type="chains" value="A=2-238"/>
</dbReference>
<dbReference type="PDB" id="6QQA">
    <property type="method" value="X-ray"/>
    <property type="resolution" value="1.66 A"/>
    <property type="chains" value="A=2-238"/>
</dbReference>
<dbReference type="PDB" id="6QQB">
    <property type="method" value="X-ray"/>
    <property type="resolution" value="2.45 A"/>
    <property type="chains" value="A=2-238"/>
</dbReference>
<dbReference type="PDB" id="6QUH">
    <property type="method" value="X-ray"/>
    <property type="resolution" value="1.50 A"/>
    <property type="chains" value="A/C=4-230"/>
</dbReference>
<dbReference type="PDB" id="6QUI">
    <property type="method" value="X-ray"/>
    <property type="resolution" value="1.94 A"/>
    <property type="chains" value="A/D=2-230"/>
</dbReference>
<dbReference type="PDB" id="6QUJ">
    <property type="method" value="X-ray"/>
    <property type="resolution" value="1.68 A"/>
    <property type="chains" value="A/D=1-230"/>
</dbReference>
<dbReference type="PDB" id="6SM0">
    <property type="method" value="X-ray"/>
    <property type="resolution" value="1.91 A"/>
    <property type="chains" value="A=2-230"/>
</dbReference>
<dbReference type="PDB" id="6T39">
    <property type="method" value="X-ray"/>
    <property type="resolution" value="1.60 A"/>
    <property type="chains" value="A=2-238"/>
</dbReference>
<dbReference type="PDB" id="6T3A">
    <property type="method" value="X-ray"/>
    <property type="resolution" value="1.85 A"/>
    <property type="chains" value="A=2-238"/>
</dbReference>
<dbReference type="PDB" id="6T90">
    <property type="method" value="EM"/>
    <property type="resolution" value="3.05 A"/>
    <property type="chains" value="K=2-238"/>
</dbReference>
<dbReference type="PDB" id="6UHJ">
    <property type="method" value="X-ray"/>
    <property type="resolution" value="1.50 A"/>
    <property type="chains" value="A=1-238"/>
</dbReference>
<dbReference type="PDB" id="6UHK">
    <property type="method" value="X-ray"/>
    <property type="resolution" value="1.90 A"/>
    <property type="chains" value="A/B=1-238"/>
</dbReference>
<dbReference type="PDB" id="6UHL">
    <property type="method" value="X-ray"/>
    <property type="resolution" value="1.91 A"/>
    <property type="chains" value="A/B=1-238"/>
</dbReference>
<dbReference type="PDB" id="6UHM">
    <property type="method" value="X-ray"/>
    <property type="resolution" value="2.10 A"/>
    <property type="chains" value="A/B=1-238"/>
</dbReference>
<dbReference type="PDB" id="6UHN">
    <property type="method" value="X-ray"/>
    <property type="resolution" value="1.92 A"/>
    <property type="chains" value="A/B=1-238"/>
</dbReference>
<dbReference type="PDB" id="6UHO">
    <property type="method" value="X-ray"/>
    <property type="resolution" value="1.95 A"/>
    <property type="chains" value="A/B=1-238"/>
</dbReference>
<dbReference type="PDB" id="6UHP">
    <property type="method" value="X-ray"/>
    <property type="resolution" value="2.90 A"/>
    <property type="chains" value="A/B=1-238"/>
</dbReference>
<dbReference type="PDB" id="6UHQ">
    <property type="method" value="X-ray"/>
    <property type="resolution" value="2.85 A"/>
    <property type="chains" value="A=1-238"/>
</dbReference>
<dbReference type="PDB" id="6UHR">
    <property type="method" value="X-ray"/>
    <property type="resolution" value="3.00 A"/>
    <property type="chains" value="A/B=1-238"/>
</dbReference>
<dbReference type="PDB" id="6UN4">
    <property type="method" value="X-ray"/>
    <property type="resolution" value="1.50 A"/>
    <property type="chains" value="A=2-238"/>
</dbReference>
<dbReference type="PDB" id="6UN5">
    <property type="method" value="X-ray"/>
    <property type="resolution" value="1.36 A"/>
    <property type="chains" value="A/B=51-63, A/B=145-237"/>
</dbReference>
<dbReference type="PDB" id="6UN6">
    <property type="method" value="X-ray"/>
    <property type="resolution" value="1.50 A"/>
    <property type="chains" value="A/B=51-63, A/B=145-237"/>
</dbReference>
<dbReference type="PDB" id="6UN7">
    <property type="method" value="X-ray"/>
    <property type="resolution" value="1.50 A"/>
    <property type="chains" value="A/B=51-63, A/B=145-237"/>
</dbReference>
<dbReference type="PDB" id="6UZ0">
    <property type="method" value="EM"/>
    <property type="resolution" value="3.24 A"/>
    <property type="chains" value="A=2-238"/>
</dbReference>
<dbReference type="PDB" id="6UZ3">
    <property type="method" value="EM"/>
    <property type="resolution" value="3.50 A"/>
    <property type="chains" value="A=2-238"/>
</dbReference>
<dbReference type="PDB" id="6VAL">
    <property type="method" value="EM"/>
    <property type="resolution" value="3.87 A"/>
    <property type="chains" value="A/B/C/D/E/F/G/H/I/J/K=2-238"/>
</dbReference>
<dbReference type="PDB" id="6VAM">
    <property type="method" value="EM"/>
    <property type="resolution" value="3.63 A"/>
    <property type="chains" value="A/B/C/D/E/F/G/H=2-238"/>
</dbReference>
<dbReference type="PDB" id="6VIO">
    <property type="method" value="X-ray"/>
    <property type="resolution" value="3.60 A"/>
    <property type="chains" value="A/B/C/D/E/F/G/H=2-238"/>
</dbReference>
<dbReference type="PDB" id="6WRF">
    <property type="method" value="EM"/>
    <property type="resolution" value="3.14 A"/>
    <property type="chains" value="S=3-229"/>
</dbReference>
<dbReference type="PDB" id="6WSG">
    <property type="method" value="EM"/>
    <property type="resolution" value="3.16 A"/>
    <property type="chains" value="S=3-232"/>
</dbReference>
<dbReference type="PDB" id="6WV3">
    <property type="method" value="X-ray"/>
    <property type="resolution" value="2.20 A"/>
    <property type="chains" value="A=1-63, A=146-231"/>
</dbReference>
<dbReference type="PDB" id="6WV4">
    <property type="method" value="X-ray"/>
    <property type="resolution" value="3.01 A"/>
    <property type="chains" value="A=1-63, A=146-231"/>
</dbReference>
<dbReference type="PDB" id="6WV5">
    <property type="method" value="X-ray"/>
    <property type="resolution" value="2.80 A"/>
    <property type="chains" value="A=1-63, A=146-231"/>
</dbReference>
<dbReference type="PDB" id="6WV6">
    <property type="method" value="X-ray"/>
    <property type="resolution" value="2.70 A"/>
    <property type="chains" value="A=1-63, A=146-231"/>
</dbReference>
<dbReference type="PDB" id="6WV7">
    <property type="method" value="X-ray"/>
    <property type="resolution" value="2.48 A"/>
    <property type="chains" value="A/B=1-63, A/B=146-231"/>
</dbReference>
<dbReference type="PDB" id="6WV8">
    <property type="method" value="X-ray"/>
    <property type="resolution" value="3.01 A"/>
    <property type="chains" value="A=1-63, A=146-238"/>
</dbReference>
<dbReference type="PDB" id="6WV9">
    <property type="method" value="X-ray"/>
    <property type="resolution" value="3.35 A"/>
    <property type="chains" value="A=1-238"/>
</dbReference>
<dbReference type="PDB" id="6WVA">
    <property type="method" value="X-ray"/>
    <property type="resolution" value="3.35 A"/>
    <property type="chains" value="A=1-238"/>
</dbReference>
<dbReference type="PDB" id="6WVB">
    <property type="method" value="X-ray"/>
    <property type="resolution" value="2.87 A"/>
    <property type="chains" value="A=1-63, A=146-238"/>
</dbReference>
<dbReference type="PDB" id="6WVD">
    <property type="method" value="X-ray"/>
    <property type="resolution" value="2.25 A"/>
    <property type="chains" value="A=1-231"/>
</dbReference>
<dbReference type="PDB" id="6WVE">
    <property type="method" value="X-ray"/>
    <property type="resolution" value="2.43 A"/>
    <property type="chains" value="A=1-231"/>
</dbReference>
<dbReference type="PDB" id="6WVF">
    <property type="method" value="X-ray"/>
    <property type="resolution" value="2.90 A"/>
    <property type="chains" value="A=1-231"/>
</dbReference>
<dbReference type="PDB" id="6WVG">
    <property type="method" value="X-ray"/>
    <property type="resolution" value="2.90 A"/>
    <property type="chains" value="A/B=1-230"/>
</dbReference>
<dbReference type="PDB" id="6WVH">
    <property type="method" value="X-ray"/>
    <property type="resolution" value="1.99 A"/>
    <property type="chains" value="A/B=1-63, A/B=146-231"/>
</dbReference>
<dbReference type="PDB" id="6WVI">
    <property type="method" value="X-ray"/>
    <property type="resolution" value="2.40 A"/>
    <property type="chains" value="A=1-238"/>
</dbReference>
<dbReference type="PDB" id="6XZF">
    <property type="method" value="X-ray"/>
    <property type="resolution" value="1.80 A"/>
    <property type="chains" value="A=1-238"/>
</dbReference>
<dbReference type="PDB" id="6YOV">
    <property type="method" value="EM"/>
    <property type="resolution" value="3.42 A"/>
    <property type="chains" value="K=2-238"/>
</dbReference>
<dbReference type="PDB" id="6ZUI">
    <property type="method" value="X-ray"/>
    <property type="resolution" value="2.20 A"/>
    <property type="chains" value="A=2-144"/>
</dbReference>
<dbReference type="PDB" id="7A7K">
    <property type="method" value="X-ray"/>
    <property type="resolution" value="1.55 A"/>
    <property type="chains" value="A=2-238"/>
</dbReference>
<dbReference type="PDB" id="7A7L">
    <property type="method" value="X-ray"/>
    <property type="resolution" value="1.30 A"/>
    <property type="chains" value="A=3-238"/>
</dbReference>
<dbReference type="PDB" id="7AA5">
    <property type="method" value="EM"/>
    <property type="resolution" value="4.18 A"/>
    <property type="chains" value="A/B/C/D=3-238"/>
</dbReference>
<dbReference type="PDB" id="7AMB">
    <property type="method" value="X-ray"/>
    <property type="resolution" value="1.63 A"/>
    <property type="chains" value="A/B/C/D=2-232"/>
</dbReference>
<dbReference type="PDB" id="7AMF">
    <property type="method" value="X-ray"/>
    <property type="resolution" value="1.63 A"/>
    <property type="chains" value="A/B/C/D=2-232"/>
</dbReference>
<dbReference type="PDB" id="7AMU">
    <property type="method" value="X-ray"/>
    <property type="resolution" value="1.64 A"/>
    <property type="chains" value="A=2-238"/>
</dbReference>
<dbReference type="PDB" id="7BWN">
    <property type="method" value="X-ray"/>
    <property type="resolution" value="2.40 A"/>
    <property type="chains" value="A/C/E/F/H/J/M/O=1-238"/>
</dbReference>
<dbReference type="PDB" id="7BYL">
    <property type="method" value="EM"/>
    <property type="resolution" value="2.50 A"/>
    <property type="chains" value="A/C/E/G=2-238"/>
</dbReference>
<dbReference type="PDB" id="7BYM">
    <property type="method" value="EM"/>
    <property type="resolution" value="3.10 A"/>
    <property type="chains" value="A/C/E/G=2-238"/>
</dbReference>
<dbReference type="PDB" id="7BYN">
    <property type="method" value="EM"/>
    <property type="resolution" value="3.30 A"/>
    <property type="chains" value="A/C/E/G=2-238"/>
</dbReference>
<dbReference type="PDB" id="7CD7">
    <property type="method" value="X-ray"/>
    <property type="resolution" value="1.70 A"/>
    <property type="chains" value="B/D=3-238"/>
</dbReference>
<dbReference type="PDB" id="7CD8">
    <property type="method" value="X-ray"/>
    <property type="resolution" value="2.00 A"/>
    <property type="chains" value="B=3-238"/>
</dbReference>
<dbReference type="PDB" id="7EDJ">
    <property type="method" value="EM"/>
    <property type="resolution" value="3.30 A"/>
    <property type="chains" value="I/J/K=2-238"/>
</dbReference>
<dbReference type="PDB" id="7FHK">
    <property type="method" value="EM"/>
    <property type="resolution" value="3.30 A"/>
    <property type="chains" value="A/C=1-238"/>
</dbReference>
<dbReference type="PDB" id="7FHL">
    <property type="method" value="EM"/>
    <property type="resolution" value="3.10 A"/>
    <property type="chains" value="A/C=1-238"/>
</dbReference>
<dbReference type="PDB" id="7FHN">
    <property type="method" value="EM"/>
    <property type="resolution" value="3.30 A"/>
    <property type="chains" value="A/C=1-238"/>
</dbReference>
<dbReference type="PDB" id="7FHO">
    <property type="method" value="EM"/>
    <property type="resolution" value="2.80 A"/>
    <property type="chains" value="A/C=1-238"/>
</dbReference>
<dbReference type="PDB" id="7K18">
    <property type="method" value="EM"/>
    <property type="resolution" value="3.30 A"/>
    <property type="chains" value="A=2-238"/>
</dbReference>
<dbReference type="PDB" id="7KM4">
    <property type="method" value="X-ray"/>
    <property type="resolution" value="2.65 A"/>
    <property type="chains" value="A=1-238"/>
</dbReference>
<dbReference type="PDB" id="7KS0">
    <property type="method" value="EM"/>
    <property type="resolution" value="5.30 A"/>
    <property type="chains" value="A/C=2-238"/>
</dbReference>
<dbReference type="PDB" id="7KS3">
    <property type="method" value="EM"/>
    <property type="resolution" value="5.80 A"/>
    <property type="chains" value="A/C=2-238"/>
</dbReference>
<dbReference type="PDB" id="7KUY">
    <property type="method" value="EM"/>
    <property type="resolution" value="3.60 A"/>
    <property type="chains" value="E=2-238"/>
</dbReference>
<dbReference type="PDB" id="7L31">
    <property type="method" value="EM"/>
    <property type="resolution" value="3.80 A"/>
    <property type="chains" value="E=2-238"/>
</dbReference>
<dbReference type="PDB" id="7O7C">
    <property type="method" value="X-ray"/>
    <property type="resolution" value="1.55 A"/>
    <property type="chains" value="A=2-238"/>
</dbReference>
<dbReference type="PDB" id="7O7D">
    <property type="method" value="X-ray"/>
    <property type="resolution" value="1.40 A"/>
    <property type="chains" value="A=2-238"/>
</dbReference>
<dbReference type="PDB" id="7O7E">
    <property type="method" value="X-ray"/>
    <property type="resolution" value="1.80 A"/>
    <property type="chains" value="A=2-238"/>
</dbReference>
<dbReference type="PDB" id="7O7H">
    <property type="method" value="X-ray"/>
    <property type="resolution" value="1.70 A"/>
    <property type="chains" value="A=2-238"/>
</dbReference>
<dbReference type="PDB" id="7O7U">
    <property type="method" value="X-ray"/>
    <property type="resolution" value="1.70 A"/>
    <property type="chains" value="A=2-238"/>
</dbReference>
<dbReference type="PDB" id="7O7V">
    <property type="method" value="X-ray"/>
    <property type="resolution" value="1.90 A"/>
    <property type="chains" value="A=2-238"/>
</dbReference>
<dbReference type="PDB" id="7O7W">
    <property type="method" value="X-ray"/>
    <property type="resolution" value="2.10 A"/>
    <property type="chains" value="A=2-238"/>
</dbReference>
<dbReference type="PDB" id="7O7X">
    <property type="method" value="X-ray"/>
    <property type="resolution" value="1.95 A"/>
    <property type="chains" value="A=2-238"/>
</dbReference>
<dbReference type="PDB" id="7PCA">
    <property type="method" value="X-ray"/>
    <property type="resolution" value="1.05 A"/>
    <property type="chains" value="A=1-238"/>
</dbReference>
<dbReference type="PDB" id="7PCZ">
    <property type="method" value="X-ray"/>
    <property type="resolution" value="1.35 A"/>
    <property type="chains" value="A/B=1-238"/>
</dbReference>
<dbReference type="PDB" id="7PD0">
    <property type="method" value="X-ray"/>
    <property type="resolution" value="2.00 A"/>
    <property type="chains" value="A/B/C/D=1-238"/>
</dbReference>
<dbReference type="PDB" id="7PHR">
    <property type="method" value="EM"/>
    <property type="resolution" value="3.08 A"/>
    <property type="chains" value="D=2-238"/>
</dbReference>
<dbReference type="PDB" id="7PNN">
    <property type="method" value="X-ray"/>
    <property type="resolution" value="1.43 A"/>
    <property type="chains" value="A=2-238"/>
</dbReference>
<dbReference type="PDB" id="7SAH">
    <property type="method" value="X-ray"/>
    <property type="resolution" value="1.60 A"/>
    <property type="chains" value="A=2-238"/>
</dbReference>
<dbReference type="PDB" id="7SAI">
    <property type="method" value="X-ray"/>
    <property type="resolution" value="2.23 A"/>
    <property type="chains" value="A=2-238"/>
</dbReference>
<dbReference type="PDB" id="7SQY">
    <property type="method" value="EM"/>
    <property type="resolution" value="3.40 A"/>
    <property type="chains" value="A/B/C=2-238"/>
</dbReference>
<dbReference type="PDB" id="7SSV">
    <property type="method" value="EM"/>
    <property type="resolution" value="3.39 A"/>
    <property type="chains" value="A/B/C/D=2-238"/>
</dbReference>
<dbReference type="PDB" id="7SSX">
    <property type="method" value="EM"/>
    <property type="resolution" value="2.89 A"/>
    <property type="chains" value="A/B/C/D=2-238"/>
</dbReference>
<dbReference type="PDB" id="7SSY">
    <property type="method" value="EM"/>
    <property type="resolution" value="2.89 A"/>
    <property type="chains" value="A/B/C/D=2-238"/>
</dbReference>
<dbReference type="PDB" id="7SSZ">
    <property type="method" value="EM"/>
    <property type="resolution" value="3.25 A"/>
    <property type="chains" value="A/B/C/D=2-238"/>
</dbReference>
<dbReference type="PDB" id="7SUN">
    <property type="method" value="EM"/>
    <property type="resolution" value="3.60 A"/>
    <property type="chains" value="A/B=1-238"/>
</dbReference>
<dbReference type="PDB" id="7X5V">
    <property type="method" value="EM"/>
    <property type="resolution" value="2.83 A"/>
    <property type="chains" value="A/B/C/D=2-235"/>
</dbReference>
<dbReference type="PDB" id="7YDQ">
    <property type="method" value="EM"/>
    <property type="resolution" value="4.04 A"/>
    <property type="chains" value="A=2-238"/>
</dbReference>
<dbReference type="PDB" id="7YEU">
    <property type="method" value="X-ray"/>
    <property type="resolution" value="1.95 A"/>
    <property type="chains" value="A=1-238"/>
</dbReference>
<dbReference type="PDB" id="7YV3">
    <property type="method" value="X-ray"/>
    <property type="resolution" value="2.00 A"/>
    <property type="chains" value="A=1-238"/>
</dbReference>
<dbReference type="PDB" id="7YV5">
    <property type="method" value="X-ray"/>
    <property type="resolution" value="2.85 A"/>
    <property type="chains" value="A=1-238"/>
</dbReference>
<dbReference type="PDB" id="8A6G">
    <property type="method" value="X-ray"/>
    <property type="resolution" value="1.63 A"/>
    <property type="chains" value="A=2-238"/>
</dbReference>
<dbReference type="PDB" id="8A6N">
    <property type="method" value="X-ray"/>
    <property type="resolution" value="1.63 A"/>
    <property type="chains" value="A=2-238"/>
</dbReference>
<dbReference type="PDB" id="8A6O">
    <property type="method" value="X-ray"/>
    <property type="resolution" value="1.63 A"/>
    <property type="chains" value="A=2-238"/>
</dbReference>
<dbReference type="PDB" id="8A6P">
    <property type="method" value="X-ray"/>
    <property type="resolution" value="1.63 A"/>
    <property type="chains" value="A=2-238"/>
</dbReference>
<dbReference type="PDB" id="8A6Q">
    <property type="method" value="X-ray"/>
    <property type="resolution" value="1.63 A"/>
    <property type="chains" value="A=2-238"/>
</dbReference>
<dbReference type="PDB" id="8A6R">
    <property type="method" value="X-ray"/>
    <property type="resolution" value="1.63 A"/>
    <property type="chains" value="A=2-238"/>
</dbReference>
<dbReference type="PDB" id="8A6S">
    <property type="method" value="X-ray"/>
    <property type="resolution" value="1.63 A"/>
    <property type="chains" value="A=2-238"/>
</dbReference>
<dbReference type="PDB" id="8A7V">
    <property type="method" value="X-ray"/>
    <property type="resolution" value="1.46 A"/>
    <property type="chains" value="A=2-238"/>
</dbReference>
<dbReference type="PDB" id="8A83">
    <property type="method" value="X-ray"/>
    <property type="resolution" value="1.81 A"/>
    <property type="chains" value="A=2-238"/>
</dbReference>
<dbReference type="PDB" id="8AHA">
    <property type="method" value="X-ray"/>
    <property type="resolution" value="2.38 A"/>
    <property type="chains" value="A=2-238"/>
</dbReference>
<dbReference type="PDB" id="8AHB">
    <property type="method" value="X-ray"/>
    <property type="resolution" value="1.79 A"/>
    <property type="chains" value="A=2-238"/>
</dbReference>
<dbReference type="PDB" id="8AM4">
    <property type="method" value="X-ray"/>
    <property type="resolution" value="2.02 A"/>
    <property type="chains" value="A=2-238"/>
</dbReference>
<dbReference type="PDB" id="8B6S">
    <property type="method" value="X-ray"/>
    <property type="resolution" value="1.80 A"/>
    <property type="chains" value="A/B=3-238"/>
</dbReference>
<dbReference type="PDB" id="8B6T">
    <property type="method" value="X-ray"/>
    <property type="resolution" value="2.00 A"/>
    <property type="chains" value="A/B=3-238"/>
</dbReference>
<dbReference type="PDB" id="8BAN">
    <property type="method" value="X-ray"/>
    <property type="resolution" value="2.35 A"/>
    <property type="chains" value="A/B=2-228"/>
</dbReference>
<dbReference type="PDB" id="8BAV">
    <property type="method" value="X-ray"/>
    <property type="resolution" value="2.30 A"/>
    <property type="chains" value="A/B=2-228"/>
</dbReference>
<dbReference type="PDB" id="8BVG">
    <property type="method" value="X-ray"/>
    <property type="resolution" value="2.38 A"/>
    <property type="chains" value="A/B/C/D/E/F=2-238"/>
</dbReference>
<dbReference type="PDB" id="8BXP">
    <property type="method" value="X-ray"/>
    <property type="resolution" value="1.79 A"/>
    <property type="chains" value="A/B=2-233"/>
</dbReference>
<dbReference type="PDB" id="8C1X">
    <property type="method" value="X-ray"/>
    <property type="resolution" value="1.89 A"/>
    <property type="chains" value="A/B/C/D=1-233"/>
</dbReference>
<dbReference type="PDB" id="8C7I">
    <property type="method" value="X-ray"/>
    <property type="resolution" value="2.12 A"/>
    <property type="chains" value="A=1-238"/>
</dbReference>
<dbReference type="PDB" id="8DFL">
    <property type="method" value="EM"/>
    <property type="resolution" value="3.25 A"/>
    <property type="chains" value="A/B/C/D=2-238"/>
</dbReference>
<dbReference type="PDB" id="8DHR">
    <property type="method" value="X-ray"/>
    <property type="resolution" value="1.75 A"/>
    <property type="chains" value="A/B=1-238"/>
</dbReference>
<dbReference type="PDB" id="8DN2">
    <property type="method" value="EM"/>
    <property type="resolution" value="3.90 A"/>
    <property type="chains" value="E=2-238"/>
</dbReference>
<dbReference type="PDB" id="8DN3">
    <property type="method" value="EM"/>
    <property type="resolution" value="3.55 A"/>
    <property type="chains" value="E=2-238"/>
</dbReference>
<dbReference type="PDB" id="8DN4">
    <property type="method" value="EM"/>
    <property type="resolution" value="4.10 A"/>
    <property type="chains" value="E=2-238"/>
</dbReference>
<dbReference type="PDB" id="8DN5">
    <property type="method" value="EM"/>
    <property type="resolution" value="3.63 A"/>
    <property type="chains" value="E=2-238"/>
</dbReference>
<dbReference type="PDB" id="8DPD">
    <property type="method" value="X-ray"/>
    <property type="resolution" value="1.51 A"/>
    <property type="chains" value="A=2-238"/>
</dbReference>
<dbReference type="PDB" id="8DTA">
    <property type="method" value="X-ray"/>
    <property type="resolution" value="1.81 A"/>
    <property type="chains" value="A=2-238"/>
</dbReference>
<dbReference type="PDB" id="8ET3">
    <property type="method" value="EM"/>
    <property type="resolution" value="3.70 A"/>
    <property type="chains" value="S=3-238"/>
</dbReference>
<dbReference type="PDB" id="8F6P">
    <property type="method" value="EM"/>
    <property type="resolution" value="3.20 A"/>
    <property type="chains" value="A=2-238"/>
</dbReference>
<dbReference type="PDB" id="8FCK">
    <property type="method" value="EM"/>
    <property type="resolution" value="6.88 A"/>
    <property type="chains" value="E=2-238"/>
</dbReference>
<dbReference type="PDB" id="8FED">
    <property type="method" value="EM"/>
    <property type="resolution" value="2.76 A"/>
    <property type="chains" value="G/H=33-238"/>
</dbReference>
<dbReference type="PDB" id="8FEE">
    <property type="method" value="EM"/>
    <property type="resolution" value="2.90 A"/>
    <property type="chains" value="G/H=33-238"/>
</dbReference>
<dbReference type="PDB" id="8FEF">
    <property type="method" value="EM"/>
    <property type="resolution" value="2.71 A"/>
    <property type="chains" value="G/H=33-238"/>
</dbReference>
<dbReference type="PDB" id="8G0I">
    <property type="method" value="X-ray"/>
    <property type="resolution" value="2.20 A"/>
    <property type="chains" value="A=2-238"/>
</dbReference>
<dbReference type="PDB" id="8G4E">
    <property type="method" value="EM"/>
    <property type="resolution" value="2.98 A"/>
    <property type="chains" value="B=1-231"/>
</dbReference>
<dbReference type="PDB" id="8HCO">
    <property type="method" value="EM"/>
    <property type="resolution" value="4.10 A"/>
    <property type="chains" value="G=2-232"/>
</dbReference>
<dbReference type="PDB" id="8IYY">
    <property type="method" value="X-ray"/>
    <property type="resolution" value="2.30 A"/>
    <property type="chains" value="A=2-238"/>
</dbReference>
<dbReference type="PDB" id="8IYZ">
    <property type="method" value="X-ray"/>
    <property type="resolution" value="1.99 A"/>
    <property type="chains" value="A=2-238"/>
</dbReference>
<dbReference type="PDB" id="8IZ0">
    <property type="method" value="X-ray"/>
    <property type="resolution" value="2.10 A"/>
    <property type="chains" value="A=2-238"/>
</dbReference>
<dbReference type="PDB" id="8IZ1">
    <property type="method" value="X-ray"/>
    <property type="resolution" value="1.66 A"/>
    <property type="chains" value="A=2-238"/>
</dbReference>
<dbReference type="PDB" id="8IZ2">
    <property type="method" value="X-ray"/>
    <property type="resolution" value="1.57 A"/>
    <property type="chains" value="A=2-238"/>
</dbReference>
<dbReference type="PDB" id="8IZ3">
    <property type="method" value="X-ray"/>
    <property type="resolution" value="2.18 A"/>
    <property type="chains" value="A=2-238"/>
</dbReference>
<dbReference type="PDB" id="8J0J">
    <property type="method" value="EM"/>
    <property type="resolution" value="2.70 A"/>
    <property type="chains" value="A/B/C=1-238"/>
</dbReference>
<dbReference type="PDB" id="8J1E">
    <property type="method" value="EM"/>
    <property type="resolution" value="3.84 A"/>
    <property type="chains" value="A/B/C=1-238"/>
</dbReference>
<dbReference type="PDB" id="8J6O">
    <property type="method" value="EM"/>
    <property type="resolution" value="3.25 A"/>
    <property type="chains" value="A/B=3-236"/>
</dbReference>
<dbReference type="PDB" id="8J7H">
    <property type="method" value="EM"/>
    <property type="resolution" value="3.30 A"/>
    <property type="chains" value="A/B/C/D=2-235"/>
</dbReference>
<dbReference type="PDB" id="8JF7">
    <property type="method" value="EM"/>
    <property type="resolution" value="7.73 A"/>
    <property type="chains" value="B/D=2-238"/>
</dbReference>
<dbReference type="PDB" id="8JKC">
    <property type="method" value="X-ray"/>
    <property type="resolution" value="1.95 A"/>
    <property type="chains" value="A/B/C/D=1-238"/>
</dbReference>
<dbReference type="PDB" id="8JKG">
    <property type="method" value="X-ray"/>
    <property type="resolution" value="2.20 A"/>
    <property type="chains" value="A/B/C/D=1-238"/>
</dbReference>
<dbReference type="PDB" id="8JKI">
    <property type="method" value="X-ray"/>
    <property type="resolution" value="2.10 A"/>
    <property type="chains" value="A/B/C/D=1-238"/>
</dbReference>
<dbReference type="PDB" id="8JL2">
    <property type="method" value="X-ray"/>
    <property type="resolution" value="1.76 A"/>
    <property type="chains" value="A/B/C/D=1-238"/>
</dbReference>
<dbReference type="PDB" id="8JL5">
    <property type="method" value="X-ray"/>
    <property type="resolution" value="1.80 A"/>
    <property type="chains" value="A/B/C/D=1-238"/>
</dbReference>
<dbReference type="PDB" id="8JL6">
    <property type="method" value="X-ray"/>
    <property type="resolution" value="2.88 A"/>
    <property type="chains" value="A/B/C/D=1-238"/>
</dbReference>
<dbReference type="PDB" id="8JL7">
    <property type="method" value="X-ray"/>
    <property type="resolution" value="1.76 A"/>
    <property type="chains" value="A/B=1-238"/>
</dbReference>
<dbReference type="PDB" id="8JLL">
    <property type="method" value="X-ray"/>
    <property type="resolution" value="2.69 A"/>
    <property type="chains" value="A/B/C/D=1-238"/>
</dbReference>
<dbReference type="PDB" id="8JLM">
    <property type="method" value="X-ray"/>
    <property type="resolution" value="1.85 A"/>
    <property type="chains" value="A=1-238"/>
</dbReference>
<dbReference type="PDB" id="8JLS">
    <property type="method" value="X-ray"/>
    <property type="resolution" value="1.45 A"/>
    <property type="chains" value="A=1-238"/>
</dbReference>
<dbReference type="PDB" id="8JLT">
    <property type="method" value="X-ray"/>
    <property type="resolution" value="1.94 A"/>
    <property type="chains" value="A/B=1-238"/>
</dbReference>
<dbReference type="PDB" id="8JLU">
    <property type="method" value="X-ray"/>
    <property type="resolution" value="2.09 A"/>
    <property type="chains" value="A/B/C/D=1-238"/>
</dbReference>
<dbReference type="PDB" id="8K4S">
    <property type="method" value="EM"/>
    <property type="resolution" value="2.90 A"/>
    <property type="chains" value="E=2-235"/>
</dbReference>
<dbReference type="PDB" id="8KEX">
    <property type="method" value="EM"/>
    <property type="resolution" value="3.20 A"/>
    <property type="chains" value="E=2-235"/>
</dbReference>
<dbReference type="PDB" id="8OTS">
    <property type="method" value="EM"/>
    <property type="resolution" value="3.30 A"/>
    <property type="chains" value="K=2-238"/>
</dbReference>
<dbReference type="PDB" id="8OVN">
    <property type="method" value="X-ray"/>
    <property type="resolution" value="2.60 A"/>
    <property type="chains" value="A=1-162"/>
</dbReference>
<dbReference type="PDB" id="8OVO">
    <property type="method" value="X-ray"/>
    <property type="resolution" value="1.70 A"/>
    <property type="chains" value="A/B=1-162"/>
</dbReference>
<dbReference type="PDB" id="8OVP">
    <property type="method" value="X-ray"/>
    <property type="resolution" value="1.70 A"/>
    <property type="chains" value="A/B=1-162"/>
</dbReference>
<dbReference type="PDB" id="8OVY">
    <property type="method" value="X-ray"/>
    <property type="resolution" value="1.54 A"/>
    <property type="chains" value="A/B=2-238"/>
</dbReference>
<dbReference type="PDB" id="8PKO">
    <property type="method" value="EM"/>
    <property type="resolution" value="2.60 A"/>
    <property type="chains" value="A=6-238"/>
</dbReference>
<dbReference type="PDB" id="8QWJ">
    <property type="method" value="X-ray"/>
    <property type="resolution" value="1.50 A"/>
    <property type="chains" value="A=2-238"/>
</dbReference>
<dbReference type="PDB" id="8RL9">
    <property type="method" value="EM"/>
    <property type="resolution" value="3.22 A"/>
    <property type="chains" value="B=1-238"/>
</dbReference>
<dbReference type="PDB" id="8RLB">
    <property type="method" value="EM"/>
    <property type="resolution" value="2.99 A"/>
    <property type="chains" value="B=1-238"/>
</dbReference>
<dbReference type="PDB" id="8RLC">
    <property type="method" value="EM"/>
    <property type="resolution" value="3.90 A"/>
    <property type="chains" value="B=1-238"/>
</dbReference>
<dbReference type="PDB" id="8RLE">
    <property type="method" value="EM"/>
    <property type="resolution" value="3.75 A"/>
    <property type="chains" value="B=1-238"/>
</dbReference>
<dbReference type="PDB" id="8SFS">
    <property type="method" value="X-ray"/>
    <property type="resolution" value="2.37 A"/>
    <property type="chains" value="A/B=2-238"/>
</dbReference>
<dbReference type="PDB" id="8SFV">
    <property type="method" value="X-ray"/>
    <property type="resolution" value="1.83 A"/>
    <property type="chains" value="A=2-238"/>
</dbReference>
<dbReference type="PDB" id="8SFX">
    <property type="method" value="X-ray"/>
    <property type="resolution" value="1.95 A"/>
    <property type="chains" value="A/B=2-238"/>
</dbReference>
<dbReference type="PDB" id="8SFZ">
    <property type="method" value="X-ray"/>
    <property type="resolution" value="1.90 A"/>
    <property type="chains" value="D/E/F=2-238"/>
</dbReference>
<dbReference type="PDB" id="8SG3">
    <property type="method" value="X-ray"/>
    <property type="resolution" value="3.11 A"/>
    <property type="chains" value="A=2-238"/>
</dbReference>
<dbReference type="PDB" id="8SLC">
    <property type="method" value="X-ray"/>
    <property type="resolution" value="2.97 A"/>
    <property type="chains" value="A/B=2-238"/>
</dbReference>
<dbReference type="PDB" id="8SMU">
    <property type="method" value="X-ray"/>
    <property type="resolution" value="2.45 A"/>
    <property type="chains" value="A/B/C/D=40-238"/>
</dbReference>
<dbReference type="PDB" id="8SYG">
    <property type="method" value="EM"/>
    <property type="resolution" value="2.60 A"/>
    <property type="chains" value="A/B/C/D/E/F/G/H/I/J/K/L/M/N=2-238"/>
</dbReference>
<dbReference type="PDB" id="8T15">
    <property type="method" value="EM"/>
    <property type="resolution" value="2.70 A"/>
    <property type="chains" value="A/B/C/D/E/F/G/H/I/J/K/L=2-238"/>
</dbReference>
<dbReference type="PDB" id="8T17">
    <property type="method" value="EM"/>
    <property type="resolution" value="2.60 A"/>
    <property type="chains" value="A/B/C/D/E/F/G/H/I/J/K/L/M/N=2-238"/>
</dbReference>
<dbReference type="PDB" id="8T18">
    <property type="method" value="EM"/>
    <property type="resolution" value="2.60 A"/>
    <property type="chains" value="A/B/C/D/E/F/G/H/I/J/K/L=2-238"/>
</dbReference>
<dbReference type="PDB" id="8T6K">
    <property type="method" value="EM"/>
    <property type="resolution" value="3.00 A"/>
    <property type="chains" value="A/B/C/D/E/F/G/H/I/J/K/L/M/N=2-238"/>
</dbReference>
<dbReference type="PDB" id="8T6L">
    <property type="method" value="EM"/>
    <property type="resolution" value="3.30 A"/>
    <property type="chains" value="A=2-238"/>
</dbReference>
<dbReference type="PDB" id="8T6Q">
    <property type="method" value="EM"/>
    <property type="resolution" value="3.50 A"/>
    <property type="chains" value="A/B/C/D/F/G/H/I/J/K/L/N=2-238"/>
</dbReference>
<dbReference type="PDB" id="8TLM">
    <property type="method" value="EM"/>
    <property type="resolution" value="2.90 A"/>
    <property type="chains" value="C=2-238"/>
</dbReference>
<dbReference type="PDB" id="8TU9">
    <property type="method" value="EM"/>
    <property type="resolution" value="3.26 A"/>
    <property type="chains" value="A/B=1-238"/>
</dbReference>
<dbReference type="PDB" id="8U4N">
    <property type="method" value="EM"/>
    <property type="resolution" value="2.72 A"/>
    <property type="chains" value="R=1-238"/>
</dbReference>
<dbReference type="PDB" id="8U4O">
    <property type="method" value="EM"/>
    <property type="resolution" value="3.29 A"/>
    <property type="chains" value="R=1-238"/>
</dbReference>
<dbReference type="PDB" id="8U4P">
    <property type="method" value="EM"/>
    <property type="resolution" value="3.15 A"/>
    <property type="chains" value="R=1-238"/>
</dbReference>
<dbReference type="PDB" id="8U4Q">
    <property type="method" value="EM"/>
    <property type="resolution" value="3.36 A"/>
    <property type="chains" value="R=1-238"/>
</dbReference>
<dbReference type="PDB" id="8U4R">
    <property type="method" value="EM"/>
    <property type="resolution" value="3.10 A"/>
    <property type="chains" value="R=1-238"/>
</dbReference>
<dbReference type="PDB" id="8U4S">
    <property type="method" value="EM"/>
    <property type="resolution" value="3.35 A"/>
    <property type="chains" value="C/G/R=1-238"/>
</dbReference>
<dbReference type="PDB" id="8UQQ">
    <property type="method" value="X-ray"/>
    <property type="resolution" value="1.57 A"/>
    <property type="chains" value="A=1-174"/>
</dbReference>
<dbReference type="PDB" id="8VDP">
    <property type="method" value="EM"/>
    <property type="resolution" value="3.40 A"/>
    <property type="chains" value="A=2-238"/>
</dbReference>
<dbReference type="PDB" id="8VDQ">
    <property type="method" value="EM"/>
    <property type="resolution" value="5.50 A"/>
    <property type="chains" value="A=2-238"/>
</dbReference>
<dbReference type="PDB" id="8VDR">
    <property type="method" value="EM"/>
    <property type="resolution" value="3.70 A"/>
    <property type="chains" value="A=1-238"/>
</dbReference>
<dbReference type="PDB" id="8W2L">
    <property type="method" value="EM"/>
    <property type="resolution" value="2.45 A"/>
    <property type="chains" value="A/B/C/D=2-238"/>
</dbReference>
<dbReference type="PDB" id="8WG3">
    <property type="method" value="EM"/>
    <property type="resolution" value="3.40 A"/>
    <property type="chains" value="A=2-238"/>
</dbReference>
<dbReference type="PDB" id="8WG4">
    <property type="method" value="EM"/>
    <property type="resolution" value="3.50 A"/>
    <property type="chains" value="A=2-238"/>
</dbReference>
<dbReference type="PDB" id="8X9P">
    <property type="method" value="EM"/>
    <property type="resolution" value="3.54 A"/>
    <property type="chains" value="C=2-217"/>
</dbReference>
<dbReference type="PDB" id="8XTW">
    <property type="method" value="EM"/>
    <property type="resolution" value="3.30 A"/>
    <property type="chains" value="A=2-204"/>
</dbReference>
<dbReference type="PDB" id="8XTX">
    <property type="method" value="EM"/>
    <property type="resolution" value="3.40 A"/>
    <property type="chains" value="A=1-229"/>
</dbReference>
<dbReference type="PDB" id="8XTY">
    <property type="method" value="EM"/>
    <property type="resolution" value="2.70 A"/>
    <property type="chains" value="A=1-229"/>
</dbReference>
<dbReference type="PDB" id="8YA0">
    <property type="method" value="EM"/>
    <property type="resolution" value="2.97 A"/>
    <property type="chains" value="G=3-229"/>
</dbReference>
<dbReference type="PDB" id="8YA2">
    <property type="method" value="EM"/>
    <property type="resolution" value="3.84 A"/>
    <property type="chains" value="G=3-229"/>
</dbReference>
<dbReference type="PDB" id="8ZUP">
    <property type="method" value="X-ray"/>
    <property type="resolution" value="1.20 A"/>
    <property type="chains" value="A=2-231"/>
</dbReference>
<dbReference type="PDB" id="8ZUQ">
    <property type="method" value="X-ray"/>
    <property type="resolution" value="1.48 A"/>
    <property type="chains" value="A=2-231"/>
</dbReference>
<dbReference type="PDB" id="8ZUR">
    <property type="method" value="X-ray"/>
    <property type="resolution" value="1.20 A"/>
    <property type="chains" value="A=2-231"/>
</dbReference>
<dbReference type="PDB" id="8ZUS">
    <property type="method" value="X-ray"/>
    <property type="resolution" value="1.20 A"/>
    <property type="chains" value="A=2-231"/>
</dbReference>
<dbReference type="PDB" id="8ZUT">
    <property type="method" value="X-ray"/>
    <property type="resolution" value="1.48 A"/>
    <property type="chains" value="A=2-231"/>
</dbReference>
<dbReference type="PDB" id="9BOI">
    <property type="method" value="EM"/>
    <property type="resolution" value="3.22 A"/>
    <property type="chains" value="A=2-238"/>
</dbReference>
<dbReference type="PDB" id="9C74">
    <property type="method" value="X-ray"/>
    <property type="resolution" value="1.51 A"/>
    <property type="chains" value="A=1-238"/>
</dbReference>
<dbReference type="PDB" id="9F22">
    <property type="method" value="X-ray"/>
    <property type="resolution" value="2.20 A"/>
    <property type="chains" value="A=2-238"/>
</dbReference>
<dbReference type="PDB" id="9F23">
    <property type="method" value="X-ray"/>
    <property type="resolution" value="1.59 A"/>
    <property type="chains" value="A/C=2-238"/>
</dbReference>
<dbReference type="PDB" id="9F24">
    <property type="method" value="X-ray"/>
    <property type="resolution" value="2.06 A"/>
    <property type="chains" value="A=2-238"/>
</dbReference>
<dbReference type="PDB" id="9F33">
    <property type="method" value="EM"/>
    <property type="resolution" value="3.05 A"/>
    <property type="chains" value="R=2-238"/>
</dbReference>
<dbReference type="PDB" id="9F34">
    <property type="method" value="EM"/>
    <property type="resolution" value="3.09 A"/>
    <property type="chains" value="R=2-238"/>
</dbReference>
<dbReference type="PDB" id="9GE2">
    <property type="method" value="EM"/>
    <property type="resolution" value="2.51 A"/>
    <property type="chains" value="R=3-238"/>
</dbReference>
<dbReference type="PDB" id="9GE3">
    <property type="method" value="EM"/>
    <property type="resolution" value="2.87 A"/>
    <property type="chains" value="R=3-238"/>
</dbReference>
<dbReference type="PDB" id="9J97">
    <property type="method" value="EM"/>
    <property type="resolution" value="3.30 A"/>
    <property type="chains" value="A/B=2-238"/>
</dbReference>
<dbReference type="PDB" id="9J98">
    <property type="method" value="EM"/>
    <property type="resolution" value="3.33 A"/>
    <property type="chains" value="A/B=2-238"/>
</dbReference>
<dbReference type="PDBsum" id="1B9C"/>
<dbReference type="PDBsum" id="1BFP"/>
<dbReference type="PDBsum" id="1C4F"/>
<dbReference type="PDBsum" id="1CV7"/>
<dbReference type="PDBsum" id="1EMA"/>
<dbReference type="PDBsum" id="1EMB"/>
<dbReference type="PDBsum" id="1EMC"/>
<dbReference type="PDBsum" id="1EME"/>
<dbReference type="PDBsum" id="1EMF"/>
<dbReference type="PDBsum" id="1EMG"/>
<dbReference type="PDBsum" id="1EMK"/>
<dbReference type="PDBsum" id="1EML"/>
<dbReference type="PDBsum" id="1EMM"/>
<dbReference type="PDBsum" id="1F09"/>
<dbReference type="PDBsum" id="1F0B"/>
<dbReference type="PDBsum" id="1GFL"/>
<dbReference type="PDBsum" id="1H6R"/>
<dbReference type="PDBsum" id="1HCJ"/>
<dbReference type="PDBsum" id="1HUY"/>
<dbReference type="PDBsum" id="1JBY"/>
<dbReference type="PDBsum" id="1JBZ"/>
<dbReference type="PDBsum" id="1JC0"/>
<dbReference type="PDBsum" id="1JC1"/>
<dbReference type="PDBsum" id="1KP5"/>
<dbReference type="PDBsum" id="1KYP"/>
<dbReference type="PDBsum" id="1KYR"/>
<dbReference type="PDBsum" id="1KYS"/>
<dbReference type="PDBsum" id="1MYW"/>
<dbReference type="PDBsum" id="1Q4A"/>
<dbReference type="PDBsum" id="1Q4B"/>
<dbReference type="PDBsum" id="1Q4C"/>
<dbReference type="PDBsum" id="1Q4D"/>
<dbReference type="PDBsum" id="1Q4E"/>
<dbReference type="PDBsum" id="1Q73"/>
<dbReference type="PDBsum" id="1QXT"/>
<dbReference type="PDBsum" id="1QY3"/>
<dbReference type="PDBsum" id="1QYF"/>
<dbReference type="PDBsum" id="1QYO"/>
<dbReference type="PDBsum" id="1QYQ"/>
<dbReference type="PDBsum" id="1RM9"/>
<dbReference type="PDBsum" id="1RMM"/>
<dbReference type="PDBsum" id="1RMO"/>
<dbReference type="PDBsum" id="1RMP"/>
<dbReference type="PDBsum" id="1RRX"/>
<dbReference type="PDBsum" id="1S6Z"/>
<dbReference type="PDBsum" id="1W7S"/>
<dbReference type="PDBsum" id="1W7T"/>
<dbReference type="PDBsum" id="1W7U"/>
<dbReference type="PDBsum" id="1YFP"/>
<dbReference type="PDBsum" id="1YHG"/>
<dbReference type="PDBsum" id="1YHH"/>
<dbReference type="PDBsum" id="1YHI"/>
<dbReference type="PDBsum" id="1YJ2"/>
<dbReference type="PDBsum" id="1YJF"/>
<dbReference type="PDBsum" id="1Z1P"/>
<dbReference type="PDBsum" id="1Z1Q"/>
<dbReference type="PDBsum" id="2AH8"/>
<dbReference type="PDBsum" id="2AHA"/>
<dbReference type="PDBsum" id="2AWJ"/>
<dbReference type="PDBsum" id="2AWK"/>
<dbReference type="PDBsum" id="2AWL"/>
<dbReference type="PDBsum" id="2AWM"/>
<dbReference type="PDBsum" id="2B3P"/>
<dbReference type="PDBsum" id="2B3Q"/>
<dbReference type="PDBsum" id="2DUE"/>
<dbReference type="PDBsum" id="2DUF"/>
<dbReference type="PDBsum" id="2DUG"/>
<dbReference type="PDBsum" id="2DUH"/>
<dbReference type="PDBsum" id="2DUI"/>
<dbReference type="PDBsum" id="2EMD"/>
<dbReference type="PDBsum" id="2EMN"/>
<dbReference type="PDBsum" id="2EMO"/>
<dbReference type="PDBsum" id="2FWQ"/>
<dbReference type="PDBsum" id="2FZU"/>
<dbReference type="PDBsum" id="2G16"/>
<dbReference type="PDBsum" id="2G2S"/>
<dbReference type="PDBsum" id="2G3D"/>
<dbReference type="PDBsum" id="2G5Z"/>
<dbReference type="PDBsum" id="2G6E"/>
<dbReference type="PDBsum" id="2H6V"/>
<dbReference type="PDBsum" id="2H9W"/>
<dbReference type="PDBsum" id="2HCG"/>
<dbReference type="PDBsum" id="2HFC"/>
<dbReference type="PDBsum" id="2HGD"/>
<dbReference type="PDBsum" id="2HGY"/>
<dbReference type="PDBsum" id="2HJO"/>
<dbReference type="PDBsum" id="2HQZ"/>
<dbReference type="PDBsum" id="2HRS"/>
<dbReference type="PDBsum" id="2JAD"/>
<dbReference type="PDBsum" id="2O24"/>
<dbReference type="PDBsum" id="2O29"/>
<dbReference type="PDBsum" id="2O2B"/>
<dbReference type="PDBsum" id="2OKW"/>
<dbReference type="PDBsum" id="2OKY"/>
<dbReference type="PDBsum" id="2Q57"/>
<dbReference type="PDBsum" id="2Q6P"/>
<dbReference type="PDBsum" id="2QRF"/>
<dbReference type="PDBsum" id="2QT2"/>
<dbReference type="PDBsum" id="2QU1"/>
<dbReference type="PDBsum" id="2QZ0"/>
<dbReference type="PDBsum" id="2WSN"/>
<dbReference type="PDBsum" id="2WSO"/>
<dbReference type="PDBsum" id="2WUR"/>
<dbReference type="PDBsum" id="2Y0G"/>
<dbReference type="PDBsum" id="2YDZ"/>
<dbReference type="PDBsum" id="2YE0"/>
<dbReference type="PDBsum" id="2YE1"/>
<dbReference type="PDBsum" id="2YFP"/>
<dbReference type="PDBsum" id="3AI4"/>
<dbReference type="PDBsum" id="3AI5"/>
<dbReference type="PDBsum" id="3CB9"/>
<dbReference type="PDBsum" id="3CBE"/>
<dbReference type="PDBsum" id="3CD1"/>
<dbReference type="PDBsum" id="3CD9"/>
<dbReference type="PDBsum" id="3DPW"/>
<dbReference type="PDBsum" id="3DPX"/>
<dbReference type="PDBsum" id="3DPZ"/>
<dbReference type="PDBsum" id="3DQ1"/>
<dbReference type="PDBsum" id="3DQ2"/>
<dbReference type="PDBsum" id="3DQ3"/>
<dbReference type="PDBsum" id="3DQ4"/>
<dbReference type="PDBsum" id="3DQ5"/>
<dbReference type="PDBsum" id="3DQ6"/>
<dbReference type="PDBsum" id="3DQ7"/>
<dbReference type="PDBsum" id="3DQ8"/>
<dbReference type="PDBsum" id="3DQ9"/>
<dbReference type="PDBsum" id="3DQA"/>
<dbReference type="PDBsum" id="3DQC"/>
<dbReference type="PDBsum" id="3DQD"/>
<dbReference type="PDBsum" id="3DQE"/>
<dbReference type="PDBsum" id="3DQF"/>
<dbReference type="PDBsum" id="3DQH"/>
<dbReference type="PDBsum" id="3DQI"/>
<dbReference type="PDBsum" id="3DQJ"/>
<dbReference type="PDBsum" id="3DQK"/>
<dbReference type="PDBsum" id="3DQL"/>
<dbReference type="PDBsum" id="3DQM"/>
<dbReference type="PDBsum" id="3DQN"/>
<dbReference type="PDBsum" id="3DQO"/>
<dbReference type="PDBsum" id="3DQU"/>
<dbReference type="PDBsum" id="3ED8"/>
<dbReference type="PDBsum" id="3EK4"/>
<dbReference type="PDBsum" id="3EK7"/>
<dbReference type="PDBsum" id="3EK8"/>
<dbReference type="PDBsum" id="3EKH"/>
<dbReference type="PDBsum" id="3EKJ"/>
<dbReference type="PDBsum" id="3EVP"/>
<dbReference type="PDBsum" id="3EVR"/>
<dbReference type="PDBsum" id="3EVU"/>
<dbReference type="PDBsum" id="3EVV"/>
<dbReference type="PDBsum" id="3G9A"/>
<dbReference type="PDBsum" id="3GEX"/>
<dbReference type="PDBsum" id="3GJ1"/>
<dbReference type="PDBsum" id="3GJ2"/>
<dbReference type="PDBsum" id="3I19"/>
<dbReference type="PDBsum" id="3K1K"/>
<dbReference type="PDBsum" id="3LA1"/>
<dbReference type="PDBsum" id="3O77"/>
<dbReference type="PDBsum" id="3O78"/>
<dbReference type="PDBsum" id="3OGO"/>
<dbReference type="PDBsum" id="3OSQ"/>
<dbReference type="PDBsum" id="3OSR"/>
<dbReference type="PDBsum" id="3P28"/>
<dbReference type="PDBsum" id="3SG2"/>
<dbReference type="PDBsum" id="3SG3"/>
<dbReference type="PDBsum" id="3SG4"/>
<dbReference type="PDBsum" id="3SG5"/>
<dbReference type="PDBsum" id="3SG6"/>
<dbReference type="PDBsum" id="3SG7"/>
<dbReference type="PDBsum" id="3SRY"/>
<dbReference type="PDBsum" id="3SS0"/>
<dbReference type="PDBsum" id="3SSH"/>
<dbReference type="PDBsum" id="3SSK"/>
<dbReference type="PDBsum" id="3SSL"/>
<dbReference type="PDBsum" id="3SSP"/>
<dbReference type="PDBsum" id="3SST"/>
<dbReference type="PDBsum" id="3SSV"/>
<dbReference type="PDBsum" id="3SSY"/>
<dbReference type="PDBsum" id="3ST0"/>
<dbReference type="PDBsum" id="3SV5"/>
<dbReference type="PDBsum" id="3SVB"/>
<dbReference type="PDBsum" id="3SVC"/>
<dbReference type="PDBsum" id="3SVD"/>
<dbReference type="PDBsum" id="3SVE"/>
<dbReference type="PDBsum" id="3U8P"/>
<dbReference type="PDBsum" id="3UFZ"/>
<dbReference type="PDBsum" id="3UG0"/>
<dbReference type="PDBsum" id="3V3D"/>
<dbReference type="PDBsum" id="3VHT"/>
<dbReference type="PDBsum" id="3W1C"/>
<dbReference type="PDBsum" id="3W1D"/>
<dbReference type="PDBsum" id="3WLC"/>
<dbReference type="PDBsum" id="3WLD"/>
<dbReference type="PDBsum" id="3ZTF"/>
<dbReference type="PDBsum" id="4ANJ"/>
<dbReference type="PDBsum" id="4AR7"/>
<dbReference type="PDBsum" id="4AS8"/>
<dbReference type="PDBsum" id="4B5Y"/>
<dbReference type="PDBsum" id="4BDU"/>
<dbReference type="PDBsum" id="4EN1"/>
<dbReference type="PDBsum" id="4EUL"/>
<dbReference type="PDBsum" id="4GES"/>
<dbReference type="PDBsum" id="4GF6"/>
<dbReference type="PDBsum" id="4H47"/>
<dbReference type="PDBsum" id="4H48"/>
<dbReference type="PDBsum" id="4IK1"/>
<dbReference type="PDBsum" id="4IK3"/>
<dbReference type="PDBsum" id="4IK4"/>
<dbReference type="PDBsum" id="4IK5"/>
<dbReference type="PDBsum" id="4IK8"/>
<dbReference type="PDBsum" id="4IK9"/>
<dbReference type="PDBsum" id="4J88"/>
<dbReference type="PDBsum" id="4J89"/>
<dbReference type="PDBsum" id="4J8A"/>
<dbReference type="PDBsum" id="4JFG"/>
<dbReference type="PDBsum" id="4JRB"/>
<dbReference type="PDBsum" id="4KA9"/>
<dbReference type="PDBsum" id="4KAG"/>
<dbReference type="PDBsum" id="4KEX"/>
<dbReference type="PDBsum" id="4KF5"/>
<dbReference type="PDBsum" id="4KW4"/>
<dbReference type="PDBsum" id="4KW8"/>
<dbReference type="PDBsum" id="4KW9"/>
<dbReference type="PDBsum" id="4L12"/>
<dbReference type="PDBsum" id="4L13"/>
<dbReference type="PDBsum" id="4L1I"/>
<dbReference type="PDBsum" id="4LQT"/>
<dbReference type="PDBsum" id="4LQU"/>
<dbReference type="PDBsum" id="4LW5"/>
<dbReference type="PDBsum" id="4N3D"/>
<dbReference type="PDBsum" id="4NDJ"/>
<dbReference type="PDBsum" id="4NDK"/>
<dbReference type="PDBsum" id="4OGS"/>
<dbReference type="PDBsum" id="4ORN"/>
<dbReference type="PDBsum" id="4P1Q"/>
<dbReference type="PDBsum" id="4P7H"/>
<dbReference type="PDBsum" id="4PA0"/>
<dbReference type="PDBsum" id="4PFE"/>
<dbReference type="PDBsum" id="4U2V"/>
<dbReference type="PDBsum" id="4XBI"/>
<dbReference type="PDBsum" id="4XGY"/>
<dbReference type="PDBsum" id="4XL5"/>
<dbReference type="PDBsum" id="4XOV"/>
<dbReference type="PDBsum" id="4XOW"/>
<dbReference type="PDBsum" id="4XVP"/>
<dbReference type="PDBsum" id="4Z4K"/>
<dbReference type="PDBsum" id="4Z4M"/>
<dbReference type="PDBsum" id="4ZF3"/>
<dbReference type="PDBsum" id="4ZF4"/>
<dbReference type="PDBsum" id="4ZF5"/>
<dbReference type="PDBsum" id="5AQB"/>
<dbReference type="PDBsum" id="5B61"/>
<dbReference type="PDBsum" id="5BKF"/>
<dbReference type="PDBsum" id="5BKG"/>
<dbReference type="PDBsum" id="5DPG"/>
<dbReference type="PDBsum" id="5DPH"/>
<dbReference type="PDBsum" id="5DPI"/>
<dbReference type="PDBsum" id="5DPJ"/>
<dbReference type="PDBsum" id="5DQB"/>
<dbReference type="PDBsum" id="5DQM"/>
<dbReference type="PDBsum" id="5DRF"/>
<dbReference type="PDBsum" id="5DRG"/>
<dbReference type="PDBsum" id="5DTX"/>
<dbReference type="PDBsum" id="5DTY"/>
<dbReference type="PDBsum" id="5DTZ"/>
<dbReference type="PDBsum" id="5DU0"/>
<dbReference type="PDBsum" id="5EHU"/>
<dbReference type="PDBsum" id="5F9G"/>
<dbReference type="PDBsum" id="5FGU"/>
<dbReference type="PDBsum" id="5HBD"/>
<dbReference type="PDBsum" id="5HGE"/>
<dbReference type="PDBsum" id="5HW9"/>
<dbReference type="PDBsum" id="5HZO"/>
<dbReference type="PDBsum" id="5J2O"/>
<dbReference type="PDBsum" id="5J3N"/>
<dbReference type="PDBsum" id="5JZK"/>
<dbReference type="PDBsum" id="5JZL"/>
<dbReference type="PDBsum" id="5KTG"/>
<dbReference type="PDBsum" id="5LEL"/>
<dbReference type="PDBsum" id="5LEM"/>
<dbReference type="PDBsum" id="5MA3"/>
<dbReference type="PDBsum" id="5MA4"/>
<dbReference type="PDBsum" id="5MA5"/>
<dbReference type="PDBsum" id="5MA6"/>
<dbReference type="PDBsum" id="5MA8"/>
<dbReference type="PDBsum" id="5MA9"/>
<dbReference type="PDBsum" id="5MAD"/>
<dbReference type="PDBsum" id="5MAK"/>
<dbReference type="PDBsum" id="5MSE"/>
<dbReference type="PDBsum" id="5N9O"/>
<dbReference type="PDBsum" id="5NHN"/>
<dbReference type="PDBsum" id="5NI3"/>
<dbReference type="PDBsum" id="5O89"/>
<dbReference type="PDBsum" id="5O8B"/>
<dbReference type="PDBsum" id="5O8C"/>
<dbReference type="PDBsum" id="5OX8"/>
<dbReference type="PDBsum" id="5OX9"/>
<dbReference type="PDBsum" id="5OXA"/>
<dbReference type="PDBsum" id="5OXB"/>
<dbReference type="PDBsum" id="5OXC"/>
<dbReference type="PDBsum" id="5T3I"/>
<dbReference type="PDBsum" id="5WJ2"/>
<dbReference type="PDBsum" id="5WJ3"/>
<dbReference type="PDBsum" id="5WJ4"/>
<dbReference type="PDBsum" id="5Z6Y"/>
<dbReference type="PDBsum" id="6AA2"/>
<dbReference type="PDBsum" id="6AA6"/>
<dbReference type="PDBsum" id="6AS9"/>
<dbReference type="PDBsum" id="6B7R"/>
<dbReference type="PDBsum" id="6B7T"/>
<dbReference type="PDBsum" id="6B9C"/>
<dbReference type="PDBsum" id="6DQ0"/>
<dbReference type="PDBsum" id="6DQ1"/>
<dbReference type="PDBsum" id="6EFR"/>
<dbReference type="PDBsum" id="6FLL"/>
<dbReference type="PDBsum" id="6FWW"/>
<dbReference type="PDBsum" id="6GEL"/>
<dbReference type="PDBsum" id="6GEZ"/>
<dbReference type="PDBsum" id="6GO8"/>
<dbReference type="PDBsum" id="6GO9"/>
<dbReference type="PDBsum" id="6GQG"/>
<dbReference type="PDBsum" id="6GQH"/>
<dbReference type="PDBsum" id="6GRM"/>
<dbReference type="PDBsum" id="6HR1"/>
<dbReference type="PDBsum" id="6HUT"/>
<dbReference type="PDBsum" id="6IR6"/>
<dbReference type="PDBsum" id="6IR7"/>
<dbReference type="PDBsum" id="6ITC"/>
<dbReference type="PDBsum" id="6JGH"/>
<dbReference type="PDBsum" id="6JGI"/>
<dbReference type="PDBsum" id="6JGJ"/>
<dbReference type="PDBsum" id="6KKZ"/>
<dbReference type="PDBsum" id="6KL0"/>
<dbReference type="PDBsum" id="6KL1"/>
<dbReference type="PDBsum" id="6KRG"/>
<dbReference type="PDBsum" id="6L27"/>
<dbReference type="PDBsum" id="6LNP"/>
<dbReference type="PDBsum" id="6LR7"/>
<dbReference type="PDBsum" id="6M63"/>
<dbReference type="PDBsum" id="6MB2"/>
<dbReference type="PDBsum" id="6MDR"/>
<dbReference type="PDBsum" id="6MKS"/>
<dbReference type="PDBsum" id="6MWQ"/>
<dbReference type="PDBsum" id="6OA8"/>
<dbReference type="PDBsum" id="6OFK"/>
<dbReference type="PDBsum" id="6OFL"/>
<dbReference type="PDBsum" id="6OFM"/>
<dbReference type="PDBsum" id="6OFN"/>
<dbReference type="PDBsum" id="6OFO"/>
<dbReference type="PDBsum" id="6OG8"/>
<dbReference type="PDBsum" id="6OG9"/>
<dbReference type="PDBsum" id="6OGA"/>
<dbReference type="PDBsum" id="6OGB"/>
<dbReference type="PDBsum" id="6OGC"/>
<dbReference type="PDBsum" id="6PFR"/>
<dbReference type="PDBsum" id="6PFS"/>
<dbReference type="PDBsum" id="6PFT"/>
<dbReference type="PDBsum" id="6PFU"/>
<dbReference type="PDBsum" id="6QQ8"/>
<dbReference type="PDBsum" id="6QQ9"/>
<dbReference type="PDBsum" id="6QQA"/>
<dbReference type="PDBsum" id="6QQB"/>
<dbReference type="PDBsum" id="6QUH"/>
<dbReference type="PDBsum" id="6QUI"/>
<dbReference type="PDBsum" id="6QUJ"/>
<dbReference type="PDBsum" id="6SM0"/>
<dbReference type="PDBsum" id="6T39"/>
<dbReference type="PDBsum" id="6T3A"/>
<dbReference type="PDBsum" id="6T90"/>
<dbReference type="PDBsum" id="6UHJ"/>
<dbReference type="PDBsum" id="6UHK"/>
<dbReference type="PDBsum" id="6UHL"/>
<dbReference type="PDBsum" id="6UHM"/>
<dbReference type="PDBsum" id="6UHN"/>
<dbReference type="PDBsum" id="6UHO"/>
<dbReference type="PDBsum" id="6UHP"/>
<dbReference type="PDBsum" id="6UHQ"/>
<dbReference type="PDBsum" id="6UHR"/>
<dbReference type="PDBsum" id="6UN4"/>
<dbReference type="PDBsum" id="6UN5"/>
<dbReference type="PDBsum" id="6UN6"/>
<dbReference type="PDBsum" id="6UN7"/>
<dbReference type="PDBsum" id="6UZ0"/>
<dbReference type="PDBsum" id="6UZ3"/>
<dbReference type="PDBsum" id="6VAL"/>
<dbReference type="PDBsum" id="6VAM"/>
<dbReference type="PDBsum" id="6VIO"/>
<dbReference type="PDBsum" id="6WRF"/>
<dbReference type="PDBsum" id="6WSG"/>
<dbReference type="PDBsum" id="6WV3"/>
<dbReference type="PDBsum" id="6WV4"/>
<dbReference type="PDBsum" id="6WV5"/>
<dbReference type="PDBsum" id="6WV6"/>
<dbReference type="PDBsum" id="6WV7"/>
<dbReference type="PDBsum" id="6WV8"/>
<dbReference type="PDBsum" id="6WV9"/>
<dbReference type="PDBsum" id="6WVA"/>
<dbReference type="PDBsum" id="6WVB"/>
<dbReference type="PDBsum" id="6WVD"/>
<dbReference type="PDBsum" id="6WVE"/>
<dbReference type="PDBsum" id="6WVF"/>
<dbReference type="PDBsum" id="6WVG"/>
<dbReference type="PDBsum" id="6WVH"/>
<dbReference type="PDBsum" id="6WVI"/>
<dbReference type="PDBsum" id="6XZF"/>
<dbReference type="PDBsum" id="6YOV"/>
<dbReference type="PDBsum" id="6ZUI"/>
<dbReference type="PDBsum" id="7A7K"/>
<dbReference type="PDBsum" id="7A7L"/>
<dbReference type="PDBsum" id="7AA5"/>
<dbReference type="PDBsum" id="7AMB"/>
<dbReference type="PDBsum" id="7AMF"/>
<dbReference type="PDBsum" id="7AMU"/>
<dbReference type="PDBsum" id="7BWN"/>
<dbReference type="PDBsum" id="7BYL"/>
<dbReference type="PDBsum" id="7BYM"/>
<dbReference type="PDBsum" id="7BYN"/>
<dbReference type="PDBsum" id="7CD7"/>
<dbReference type="PDBsum" id="7CD8"/>
<dbReference type="PDBsum" id="7EDJ"/>
<dbReference type="PDBsum" id="7FHK"/>
<dbReference type="PDBsum" id="7FHL"/>
<dbReference type="PDBsum" id="7FHN"/>
<dbReference type="PDBsum" id="7FHO"/>
<dbReference type="PDBsum" id="7K18"/>
<dbReference type="PDBsum" id="7KM4"/>
<dbReference type="PDBsum" id="7KS0"/>
<dbReference type="PDBsum" id="7KS3"/>
<dbReference type="PDBsum" id="7KUY"/>
<dbReference type="PDBsum" id="7L31"/>
<dbReference type="PDBsum" id="7O7C"/>
<dbReference type="PDBsum" id="7O7D"/>
<dbReference type="PDBsum" id="7O7E"/>
<dbReference type="PDBsum" id="7O7H"/>
<dbReference type="PDBsum" id="7O7U"/>
<dbReference type="PDBsum" id="7O7V"/>
<dbReference type="PDBsum" id="7O7W"/>
<dbReference type="PDBsum" id="7O7X"/>
<dbReference type="PDBsum" id="7PCA"/>
<dbReference type="PDBsum" id="7PCZ"/>
<dbReference type="PDBsum" id="7PD0"/>
<dbReference type="PDBsum" id="7PHR"/>
<dbReference type="PDBsum" id="7PNN"/>
<dbReference type="PDBsum" id="7SAH"/>
<dbReference type="PDBsum" id="7SAI"/>
<dbReference type="PDBsum" id="7SQY"/>
<dbReference type="PDBsum" id="7SSV"/>
<dbReference type="PDBsum" id="7SSX"/>
<dbReference type="PDBsum" id="7SSY"/>
<dbReference type="PDBsum" id="7SSZ"/>
<dbReference type="PDBsum" id="7SUN"/>
<dbReference type="PDBsum" id="7X5V"/>
<dbReference type="PDBsum" id="7YDQ"/>
<dbReference type="PDBsum" id="7YEU"/>
<dbReference type="PDBsum" id="7YV3"/>
<dbReference type="PDBsum" id="7YV5"/>
<dbReference type="PDBsum" id="8A6G"/>
<dbReference type="PDBsum" id="8A6N"/>
<dbReference type="PDBsum" id="8A6O"/>
<dbReference type="PDBsum" id="8A6P"/>
<dbReference type="PDBsum" id="8A6Q"/>
<dbReference type="PDBsum" id="8A6R"/>
<dbReference type="PDBsum" id="8A6S"/>
<dbReference type="PDBsum" id="8A7V"/>
<dbReference type="PDBsum" id="8A83"/>
<dbReference type="PDBsum" id="8AHA"/>
<dbReference type="PDBsum" id="8AHB"/>
<dbReference type="PDBsum" id="8AM4"/>
<dbReference type="PDBsum" id="8B6S"/>
<dbReference type="PDBsum" id="8B6T"/>
<dbReference type="PDBsum" id="8BAN"/>
<dbReference type="PDBsum" id="8BAV"/>
<dbReference type="PDBsum" id="8BVG"/>
<dbReference type="PDBsum" id="8BXP"/>
<dbReference type="PDBsum" id="8C1X"/>
<dbReference type="PDBsum" id="8C7I"/>
<dbReference type="PDBsum" id="8DFL"/>
<dbReference type="PDBsum" id="8DHR"/>
<dbReference type="PDBsum" id="8DN2"/>
<dbReference type="PDBsum" id="8DN3"/>
<dbReference type="PDBsum" id="8DN4"/>
<dbReference type="PDBsum" id="8DN5"/>
<dbReference type="PDBsum" id="8DPD"/>
<dbReference type="PDBsum" id="8DTA"/>
<dbReference type="PDBsum" id="8ET3"/>
<dbReference type="PDBsum" id="8F6P"/>
<dbReference type="PDBsum" id="8FCK"/>
<dbReference type="PDBsum" id="8FED"/>
<dbReference type="PDBsum" id="8FEE"/>
<dbReference type="PDBsum" id="8FEF"/>
<dbReference type="PDBsum" id="8G0I"/>
<dbReference type="PDBsum" id="8G4E"/>
<dbReference type="PDBsum" id="8HCO"/>
<dbReference type="PDBsum" id="8IYY"/>
<dbReference type="PDBsum" id="8IYZ"/>
<dbReference type="PDBsum" id="8IZ0"/>
<dbReference type="PDBsum" id="8IZ1"/>
<dbReference type="PDBsum" id="8IZ2"/>
<dbReference type="PDBsum" id="8IZ3"/>
<dbReference type="PDBsum" id="8J0J"/>
<dbReference type="PDBsum" id="8J1E"/>
<dbReference type="PDBsum" id="8J6O"/>
<dbReference type="PDBsum" id="8J7H"/>
<dbReference type="PDBsum" id="8JF7"/>
<dbReference type="PDBsum" id="8JKC"/>
<dbReference type="PDBsum" id="8JKG"/>
<dbReference type="PDBsum" id="8JKI"/>
<dbReference type="PDBsum" id="8JL2"/>
<dbReference type="PDBsum" id="8JL5"/>
<dbReference type="PDBsum" id="8JL6"/>
<dbReference type="PDBsum" id="8JL7"/>
<dbReference type="PDBsum" id="8JLL"/>
<dbReference type="PDBsum" id="8JLM"/>
<dbReference type="PDBsum" id="8JLS"/>
<dbReference type="PDBsum" id="8JLT"/>
<dbReference type="PDBsum" id="8JLU"/>
<dbReference type="PDBsum" id="8K4S"/>
<dbReference type="PDBsum" id="8KEX"/>
<dbReference type="PDBsum" id="8OTS"/>
<dbReference type="PDBsum" id="8OVN"/>
<dbReference type="PDBsum" id="8OVO"/>
<dbReference type="PDBsum" id="8OVP"/>
<dbReference type="PDBsum" id="8OVY"/>
<dbReference type="PDBsum" id="8PKO"/>
<dbReference type="PDBsum" id="8QWJ"/>
<dbReference type="PDBsum" id="8RL9"/>
<dbReference type="PDBsum" id="8RLB"/>
<dbReference type="PDBsum" id="8RLC"/>
<dbReference type="PDBsum" id="8RLE"/>
<dbReference type="PDBsum" id="8SFS"/>
<dbReference type="PDBsum" id="8SFV"/>
<dbReference type="PDBsum" id="8SFX"/>
<dbReference type="PDBsum" id="8SFZ"/>
<dbReference type="PDBsum" id="8SG3"/>
<dbReference type="PDBsum" id="8SLC"/>
<dbReference type="PDBsum" id="8SMU"/>
<dbReference type="PDBsum" id="8SYG"/>
<dbReference type="PDBsum" id="8T15"/>
<dbReference type="PDBsum" id="8T17"/>
<dbReference type="PDBsum" id="8T18"/>
<dbReference type="PDBsum" id="8T6K"/>
<dbReference type="PDBsum" id="8T6L"/>
<dbReference type="PDBsum" id="8T6Q"/>
<dbReference type="PDBsum" id="8TLM"/>
<dbReference type="PDBsum" id="8TU9"/>
<dbReference type="PDBsum" id="8U4N"/>
<dbReference type="PDBsum" id="8U4O"/>
<dbReference type="PDBsum" id="8U4P"/>
<dbReference type="PDBsum" id="8U4Q"/>
<dbReference type="PDBsum" id="8U4R"/>
<dbReference type="PDBsum" id="8U4S"/>
<dbReference type="PDBsum" id="8UQQ"/>
<dbReference type="PDBsum" id="8VDP"/>
<dbReference type="PDBsum" id="8VDQ"/>
<dbReference type="PDBsum" id="8VDR"/>
<dbReference type="PDBsum" id="8W2L"/>
<dbReference type="PDBsum" id="8WG3"/>
<dbReference type="PDBsum" id="8WG4"/>
<dbReference type="PDBsum" id="8X9P"/>
<dbReference type="PDBsum" id="8XTW"/>
<dbReference type="PDBsum" id="8XTX"/>
<dbReference type="PDBsum" id="8XTY"/>
<dbReference type="PDBsum" id="8YA0"/>
<dbReference type="PDBsum" id="8YA2"/>
<dbReference type="PDBsum" id="8ZUP"/>
<dbReference type="PDBsum" id="8ZUQ"/>
<dbReference type="PDBsum" id="8ZUR"/>
<dbReference type="PDBsum" id="8ZUS"/>
<dbReference type="PDBsum" id="8ZUT"/>
<dbReference type="PDBsum" id="9BOI"/>
<dbReference type="PDBsum" id="9C74"/>
<dbReference type="PDBsum" id="9F22"/>
<dbReference type="PDBsum" id="9F23"/>
<dbReference type="PDBsum" id="9F24"/>
<dbReference type="PDBsum" id="9F33"/>
<dbReference type="PDBsum" id="9F34"/>
<dbReference type="PDBsum" id="9GE2"/>
<dbReference type="PDBsum" id="9GE3"/>
<dbReference type="PDBsum" id="9J97"/>
<dbReference type="PDBsum" id="9J98"/>
<dbReference type="BMRB" id="P42212"/>
<dbReference type="EMDB" id="EMD-11690"/>
<dbReference type="EMDB" id="EMD-13427"/>
<dbReference type="EMDB" id="EMD-20949"/>
<dbReference type="EMDB" id="EMD-20951"/>
<dbReference type="EMDB" id="EMD-21882"/>
<dbReference type="EMDB" id="EMD-21892"/>
<dbReference type="EMDB" id="EMD-22621"/>
<dbReference type="EMDB" id="EMD-23014"/>
<dbReference type="EMDB" id="EMD-23015"/>
<dbReference type="EMDB" id="EMD-25414"/>
<dbReference type="EMDB" id="EMD-25416"/>
<dbReference type="EMDB" id="EMD-25417"/>
<dbReference type="EMDB" id="EMD-28585"/>
<dbReference type="EMDB" id="EMD-28887"/>
<dbReference type="EMDB" id="EMD-28981"/>
<dbReference type="EMDB" id="EMD-29023"/>
<dbReference type="EMDB" id="EMD-29024"/>
<dbReference type="EMDB" id="EMD-29025"/>
<dbReference type="EMDB" id="EMD-29718"/>
<dbReference type="EMDB" id="EMD-35904"/>
<dbReference type="EMDB" id="EMD-35920"/>
<dbReference type="EMDB" id="EMD-36753"/>
<dbReference type="EMDB" id="EMD-36890"/>
<dbReference type="EMDB" id="EMD-37191"/>
<dbReference type="EMDB" id="EMD-37501"/>
<dbReference type="EMDB" id="EMD-37502"/>
<dbReference type="EMDB" id="EMD-38178"/>
<dbReference type="EMDB" id="EMD-39087"/>
<dbReference type="EMDB" id="EMD-39088"/>
<dbReference type="EMDB" id="EMD-41071"/>
<dbReference type="EMDB" id="EMD-41370"/>
<dbReference type="EMDB" id="EMD-61254"/>
<dbReference type="EMDB" id="EMD-61255"/>
<dbReference type="EMDB" id="EMD-9064"/>
<dbReference type="EMDB" id="EMD-9104"/>
<dbReference type="EMDB" id="EMD-9277"/>
<dbReference type="EMDB" id="EMD-9374"/>
<dbReference type="EMDB" id="EMD-9731"/>
<dbReference type="SMR" id="P42212"/>
<dbReference type="IntAct" id="P42212">
    <property type="interactions" value="1"/>
</dbReference>
<dbReference type="ABCD" id="P42212">
    <property type="antibodies" value="93 sequenced antibodies"/>
</dbReference>
<dbReference type="BioCyc" id="MetaCyc:MONOMER-20291"/>
<dbReference type="CD-CODE" id="07D09420">
    <property type="entry name" value="Synthetic Condensate 000144"/>
</dbReference>
<dbReference type="CD-CODE" id="12F82FB5">
    <property type="entry name" value="Synthetic Condensate 000142"/>
</dbReference>
<dbReference type="CD-CODE" id="17687E46">
    <property type="entry name" value="Synthetic Condensate 000078"/>
</dbReference>
<dbReference type="CD-CODE" id="A5E21351">
    <property type="entry name" value="Synthetic Condensate 000135"/>
</dbReference>
<dbReference type="CD-CODE" id="CDDB7C63">
    <property type="entry name" value="Synthetic Condensate 000147"/>
</dbReference>
<dbReference type="EvolutionaryTrace" id="P42212"/>
<dbReference type="GO" id="GO:0008218">
    <property type="term" value="P:bioluminescence"/>
    <property type="evidence" value="ECO:0000304"/>
    <property type="project" value="UniProtKB"/>
</dbReference>
<dbReference type="GO" id="GO:0006091">
    <property type="term" value="P:generation of precursor metabolites and energy"/>
    <property type="evidence" value="ECO:0000304"/>
    <property type="project" value="UniProtKB"/>
</dbReference>
<dbReference type="FunFam" id="2.40.155.10:FF:000003">
    <property type="entry name" value="Green fluorescent protein"/>
    <property type="match status" value="1"/>
</dbReference>
<dbReference type="Gene3D" id="2.40.155.10">
    <property type="entry name" value="Green fluorescent protein"/>
    <property type="match status" value="2"/>
</dbReference>
<dbReference type="InterPro" id="IPR009017">
    <property type="entry name" value="GFP"/>
</dbReference>
<dbReference type="InterPro" id="IPR011584">
    <property type="entry name" value="GFP-related"/>
</dbReference>
<dbReference type="InterPro" id="IPR000786">
    <property type="entry name" value="Green_fluorescent_prot"/>
</dbReference>
<dbReference type="Pfam" id="PF01353">
    <property type="entry name" value="GFP"/>
    <property type="match status" value="1"/>
</dbReference>
<dbReference type="PRINTS" id="PR01229">
    <property type="entry name" value="GFLUORESCENT"/>
</dbReference>
<dbReference type="SUPFAM" id="SSF54511">
    <property type="entry name" value="GFP-like"/>
    <property type="match status" value="1"/>
</dbReference>
<feature type="chain" id="PRO_0000192576" description="Green fluorescent protein">
    <location>
        <begin position="1"/>
        <end position="238"/>
    </location>
</feature>
<feature type="modified residue" description="(Z)-2,3-didehydrotyrosine" evidence="20">
    <location>
        <position position="66"/>
    </location>
</feature>
<feature type="cross-link" description="5-imidazolinone (Ser-Gly)" evidence="20">
    <location>
        <begin position="65"/>
        <end position="67"/>
    </location>
</feature>
<feature type="sequence variant" evidence="7">
    <original>F</original>
    <variation>Y</variation>
    <location>
        <position position="100"/>
    </location>
</feature>
<feature type="sequence variant" evidence="7">
    <original>T</original>
    <variation>S</variation>
    <location>
        <position position="108"/>
    </location>
</feature>
<feature type="sequence variant" evidence="7">
    <original>L</original>
    <variation>M</variation>
    <location>
        <position position="141"/>
    </location>
</feature>
<feature type="sequence variant" evidence="7">
    <original>V</original>
    <variation>I</variation>
    <location>
        <position position="219"/>
    </location>
</feature>
<feature type="mutagenesis site" description="In mut1.28; shifts fluorescence lifetime from 3.03 to 2.76 ns; when associated with H-145. In mut2.2; shifts fluorescence lifetime from 3.03 to 1.94 ns; when associated with H-69 and H-145. In mut3.3; shifts fluorescence lifetime from 3.03 to 1.88 ns; when associated with L-46; H-69 and H-145. In EBFP1.2; shifts the excitation and emission spectra to shorter wavelengths and increases quantum yields compared to BFP; when associated with N-39; H-66; A-72; T-105; F-145; V-171; S-198 and V-206. In EBFP2.0; shifts the excitation and emission spectra to shorter wavelengths and increases quantum yields compared to BFP; when associated with N-39; H-66; A-72; T-105; V-128; F-145; I-150; V-155; V-171; S-198; V-206 and V-224." evidence="10 16">
    <original>S</original>
    <variation>R</variation>
    <location>
        <position position="30"/>
    </location>
</feature>
<feature type="mutagenesis site" description="In EBFP1.2; shifts the excitation and emission spectra to shorter wavelengths and increases quantum yields compared to BFP; when associated with R-30; H-66; A-72; T-105; F-145; V-171; S-198 and V-206. In EBFP2.0; shifts the excitation and emission spectra to shorter wavelengths and increases quantum yields compared to BFP; when associated with R-30; H-66; A-72; T-105; V-128; F-145; I-150; V-155; V-171; S-198; V-206 and V-224." evidence="16">
    <original>Y</original>
    <variation>N</variation>
    <location>
        <position position="39"/>
    </location>
</feature>
<feature type="mutagenesis site" description="In mut3.3; shifts fluorescence lifetime from 3.03 to 1.88 ns; when associated with R-30; H-69 and H-145. In R10-3; matures to the red-emitting state with excitation and emission maxima at 555 and 585 nm, respectively; when associated with L-64; N-68; Q-162; A-163; V-167 and L-171. In Venus; leads to yellow fluorescence, improved maturation and reduced environmental sensitivity; when associated with L-64; G-65; L-68; A-72; T-153; A-163; G-175 and Y-203." evidence="5 10 15">
    <original>F</original>
    <variation>L</variation>
    <location>
        <position position="46"/>
    </location>
</feature>
<feature type="mutagenesis site" description="In EGFP; increases fluorescence at warmer temperatures such as 37 degrees Celsius; when associated with T-65. In EBFP; gives rise to variants with blue fluorescence; when associated with T-65 and H-66. In ECFP; leads to cyan fluorescence, folds faster and more efficiently at 37 degrees Celsius and has superior solubility and brightness; when associated with T-65; W-66; I-146; T-153 and A-163. In Cerulean; leads to improved quantum yield, a higher extinction coefficient and is 2.5-fold brighterH than ECFP; when associated with T-65; W-66; A-72; A-145; I-146; D-148; T-153 and A-163. In R10-3; matures to the red-emitting state with excitation and emission maxima at 555 and 585 nm, respectively; when associated with L-46; N-68; Q-162; A-163; V-167 and L-171. In GFPmut 1; red-shifts by about 100 nm the excitation maxima, permitting efficient excitation at 488 nm and increases fluorescence; when associated with T-65. In VisGreen; leads to brighter fluorescence; when associated with T-65; A-72; K-149 and T-167. In Venus; leads to yellow fluorescence, improved maturation and reduced environmental sensitivity; when associated with L-46; G-65; L-68; A-72; T-153; A-163; G-175 and Y-203." evidence="2 4 5 8 9 12 15 23 26 28">
    <original>F</original>
    <variation>L</variation>
    <location>
        <position position="64"/>
    </location>
</feature>
<feature type="mutagenesis site" description="In RSGFP4; increases fluorescence and shifts the major exitation peak to 489-490 nm; when associated with G-65 and L-69." evidence="31">
    <original>F</original>
    <variation>M</variation>
    <location>
        <position position="64"/>
    </location>
</feature>
<feature type="mutagenesis site" description="Gives rise to variants with cerulean fluorsecence." evidence="14">
    <original>SY</original>
    <variation>TW</variation>
    <location>
        <begin position="65"/>
        <end position="66"/>
    </location>
</feature>
<feature type="mutagenesis site" description="In GFPmut 2; red-shifts by about 100 nm the excitation maxima, permitting efficient excitation at 488 nm and increases fluorescence; when associated with L-68 and A-72." evidence="23">
    <original>S</original>
    <variation>A</variation>
    <location>
        <position position="65"/>
    </location>
</feature>
<feature type="mutagenesis site" description="In EYFP; leads to yellow fluorescence, folds faster and more efficiently at 37 degrees Celsius and has superior solubility and brightness; when associated with L-68; A-72 and Y-203. In GFPmut 3; highly fluorescent mutant when excited at 488 nm; when associated with A-72. Highly fluorescent; when associated with Y-203; L-68 and A-72. In RSGFP4; increases fluorescence and shifts the major exitation peak to 489-490 nm; when associated with M-64 and L-69. In YFP 10C; shifts the major emission and exitation peak up to 20 nm; when associated with L-68; A-72 and Y-203. In Topaz; shifts the major emission and exitation peak up to 20 nm; when associated with A-72; R-79 and Y-203. In Venus; leads to yellow fluorescence, improved maturation and reduced environmental sensitivity; when associated with L-46; L-64; L-68; A-72; T-153; A-163; G-175 and Y-203." evidence="2 5 23 31 32 33">
    <original>S</original>
    <variation>G</variation>
    <location>
        <position position="65"/>
    </location>
</feature>
<feature type="mutagenesis site" description="Increases fluorescence, photostability and shifts the major exitation peak to 488 nm. In EGFP; increases fluorescence at warmer temperatures such as 37 degrees Celsius; when associated with L-64. In EBFP; gives rise to variants with blue fluorescence; when associated with L-64 and H-66. In GFPmut 1; red-shifts by about 100 nm the excitation maxima, permitting efficient excitation at 488 nm and increases fluorescence; when associated with T-65. In ECFP; leads to cyan fluorescence, folds faster and more efficiently at 37 degrees Celsius and has superior solubility and brightness; when associated with L-64; W-66; I-146; T-153 and A-163. In Cerulean; leads to improved quantum yield, a higher extinction coefficient and is 2.5-fold brighter than ECFP; when associated with L-64; W-66; A-72; A-145; I-146; D-148; T-153 and A-163. In Esmerald; leads to brighter fluorescence; when associated with A-72; K-149; T-153 and T-167. In VisGreen; leads to brighter fluorescence; when associated with L-64; A-72; K-149 and T-167." evidence="2 4 8 9 12 22 23 28">
    <original>S</original>
    <variation>T</variation>
    <location>
        <position position="65"/>
    </location>
</feature>
<feature type="mutagenesis site" description="In BFP; shifts the excitation and emission spectra to shorter wavelengths. In EBFP; gives rise to variants with blue fluorescence; when associated with L-64 and T-65. In Azurite; shifts the excitation and emission spectra to shorter wavelengths and increases quantum yields compared to BFP; when associated with R-80; F-145; I-150 and R-224. In EBFP1.2; shifts the excitation and emission spectra to shorter wavelengths and increases quantum yields compared to BFP; when associated with R-30; N-39; A-72; T-105; F-145; V-171; S-198 and V-206. In EBFP2.0; shifts the excitation and emission spectra to shorter wavelengths and increases quantum yields compared to BFP; when associated with R-30; N-39; A-72; T-105; V-128; F-145; I-150; V-155; V-171; S-198; V-206 and V-224." evidence="16 21 26 28">
    <original>Y</original>
    <variation>H</variation>
    <location>
        <position position="66"/>
    </location>
</feature>
<feature type="mutagenesis site" description="Shifts the excitation and emission spectra to shorter wavelengths." evidence="21">
    <original>Y</original>
    <variation>T</variation>
    <variation>F</variation>
    <location>
        <position position="66"/>
    </location>
</feature>
<feature type="mutagenesis site" description="In W; leads to excitation and emission wavelengths intermediate between tyrosine and histidine but is only weakly fluorescent. In ECFP; leads to cyan fluorescence, folds faster and more efficiently at 37 degrees Celsius and has superior solubility and brightness; when associated with L-64; T-65; I-146; T-153 and A-163. In Cerulean; leads to improved quantum yield, a higher extinction coefficient and is 2.5-fold brighter than ECFP; when associated with L-64; T-65; A-72; A-145; I-146; D-148; T-153 and A-163." evidence="2 8 9 18">
    <original>Y</original>
    <variation>W</variation>
    <location>
        <position position="66"/>
    </location>
</feature>
<feature type="mutagenesis site" description="In EYFP; leads to yellow fluorescence, folds faster and more efficiently at 37 degrees Celsius and has superior solubility and brightness; when associated with G-65; A-72 and Y-203. In GFPmut 2; red-shifts by about 100 nm the excitation maxima, permitting efficient excitation at 488 nm and increases fluorescence; when associated with A-65 and A-72. In Citrinine; leads to excitation and emission peaks of 516 and 529 nm, respectively; when associated with M-69; A-72 and Y-203. In YFP 10C; shifts the major emission and exitation peak up to 20 nm; when associated with G-65; A-72 and Y-203. In Venus; leads to yellow fluorescence, improved maturation and reduced environmental sensitivity; when associated with L-46; L-64; G-65; A-72; T-153; A-163; G-175 and Y-203." evidence="2 3 5 23 32 33">
    <original>V</original>
    <variation>L</variation>
    <location>
        <position position="68"/>
    </location>
</feature>
<feature type="mutagenesis site" description="In R10-3; matures to the red-emitting state with excitation and emission maxima at 555 and 585 nm, respectively; when associated with L-46; L-64; Q-162; A-163; V-167 and L-171." evidence="15">
    <original>V</original>
    <variation>N</variation>
    <location>
        <position position="68"/>
    </location>
</feature>
<feature type="mutagenesis site" description="In P4; leads to no detectable fluorescence. In mut2.2; shifts fluorescence lifetime from 3.03 to 1.94 ns; when associated with R-30 and H-145. In mut3.3; shifts fluorescence lifetime from 3.03 to 1.88 ns; when associated with R-30; L-46 and H-145." evidence="10 18">
    <original>Q</original>
    <variation>H</variation>
    <location>
        <position position="69"/>
    </location>
</feature>
<feature type="mutagenesis site" description="In RSGFP4; increases fluorescence and shifts the major exitation peak to 489-490 nm; when associated with M-64 and G-65." evidence="31">
    <original>Q</original>
    <variation>L</variation>
    <location>
        <position position="69"/>
    </location>
</feature>
<feature type="mutagenesis site" description="In Citrinine; leads to excitation and emission peaks of 516 and 529 nm, respectively; when associated with L-68; A-72 and Y-203." evidence="3">
    <original>Q</original>
    <variation>M</variation>
    <location>
        <position position="69"/>
    </location>
</feature>
<feature type="mutagenesis site" description="Increases fluorescence at warmer temperatures such as 37 degrees Celsius. In GFPmut 3; highly fluorescent mutant when excited at 488 nm; when associated with G-65. In EYFP; leads to yellow fluorescence, folds faster and more efficiently at 37 degrees Celsius and has superior solubility and brightness; when associated with G-65; L-68 and Y-203. In GFPmut 2; red-shifts by about 100 nm the excitation maxima, permitting efficient excitation at 488 nm and increases fluorescence; when associated with A-65 and L-68. In Citrinine; leads to excitation and emission peaks of 516 and 529 nm, respectively; when associated with L-68; M-69 and Y-203. In YFP 10C; shifts the major emission and exitation peak up to 20 nm; when associated with G-65; L-68; and Y-203. In Topaz; shifts the major emission and exitation peak up to 20 nm; when associated with G-65; R-79 and Y-203. In Cerulean; leads to improved quantum yield, a higher extinction coefficient and is 2.5-fold brighter than ECFP; when associated with L-64; T-65; W-66; A-145; I-146; D-148; T-153 and A-163. In Sapphire/H9-40; exhibits a huge Stoke's shift, with an excitation peak at 399 nm and an emission peak at 511 nm; when associated with F-145 and I-203. In EBFP1.2; shifts the excitation and emission spectra to shorter wavelengths and increases quantum yields compared to BFP; when associated with R-30; N-39; H-66; T-105; F-145; V-171; S-198 and V-206. In EBFP2.0; shifts the excitation and emission spectra to shorter wavelengths and increases quantum yields compared to BFP; when associated with R-30; N-39; H-66; T-105; V-128; F-145; I-150; V-155; V-171; S-198; V-206 and V-224. In Esmerald; leads to brighter fluorescence; when associated with T-65; K-149; T-153 and T-167. In VisGreen; leads to brighter fluorescence; when associated with L-64; T-65; K-149 and T-167. In Venus; leads to yellow fluorescence, improved maturation and reduced environmental sensitivity; when associated with L-46; L-64; G-65; L-68; T-153; A-163; G-175 and Y-203." evidence="2 3 5 6 8 12 16 23 26 32 33">
    <original>S</original>
    <variation>A</variation>
    <location>
        <position position="72"/>
    </location>
</feature>
<feature type="mutagenesis site" description="In Topaz; shifts the major emission and exitation peak up to 20 nm; when associated with G-65; A-72 and Y-203." evidence="32">
    <original>K</original>
    <variation>R</variation>
    <location>
        <position position="79"/>
    </location>
</feature>
<feature type="mutagenesis site" description="In Azurite; shifts the excitation and emission spectra to shorter wavelengths and increases quantum yields compared to BFP; when associated with H-66; F-145; I-150 and R-224." evidence="16">
    <original>Q</original>
    <variation>R</variation>
    <location>
        <position position="80"/>
    </location>
</feature>
<feature type="mutagenesis site" description="In alphaGFP/cycle 3 GFP; improves folding at 37 degrees Celsius, reduces aggregation at high concentrations, and increases the diffusibility of the protein inside cells; when associated with T-153 and A-163." evidence="28 29 30">
    <original>F</original>
    <variation>S</variation>
    <location>
        <position position="99"/>
    </location>
</feature>
<feature type="mutagenesis site" description="In mut1.27; shifts fluorescence lifetime from 3.03 to 2.85 ns; when associated with H-145." evidence="10">
    <original>D</original>
    <variation>E</variation>
    <location>
        <position position="103"/>
    </location>
</feature>
<feature type="mutagenesis site" description="In EBFP1.2; shifts the excitation and emission spectra to shorter wavelengths and increases quantum yields compared to BFP; when associated with R-30; N-39; H-66; A-72; F-145; V-171; S-198 and V-206. In EBFP2.0; shifts the excitation and emission spectra to shorter wavelengths and increases quantum yields compared to BFP; when associated with R-30; N-39; H-66; A-72; V-128; F-145; I-150; V-155; V-171; S-198; V-206 and V-224." evidence="16">
    <original>N</original>
    <variation>T</variation>
    <location>
        <position position="105"/>
    </location>
</feature>
<feature type="mutagenesis site" description="In EBFP2.0; shifts the excitation and emission spectra to shorter wavelengths and increases quantum yields compared to BFP; when associated with R-30; N-39; H-66; A-72; T-105; F-145; I-150; V-155; V-171; S-198; V-206 and V-224." evidence="16">
    <original>I</original>
    <variation>V</variation>
    <location>
        <position position="128"/>
    </location>
</feature>
<feature type="mutagenesis site" description="In Cerulean; leads to improved quantum yield, a higher extinction coefficient and is 2.5-fold brighter than ECFP; when associated with L-64; T-65; W-66; A-72; I-146; D-148; T-153 and A-163." evidence="8">
    <original>Y</original>
    <variation>A</variation>
    <location>
        <position position="145"/>
    </location>
</feature>
<feature type="mutagenesis site" description="In mut1.9; shifts fluorescence lifetime from 3.03 to 2.74 ns." evidence="10">
    <original>Y</original>
    <variation>C</variation>
    <location>
        <position position="145"/>
    </location>
</feature>
<feature type="mutagenesis site" description="In Sapphire/H9-40; exhibits a huge Stoke's shift, with an excitation peak at 399 nm and an emission peak at 511 nm; when associated with A-72 and I-203. In Azurite; shifts the excitation and emission spectra to shorter wavelengths and increases quantum yields compared to BFP; when associated with H-66; R-80; I-150 and R-224. In EBFP1.2; shifts the excitation and emission spectra to shorter wavelengths and increases quantum yields compared to BFP; when associated with R-30; N-39; H-66; A-72; T-105; V-171; S-198 and V-206. In EBFP2.0; shifts the excitation and emission spectra to shorter wavelengths and increases quantum yields compared to BFP; when associated with R-30; N-39; H-66; A-72; T-105; V-128; I-150; V-155; V-171; S-198; V-206 and V-224." evidence="6 16">
    <original>Y</original>
    <variation>F</variation>
    <location>
        <position position="145"/>
    </location>
</feature>
<feature type="mutagenesis site" description="In mut1.3; shifts fluorescence lifetime from 3.03 to 2.78 ns. In mut1.5; shifts fluorescence lifetime from 3.03 to 2.72 ns; when associated with A-193. In mut1.27; shifts fluorescence lifetime from 3.03 to 2.85 ns; when associated with E-103. In mut1.28; shifts fluorescence lifetime from 3.03 to 2.76 ns; when associated with R-30. In mut2.1; shifts fluorescence lifetime from 3.03 to 2.50 ns; when associated with A-176 and I-198. In mut2.2; shifts fluorescence lifetime from 3.03 to 1.94 ns; when associated with R-30 and H-69. In mut3.3; shifts fluorescence lifetime from 3.03 to 1.88 ns; when associated with R-30; L-46 and H-69." evidence="10">
    <original>Y</original>
    <variation>H</variation>
    <location>
        <position position="145"/>
    </location>
</feature>
<feature type="mutagenesis site" description="In ECFP; leads to cyan fluorescence, folds faster and more efficiently at 37 degrees Celsius and has superior solubility and brightness; when associated with L-64; T-65; W-66; T-153 and A-163. In Cerulean; leads to improved quantum yield, a higher extinction coefficient and is 2.5-fold brighter than ECFP; when associated with L-64; T-65; W-66; A-72; A-145; D-148; T-153 and A-163." evidence="2 8 9">
    <original>N</original>
    <variation>I</variation>
    <location>
        <position position="146"/>
    </location>
</feature>
<feature type="mutagenesis site" description="Increases fluorescence at warmer temperatures such as 37 degrees Celsius." evidence="25">
    <original>S</original>
    <variation>P</variation>
    <location>
        <position position="147"/>
    </location>
</feature>
<feature type="mutagenesis site" description="In Cerulean; leads to improved quantum yield, a higher extinction coefficient and is 2.5-fold brighter than ECFP; when associated with L-64; T-65; W-66; A-72; A-145; I-146; T-153 and A-163." evidence="8">
    <original>H</original>
    <variation>D</variation>
    <location>
        <position position="148"/>
    </location>
</feature>
<feature type="mutagenesis site" description="Increases fluorescence at warmer temperatures such as 37 degrees Celsius. In Esmerald; leads to brighter fluorescence; when associated with T-65; A-72; T-153 and T-167. In VisGreen; leads to brighter fluorescence; when associated with L-64; T-65; A-72 and T-167." evidence="12 26">
    <original>N</original>
    <variation>K</variation>
    <location>
        <position position="149"/>
    </location>
</feature>
<feature type="mutagenesis site" description="In Azurite; shifts the excitation and emission spectra to shorter wavelengths and increases quantum yields compared to BFP; when associated with H-66; R-80; F-145 and R-224. In EBFP2.0; shifts the excitation and emission spectra to shorter wavelengths and increases quantum yields compared to BFP; when associated with R-30; N-39; H-66; A-72; T-105; V-128; F-145; V-155; V-171; S-198; V-206 and V-224." evidence="16">
    <original>V</original>
    <variation>I</variation>
    <location>
        <position position="150"/>
    </location>
</feature>
<feature type="mutagenesis site" description="Increases fluorescence at warmer temperatures such as 37 degrees Celsius. In alphaGFP/cycle 3 GFP; improves folding at 37 degrees Celsius, reduces aggregation at high concentrations, and increases the diffusibility of the protein inside cells; when associated with S-99 and A-163. In ECFP; leads to cyan fluorescence, folds faster and more efficiently at 37 degrees Celsius and has superior solubility and brightness; when associated with L-64; T-65; W-66; I-146 and A-163. In Cerulean; leads to improved quantum yield, a higher extinction coefficient and is 2.5-fold brighter than ECFP; when associated with L-64; T-65; W-66; A-72; A-145; I-146; D-148 and A-163. In Esmerald; leads to brighter fluorescence; when associated with T-65; A-72; K-149 and T-167. In Venus; leads to yellow fluorescence, improved maturation and reduced environmental sensitivity; when associated with L-46; L-64; G-65; L-68; A-72; A-163; G-175 and Y-203." evidence="2 5 8 9 12 26 28 29 30">
    <original>M</original>
    <variation>T</variation>
    <location>
        <position position="153"/>
    </location>
</feature>
<feature type="mutagenesis site" description="In EBFP2.0; shifts the excitation and emission spectra to shorter wavelengths and increases quantum yields compared to BFP; when associated with R-30; N-39; H-66; A-72; T-105; V-128; F-145; I-150; V-171; S-198; V-206 and V-224." evidence="16">
    <original>D</original>
    <variation>V</variation>
    <location>
        <position position="155"/>
    </location>
</feature>
<feature type="mutagenesis site" description="In R10-3; matures to the red-emitting state with excitation and emission maxima at 555 and 585 nm, respectively; when associated with L-46; L-64; N-68; A-163; V-167 and L-171." evidence="15">
    <original>K</original>
    <variation>Q</variation>
    <location>
        <position position="162"/>
    </location>
</feature>
<feature type="mutagenesis site" description="In GFPB; leads to enhanced fluorescence at 37 degrees Celsius. In GFPA; leads to even higher fluorescence at 37 degrees Celsius than GFPA; whenassociated with G-175. In alphaGFP/cycle 3 GFP; improves folding at 37 degrees Celsius, reduces aggregation at high concentrations, and increases the diffusibility of the protein inside cells; when associated with S-99 and T-153. In R10-3; matures to the red-emitting state with excitation and emission maxima at 555 and 585 nm, respectively; when associated with L-46; L-64; N-68; Q-162; V-167 and L-171. In ECFP; leads to cyan fluorescence, folds faster and more efficiently at 37 degrees Celsius and has superior solubility and brightness; when associated with L-64; T-65; W-66; I-146 and T-153. In Cerulean; leads to improved quantum yield, a higher extinction coefficient and is 2.5-fold brighter than ECFP; when associated with L-64; T-65; W-66; A-72; A-145; I-146; D-148 and T-153. In Venus; leads to yellow fluorescence, improved maturation and reduced environmental sensitivity; when associated with L-46; L-64; G-65; L-68; A-72; T-153; G-175 and Y-203." evidence="2 5 8 9 15 24 28 29 30">
    <original>V</original>
    <variation>A</variation>
    <location>
        <position position="163"/>
    </location>
</feature>
<feature type="mutagenesis site" description="In P11; increases fluorescence at 475 nm excitation and at warmer temperatures such as 37 degrees Celsius. In Esmerald; leads to brighter fluorescence; when associated with T-65; A-72; K-149 and T-153. In VisGreen; leads to brighter fluorescence; when associated with L-64; T-65; A-72 and K-149." evidence="12 18 26">
    <original>I</original>
    <variation>T</variation>
    <location>
        <position position="167"/>
    </location>
</feature>
<feature type="mutagenesis site" description="In P9; increases fluorescence at 475 nm excitation. In R10-3; matures to the red-emitting state with excitation and emission maxima at 555 and 585 nm, respectively; when associated with L-46; L-64; N-68; Q-162; A-163 and L-171." evidence="15 18">
    <original>I</original>
    <variation>V</variation>
    <location>
        <position position="167"/>
    </location>
</feature>
<feature type="mutagenesis site" description="In R10-3; matures to the red-emitting state with excitation and emission maxima at 555 and 585 nm, respectively; when associated with L-46; L-64; N-68; Q-162; A-163 and V-167." evidence="15">
    <original>I</original>
    <variation>L</variation>
    <location>
        <position position="171"/>
    </location>
</feature>
<feature type="mutagenesis site" description="In EBFP1.2; shifts the excitation and emission spectra to shorter wavelengths and increases quantum yields compared to BFP; when associated with R-30; N-39; H-66; A-72; T-105; F-145; S-198 and V-206. In EBFP2.0; shifts the excitation and emission spectra to shorter wavelengths and increases quantum yields compared to BFP; when associated with R-30; N-39; H-66; A-72; T-105; V-128; F-145; I-150; V-155; S-198; V-206 and V-224." evidence="16">
    <original>I</original>
    <variation>V</variation>
    <location>
        <position position="171"/>
    </location>
</feature>
<feature type="mutagenesis site" description="In GFPA; leads to enhanced fluorescence at 37 degrees Celsius; when associated with A-163. In Venus; leads to yellow fluorescence, improved maturation and reduced environmental sensitivity; when associated with L-46; L-64; G-65; L-68; A-72; T-153; A-163 and Y-203." evidence="5 24">
    <original>S</original>
    <variation>G</variation>
    <location>
        <position position="175"/>
    </location>
</feature>
<feature type="mutagenesis site" description="In mut2.1; shifts fluorescence lifetime from 3.03 to 2.50 ns; when associated with H-145 and I-198." evidence="10">
    <original>V</original>
    <variation>A</variation>
    <location>
        <position position="176"/>
    </location>
</feature>
<feature type="mutagenesis site" description="In mut1.5; shifts fluorescence lifetime from 3.03 to 2.72 ns; when associated with H-145." evidence="10">
    <original>V</original>
    <variation>A</variation>
    <location>
        <position position="193"/>
    </location>
</feature>
<feature type="mutagenesis site" description="In mut2.1; shifts fluorescence lifetime from 3.03 to 2.50 ns; when associated with H-145 and A-176." evidence="10">
    <original>N</original>
    <variation>I</variation>
    <location>
        <position position="198"/>
    </location>
</feature>
<feature type="mutagenesis site" description="In EBFP1.2; shifts the excitation and emission spectra to shorter wavelengths and increases quantum yields compared to BFP; when associated with R-30; N-39; H-66; A-72; T-105; F-145; V-171 and V-206. In EBFP2.0; shifts the excitation and emission spectra to shorter wavelengths and increases quantum yields compared to BFP; when associated with R-30; N-39; H-66; A-72; T-105; V-128; F-145; I-150; V-155; V-171; S-198 and V-224." evidence="16">
    <original>N</original>
    <variation>S</variation>
    <location>
        <position position="198"/>
    </location>
</feature>
<feature type="mutagenesis site" description="In H9; increases fluorescence at 395 nm excitation; when associated with I-203." evidence="18">
    <original>S</original>
    <variation>F</variation>
    <location>
        <position position="202"/>
    </location>
</feature>
<feature type="mutagenesis site" description="Results in significantly red-shifted excitation and emission maxima." evidence="22">
    <original>T</original>
    <variation>H</variation>
    <variation>W</variation>
    <variation>F</variation>
    <location>
        <position position="203"/>
    </location>
</feature>
<feature type="mutagenesis site" description="Suppresses the 475 nm excitation peak, leaving only the shorter wavelength peak at 399 nm. In H9; increases fluorescence at 395 nm excitation; when associated with I-203. In Sapphire/H9-40; exhibits a huge Stoke's shift, with an excitation peak at 399 nm and an emission peak at 511 nm; when associated with A-72 and F-145." evidence="6 17 18">
    <original>T</original>
    <variation>I</variation>
    <location>
        <position position="203"/>
    </location>
</feature>
<feature type="mutagenesis site" description="Gives rise to yellow-emission variants. In EYFP; leads to yellow fluorescence, folds faster and more efficiently at 37 degrees Celsius and has superior solubility and brightness; when associated with G-65; L-68 and A-72. In Citrinine; leads to excitation and emission peaks of 516 and 529 nm, respectively; when associated with L-68; M-69 and A-72. In YFP 10C; shifts the major emission and exitation peak up to 20 nm; when associated with G-65; L-68 and A-72. In Topaz; shifts the major emission and exitation peak up to 20 nm; when associated with G-65; A-72 and R-79. In Venus; leads to yellow fluorescence, improved maturation and reduced environmental sensitivity; when associated with L-46; L-64; G-65; L-68; A-72; T-153; A-163 and G-175." evidence="2 3 5 32 33">
    <original>T</original>
    <variation>Y</variation>
    <location>
        <position position="203"/>
    </location>
</feature>
<feature type="mutagenesis site" description="Abolishes the tendency to dimerize and leads to monomeric fluorescent proteins." evidence="11">
    <original>A</original>
    <variation>K</variation>
    <location>
        <position position="206"/>
    </location>
</feature>
<feature type="mutagenesis site" description="In EBFP1.2; shifts the excitation and emission spectra to shorter wavelengths and increases quantum yields compared to BFP; when associated with R-30; N-39; H-66; A-72; T-105; F-145; V-171 and S-198. In EBFP2.0; shifts the excitation and emission spectra to shorter wavelengths and increases quantum yields compared to BFP; when associated with R-30; N-39; H-66; A-72; T-105; V-128; F-145; I-150; V-155; V-171; S-198 and V-206.">
    <original>A</original>
    <variation>V</variation>
    <location>
        <position position="206"/>
    </location>
</feature>
<feature type="mutagenesis site" description="Suppresses the 399 nm excitation peak, leaving only the longer wavelength peak at 475 nm." evidence="17">
    <original>E</original>
    <variation>G</variation>
    <location>
        <position position="222"/>
    </location>
</feature>
<feature type="mutagenesis site" description="In Azurite; shifts the excitation and emission spectra to shorter wavelengths and increases quantum yields compared to BFP; when associated with H-66; R-80; F-145 and I-150. In EBFP2.0; shifts the excitation and emission spectra to shorter wavelengths and increases quantum yields compared to BFP; when associated with R-30; N-39; H-66; A-72; T-105; V-128; F-145; I-150; V-155; V-171; S-198 and V-206." evidence="16">
    <original>V</original>
    <variation>R</variation>
    <location>
        <position position="224"/>
    </location>
</feature>
<feature type="sequence conflict" description="In Ref. 3; CAA65278." evidence="34" ref="3">
    <original>S</original>
    <variation>G</variation>
    <location>
        <position position="2"/>
    </location>
</feature>
<feature type="sequence conflict" description="In Ref. 3; CAA65278." evidence="34" ref="3">
    <original>H</original>
    <variation>Q</variation>
    <location>
        <position position="25"/>
    </location>
</feature>
<feature type="sequence conflict" description="In Ref. 3; CAA65278." evidence="34" ref="3">
    <original>Q</original>
    <variation>R</variation>
    <location>
        <position position="80"/>
    </location>
</feature>
<feature type="sequence conflict" description="In Ref. 2; AAA58246." evidence="34" ref="2">
    <original>Q</original>
    <variation>P</variation>
    <location>
        <position position="157"/>
    </location>
</feature>
<feature type="sequence conflict" description="In Ref. 2; AAA58246." evidence="34" ref="2">
    <original>E</original>
    <variation>K</variation>
    <location>
        <position position="172"/>
    </location>
</feature>
<feature type="turn" evidence="60">
    <location>
        <begin position="1"/>
        <end position="3"/>
    </location>
</feature>
<feature type="helix" evidence="57">
    <location>
        <begin position="5"/>
        <end position="8"/>
    </location>
</feature>
<feature type="strand" evidence="57">
    <location>
        <begin position="12"/>
        <end position="22"/>
    </location>
</feature>
<feature type="strand" evidence="57">
    <location>
        <begin position="25"/>
        <end position="36"/>
    </location>
</feature>
<feature type="helix" evidence="57">
    <location>
        <begin position="37"/>
        <end position="39"/>
    </location>
</feature>
<feature type="strand" evidence="57">
    <location>
        <begin position="41"/>
        <end position="48"/>
    </location>
</feature>
<feature type="strand" evidence="56">
    <location>
        <begin position="50"/>
        <end position="52"/>
    </location>
</feature>
<feature type="helix" evidence="57">
    <location>
        <begin position="57"/>
        <end position="60"/>
    </location>
</feature>
<feature type="turn" evidence="57">
    <location>
        <begin position="61"/>
        <end position="63"/>
    </location>
</feature>
<feature type="turn" evidence="51">
    <location>
        <begin position="65"/>
        <end position="67"/>
    </location>
</feature>
<feature type="helix" evidence="57">
    <location>
        <begin position="69"/>
        <end position="71"/>
    </location>
</feature>
<feature type="helix" evidence="59">
    <location>
        <begin position="72"/>
        <end position="74"/>
    </location>
</feature>
<feature type="helix" evidence="57">
    <location>
        <begin position="76"/>
        <end position="81"/>
    </location>
</feature>
<feature type="helix" evidence="57">
    <location>
        <begin position="83"/>
        <end position="86"/>
    </location>
</feature>
<feature type="turn" evidence="57">
    <location>
        <begin position="87"/>
        <end position="90"/>
    </location>
</feature>
<feature type="strand" evidence="57">
    <location>
        <begin position="92"/>
        <end position="100"/>
    </location>
</feature>
<feature type="strand" evidence="58">
    <location>
        <begin position="101"/>
        <end position="103"/>
    </location>
</feature>
<feature type="strand" evidence="57">
    <location>
        <begin position="105"/>
        <end position="115"/>
    </location>
</feature>
<feature type="strand" evidence="57">
    <location>
        <begin position="118"/>
        <end position="129"/>
    </location>
</feature>
<feature type="strand" evidence="50">
    <location>
        <begin position="132"/>
        <end position="134"/>
    </location>
</feature>
<feature type="turn" evidence="57">
    <location>
        <begin position="135"/>
        <end position="139"/>
    </location>
</feature>
<feature type="strand" evidence="55">
    <location>
        <begin position="141"/>
        <end position="147"/>
    </location>
</feature>
<feature type="strand" evidence="57">
    <location>
        <begin position="148"/>
        <end position="154"/>
    </location>
</feature>
<feature type="strand" evidence="57">
    <location>
        <begin position="158"/>
        <end position="171"/>
    </location>
</feature>
<feature type="turn" evidence="54">
    <location>
        <begin position="172"/>
        <end position="174"/>
    </location>
</feature>
<feature type="strand" evidence="57">
    <location>
        <begin position="176"/>
        <end position="191"/>
    </location>
</feature>
<feature type="strand" evidence="57">
    <location>
        <begin position="198"/>
        <end position="208"/>
    </location>
</feature>
<feature type="helix" evidence="53">
    <location>
        <begin position="209"/>
        <end position="213"/>
    </location>
</feature>
<feature type="strand" evidence="57">
    <location>
        <begin position="215"/>
        <end position="228"/>
    </location>
</feature>
<feature type="helix" evidence="52">
    <location>
        <begin position="233"/>
        <end position="236"/>
    </location>
</feature>
<proteinExistence type="evidence at protein level"/>
<organism>
    <name type="scientific">Aequorea victoria</name>
    <name type="common">Water jellyfish</name>
    <name type="synonym">Mesonema victoria</name>
    <dbReference type="NCBI Taxonomy" id="6100"/>
    <lineage>
        <taxon>Eukaryota</taxon>
        <taxon>Metazoa</taxon>
        <taxon>Cnidaria</taxon>
        <taxon>Hydrozoa</taxon>
        <taxon>Hydroidolina</taxon>
        <taxon>Leptothecata</taxon>
        <taxon>Aequoreidae</taxon>
        <taxon>Aequorea</taxon>
    </lineage>
</organism>
<reference key="1">
    <citation type="journal article" date="1992" name="Gene">
        <title>Primary structure of the Aequorea victoria green-fluorescent protein.</title>
        <authorList>
            <person name="Prasher D.C."/>
            <person name="Eckenrode V.K."/>
            <person name="Ward W.W."/>
            <person name="Prendergast F.G."/>
            <person name="Cormier M.J."/>
        </authorList>
    </citation>
    <scope>NUCLEOTIDE SEQUENCE [MRNA]</scope>
    <scope>PARTIAL PROTEIN SEQUENCE</scope>
    <scope>VARIANTS TYR-100; SER-108; MET-141 AND ILE-219</scope>
</reference>
<reference key="2">
    <citation type="journal article" date="1994" name="FEBS Lett.">
        <title>Aequorea green fluorescent protein. Expression of the gene and fluorescence characteristics of the recombinant protein.</title>
        <authorList>
            <person name="Inouye S."/>
            <person name="Tsuji F.I."/>
        </authorList>
    </citation>
    <scope>NUCLEOTIDE SEQUENCE [MRNA]</scope>
    <scope>BIOPHYSICOCHEMICAL PROPERTIES</scope>
</reference>
<reference key="3">
    <citation type="journal article" date="1997" name="Plant Mol. Biol.">
        <title>Enhanced expression in tobacco of the gene encoding green fluorescent protein by modification of its codon usage.</title>
        <authorList>
            <person name="Rouwendal G.J.A."/>
            <person name="Mendes O."/>
            <person name="Wolbert E.J.H."/>
            <person name="de Boer A.D."/>
        </authorList>
    </citation>
    <scope>NUCLEOTIDE SEQUENCE [MRNA]</scope>
    <scope>BIOPHYSICOCHEMICAL PROPERTIES</scope>
    <scope>BIOTECHNOLOGY</scope>
</reference>
<reference key="4">
    <citation type="journal article" date="1996" name="Gene">
        <title>FACS-optimized mutants of the green fluorescent protein (GFP).</title>
        <authorList>
            <person name="Cormack B.P."/>
            <person name="Valdivia R.H."/>
            <person name="Falkow S."/>
        </authorList>
    </citation>
    <scope>NUCLEOTIDE SEQUENCE [GENOMIC DNA]</scope>
    <scope>BIOTECHNOLOGY</scope>
    <scope>MUTAGENESIS OF PHE-64; SER-65; VAL-68 AND SER-72</scope>
</reference>
<reference key="5">
    <citation type="journal article" date="1993" name="Biochemistry">
        <title>Chemical structure of the hexapeptide chromophore of the Aequorea green-fluorescent protein.</title>
        <authorList>
            <person name="Cody C.W."/>
            <person name="Prasher D.C."/>
            <person name="Westler W.M."/>
            <person name="Prendergast F.G."/>
            <person name="Ward W.W."/>
        </authorList>
    </citation>
    <scope>CHROMOPHORE</scope>
    <scope>DEHYDROGENATION AT TYR-66</scope>
</reference>
<reference key="6">
    <citation type="journal article" date="1994" name="Proc. Natl. Acad. Sci. U.S.A.">
        <title>Wavelength mutations and posttranslational autoxidation of green fluorescent protein.</title>
        <authorList>
            <person name="Heim R."/>
            <person name="Prasher D.C."/>
            <person name="Tsien R.Y."/>
        </authorList>
    </citation>
    <scope>MUTAGENESIS OF TYR-66; ILE-167; SER-202 AND THR-203</scope>
</reference>
<reference key="7">
    <citation type="journal article" date="1995" name="Biotechnology (N.Y.)">
        <title>Red-shifted excitation mutants of the green fluorescent protein.</title>
        <authorList>
            <person name="Delagrave S."/>
            <person name="Hawtin R.E."/>
            <person name="Silva C.M."/>
            <person name="Yang M.M."/>
            <person name="Youvan D.C."/>
        </authorList>
    </citation>
    <scope>MUTAGENESIS OF PHE-64; SER-65 AND GLN-69</scope>
</reference>
<reference key="8">
    <citation type="journal article" date="1995" name="FEBS Lett.">
        <title>Green-fluorescent protein mutants with altered fluorescence excitation spectra.</title>
        <authorList>
            <person name="Ehrig T."/>
            <person name="O'Kane D.J."/>
            <person name="Prendergast F.G."/>
        </authorList>
    </citation>
    <scope>MUTAGENESIS OF THR-203 AND GLU-222</scope>
</reference>
<reference key="9">
    <citation type="journal article" date="1995" name="Trends Biochem. Sci.">
        <title>Understanding, improving and using green fluorescent proteins.</title>
        <authorList>
            <person name="Cubitt A.B."/>
            <person name="Heim R."/>
            <person name="Adams S.R."/>
            <person name="Boyd A.E."/>
            <person name="Gross L.A."/>
            <person name="Tsien R.Y."/>
        </authorList>
    </citation>
    <scope>MUTAGENESIS OF TYR-66</scope>
    <scope>BIOTECHNOLOGY</scope>
</reference>
<reference key="10">
    <citation type="journal article" date="1996" name="Curr. Biol.">
        <title>Mutations that suppress the thermosensitivity of green fluorescent protein.</title>
        <authorList>
            <person name="Siemering K.R."/>
            <person name="Golbik R."/>
            <person name="Sever R."/>
            <person name="Haseloff J."/>
        </authorList>
    </citation>
    <scope>MUTAGENESIS OF VAL-163 AND SER-175</scope>
</reference>
<reference key="11">
    <citation type="journal article" date="1996" name="Nat. Biotechnol.">
        <title>Improved green fluorescent protein by molecular evolution using DNA shuffling.</title>
        <authorList>
            <person name="Crameri A."/>
            <person name="Whitehorn E.A."/>
            <person name="Tate E."/>
            <person name="Stemmer W.P."/>
        </authorList>
    </citation>
    <scope>MUTAGENESIS OF PHE-99; MET-153 AND VAL-163</scope>
</reference>
<reference key="12">
    <citation type="journal article" date="1996" name="Nat. Biotechnol.">
        <title>Spatial dynamics of GFP-tagged proteins investigated by local fluorescence enhancement.</title>
        <authorList>
            <person name="Yokoe H."/>
            <person name="Meyer T."/>
        </authorList>
    </citation>
    <scope>MUTAGENESIS OF PHE-99; MET-153 AND VAL-163</scope>
</reference>
<reference key="13">
    <citation type="journal article" date="1997" name="Biochem. Biophys. Res. Commun.">
        <title>A novel mutation which enhances the fluorescence of green fluorescent protein at high temperatures.</title>
        <authorList>
            <person name="Kimata Y."/>
            <person name="Iwaki M."/>
            <person name="Lim C.R."/>
            <person name="Kohno K."/>
        </authorList>
    </citation>
    <scope>MUTAGENESIS OF SER-147</scope>
</reference>
<reference key="14">
    <citation type="journal article" date="1997" name="Biophys. J.">
        <title>Use of the green fluorescent protein and its mutants in quantitative fluorescence microscopy.</title>
        <authorList>
            <person name="Patterson G.H."/>
            <person name="Knobel S.M."/>
            <person name="Sharif W.D."/>
            <person name="Kain S.R."/>
            <person name="Piston D.W."/>
        </authorList>
    </citation>
    <scope>MUTAGENESIS OF PHE-64; SER-65; TYR-66; PHE-99; MET-153 AND VAL-163</scope>
</reference>
<reference key="15">
    <citation type="journal article" date="1998" name="Annu. Rev. Biochem.">
        <title>The green fluorescent protein.</title>
        <authorList>
            <person name="Tsien R.Y."/>
        </authorList>
    </citation>
    <scope>REVIEW ON MUTAGENESIS</scope>
    <scope>BIOTECHNOLOGY</scope>
</reference>
<reference key="16">
    <citation type="journal article" date="2001" name="BMC Dev. Biol.">
        <title>Cre reporter strains produced by targeted insertion of EYFP and ECFP into the ROSA26 locus.</title>
        <authorList>
            <person name="Srinivas S."/>
            <person name="Watanabe T."/>
            <person name="Lin C.S."/>
            <person name="William C.M."/>
            <person name="Tanabe Y."/>
            <person name="Jessell T.M."/>
            <person name="Costantini F."/>
        </authorList>
    </citation>
    <scope>MUTAGENESIS OF SER-65; VAL-68; SER-72; ASN-146; MET-153; VAL-163 AND THR-203</scope>
</reference>
<reference key="17">
    <citation type="journal article" date="2001" name="Phys. Med.">
        <title>Enhanced green fluorescent protein (EGFP) for space radiation research using mammalian cells in the International Space Station.</title>
        <authorList>
            <person name="Baumstark-Khan C."/>
            <person name="Hellweg C.E."/>
            <person name="Palm M."/>
            <person name="Horneck G."/>
        </authorList>
    </citation>
    <scope>MUTAGENESIS OF PHE-64 AND SER-65</scope>
</reference>
<reference key="18">
    <citation type="journal article" date="2003" name="BMC Biotechnol.">
        <title>Efficiently folding and circularly permuted variants of the Sapphire mutant of GFP.</title>
        <authorList>
            <person name="Zapata-Hommer O."/>
            <person name="Griesbeck O."/>
        </authorList>
    </citation>
    <scope>MUTAGENESIS OF SER-72; TYR-145 AND THR-203</scope>
</reference>
<reference key="19">
    <citation type="journal article" date="2004" name="J. Biomed. Opt.">
        <title>Fluorescence correlation spectroscopy investigation of a GFP mutant-enhanced cyan fluorescent protein and its tubulin fusion in living cells with two-photon excitation.</title>
        <authorList>
            <person name="Wang Z."/>
            <person name="Shah J.V."/>
            <person name="Chen Z."/>
            <person name="Sun C.H."/>
            <person name="Berns M.W."/>
        </authorList>
    </citation>
    <scope>MUTAGENESIS OF PHE-64; SER-65; TYR-66; ASN-146; MET-153 AND VAL-163</scope>
</reference>
<reference key="20">
    <citation type="journal article" date="2004" name="Nat. Biotechnol.">
        <title>An improved cyan fluorescent protein variant useful for FRET.</title>
        <authorList>
            <person name="Rizzo M.A."/>
            <person name="Springer G.H."/>
            <person name="Granada B."/>
            <person name="Piston D.W."/>
        </authorList>
    </citation>
    <scope>MUTAGENESIS OF PHE-64; SER-65; TYR-66; SER-72; TYR-145; ASN-146; HIS-148; MET-153 AND VAL-163</scope>
</reference>
<reference key="21">
    <citation type="journal article" date="2005" name="Biochemistry">
        <title>Development and characterization of green fluorescent protein mutants with altered lifetimes.</title>
        <authorList>
            <person name="Scruggs A.W."/>
            <person name="Flores C.L."/>
            <person name="Wachter R."/>
            <person name="Woodbury N.W."/>
        </authorList>
    </citation>
    <scope>MUTAGENESIS OF SER-30; PHE-46; GLN-69; ASP-103; TYR-145; VAL-176; VAL-193 AND ASN-198</scope>
</reference>
<reference key="22">
    <citation type="journal article" date="2006" name="ChemPhysChem">
        <title>Monitoring protein interactions in the living cell through the fluorescence decays of the cyan fluorescent protein.</title>
        <authorList>
            <person name="Grailhe R."/>
            <person name="Merola F."/>
            <person name="Ridard J."/>
            <person name="Couvignou S."/>
            <person name="Le Poupon C."/>
            <person name="Changeux J.P."/>
            <person name="Laguitton-Pasquier H."/>
        </authorList>
    </citation>
    <scope>MUTAGENESIS OF ALA-206</scope>
</reference>
<reference key="23">
    <citation type="journal article" date="2007" name="Biochim. Biophys. Acta">
        <title>Investigations of combinations of mutations in the jellyfish green fluorescent protein (GFP) that afford brighter fluorescence, and use of a version (VisGreen) in plant, bacterial, and animal cells.</title>
        <authorList>
            <person name="Teerawanichpan P."/>
            <person name="Hoffman T."/>
            <person name="Ashe P."/>
            <person name="Datla R."/>
            <person name="Selvaraj G."/>
        </authorList>
    </citation>
    <scope>MUTAGENESIS OF PHE-64; SER-65; SER-72; ASN-149; MET-153 AND ILE-167</scope>
</reference>
<reference key="24">
    <citation type="journal article" date="2007" name="J. Am. Chem. Soc.">
        <title>A molecular thermometer based on fluorescent protein blinking.</title>
        <authorList>
            <person name="Wong F.H."/>
            <person name="Banks D.S."/>
            <person name="Abu-Arish A."/>
            <person name="Fradin C."/>
        </authorList>
    </citation>
    <scope>BIOTECHNOLOGY</scope>
</reference>
<reference key="25">
    <citation type="journal article" date="2008" name="Biochemistry">
        <title>The first mutant of the Aequorea victoria green fluorescent protein that forms a red chromophore.</title>
        <authorList>
            <person name="Mishin A.S."/>
            <person name="Subach F.V."/>
            <person name="Yampolsky I.V."/>
            <person name="King W."/>
            <person name="Lukyanov K.A."/>
            <person name="Verkhusha V.V."/>
        </authorList>
    </citation>
    <scope>MUTAGENESIS OF PHE-46; PHE-64; VAL-68; LYS-162; VAL-163; ILE-167 AND ILE-171</scope>
</reference>
<reference key="26">
    <citation type="journal article" date="2012" name="J. Phys. Chem. B">
        <title>Interpolated mechanics-molecular mechanics study of internal rotation dynamics of the chromophore unit in blue fluorescent protein and its variants.</title>
        <authorList>
            <person name="Park J.W."/>
            <person name="Rhee Y.M."/>
        </authorList>
    </citation>
    <scope>MUTAGENESIS OF SER-30; TYR-39; TYR-66; SER-72; GLN-80; ASN-105; ILE-128; TYR-145; VAL-150; ASP-155; ILE-171; ASN-198; ALA-206 AND VAL-224</scope>
</reference>
<reference key="27">
    <citation type="journal article" date="1996" name="Nat. Biotechnol.">
        <title>The molecular structure of green fluorescent protein.</title>
        <authorList>
            <person name="Yang F."/>
            <person name="Moss L.G."/>
            <person name="Phillips G.N. Jr."/>
        </authorList>
    </citation>
    <scope>X-RAY CRYSTALLOGRAPHY (1.9 ANGSTROMS)</scope>
</reference>
<reference evidence="35" key="28">
    <citation type="journal article" date="1996" name="Science">
        <title>Crystal structure of the Aequorea victoria green fluorescent protein.</title>
        <authorList>
            <person name="Ormo M."/>
            <person name="Cubitt A.B."/>
            <person name="Kallio K."/>
            <person name="Gross L.A."/>
            <person name="Tsien R.Y."/>
            <person name="Remington S.J."/>
        </authorList>
    </citation>
    <scope>X-RAY CRYSTALLOGRAPHY (1.90 ANGSTROMS)</scope>
    <scope>MUTAGENESIS OF SER-65 AND THR-203</scope>
</reference>
<reference evidence="36 37 38 39 40 41 45 46 47" key="29">
    <citation type="journal article" date="1997" name="Nat. Struct. Biol.">
        <title>The structural basis for spectral variations in green fluorescent protein.</title>
        <authorList>
            <person name="Palm G.J."/>
            <person name="Zdanov A."/>
            <person name="Gaitanaris G.A."/>
            <person name="Stauber R."/>
            <person name="Pavlakis G.N."/>
            <person name="Wlodawer A."/>
        </authorList>
    </citation>
    <scope>X-RAY CRYSTALLOGRAPHY (2.00 ANGSTROMS)</scope>
    <scope>MUTAGENESIS OF PHE-64; TYR-66; SER-72; ASN-149; MET-153 AND ILE-167</scope>
    <scope>BIOPHYSICOCHEMICAL PROPERTIES</scope>
    <scope>BIOTECHNOLOGY</scope>
</reference>
<reference evidence="44 49" key="30">
    <citation type="journal article" date="1998" name="Structure">
        <title>Structural basis of spectral shifts in the yellow-emission variants of green fluorescent protein.</title>
        <authorList>
            <person name="Wachter R.M."/>
            <person name="Elsliger M.-A."/>
            <person name="Kallio K."/>
            <person name="Hanson G.T."/>
            <person name="Remington S.J."/>
        </authorList>
    </citation>
    <scope>X-RAY CRYSTALLOGRAPHY (2.5 ANGSTROMS) OF YELLOW EMISSION MUTANT TYR-203/GLY-65/LEU-68/ALA-72</scope>
    <scope>MUTAGENESIS OF SER-65; VAL-68; SER-72 AND THR-203</scope>
    <scope>BIOPHYSICOCHEMICAL PROPERTIES</scope>
    <scope>BIOTECHNOLOGY</scope>
    <scope>SUBUNIT</scope>
</reference>
<reference key="31">
    <citation type="journal article" date="1999" name="Biochemistry">
        <title>Structural and spectral response of green fluorescent protein variants to changes in pH.</title>
        <authorList>
            <person name="Elsliger M.-A."/>
            <person name="Wachter R.M."/>
            <person name="Hanson G.T."/>
            <person name="Kallio K."/>
            <person name="Remington S.J."/>
        </authorList>
    </citation>
    <scope>X-RAY CRYSTALLOGRAPHY (2.0 ANGSTROMS)</scope>
    <scope>BIOPHYSICOCHEMICAL PROPERTIES</scope>
</reference>
<reference evidence="42" key="32">
    <citation type="journal article" date="2001" name="J. Biol. Chem.">
        <title>Reducing the environmental sensitivity of yellow fluorescent protein. Mechanism and applications.</title>
        <authorList>
            <person name="Griesbeck O."/>
            <person name="Baird G.S."/>
            <person name="Campbell R.E."/>
            <person name="Zacharias D.A."/>
            <person name="Tsien R.Y."/>
        </authorList>
    </citation>
    <scope>X-RAY CRYSTALLOGRAPHY (2.20 ANGSTROMS) OF 2-238 OF MUTANT CITRININE</scope>
    <scope>MUTAGENESIS OF VAL-68; GLN-69; SER-72 AND THR-203</scope>
</reference>
<reference evidence="43" key="33">
    <citation type="journal article" date="2002" name="J. Biol. Chem.">
        <title>Crystal structure of venus, a yellow fluorescent protein with improved maturation and reduced environmental sensitivity.</title>
        <authorList>
            <person name="Rekas A."/>
            <person name="Alattia J.R."/>
            <person name="Nagai T."/>
            <person name="Miyawaki A."/>
            <person name="Ikura M."/>
        </authorList>
    </citation>
    <scope>X-RAY CRYSTALLOGRAPHY (2.20 ANGSTROMS) OF 2-238 OF VENUS</scope>
    <scope>MUTAGENESIS OF PHE-46; PHE-64; SER-65; VAL-68; SER-72; MET-153; VAL-163; SER-175 AND THR-203</scope>
</reference>
<reference evidence="48" key="34">
    <citation type="journal article" date="2007" name="Biochemistry">
        <title>X-ray structure of Cerulean GFP: a tryptophan-based chromophore useful for fluorescence lifetime imaging.</title>
        <authorList>
            <person name="Malo G.D."/>
            <person name="Pouwels L.J."/>
            <person name="Wang M."/>
            <person name="Weichsel A."/>
            <person name="Montfort W.R."/>
            <person name="Rizzo M.A."/>
            <person name="Piston D.W."/>
            <person name="Wachter R.M."/>
        </authorList>
    </citation>
    <scope>X-RAY CRYSTALLOGRAPHY (2.00 ANGSTROMS)</scope>
    <scope>MUTAGENESIS OF 65-SER-TYR-66</scope>
    <scope>BIOPHYSICOCHEMICAL PROPERTIES</scope>
    <scope>BIOTECHNOLOGY</scope>
</reference>
<gene>
    <name type="primary">GFP</name>
</gene>